<reference key="1">
    <citation type="journal article" date="1999" name="Science">
        <title>Beta-secretase cleavage of Alzheimer's amyloid precursor protein by the transmembrane aspartic protease BACE.</title>
        <authorList>
            <person name="Vassar R."/>
            <person name="Bennett B.D."/>
            <person name="Babu-Khan S."/>
            <person name="Kahn S."/>
            <person name="Mendiaz E.A."/>
            <person name="Denis P."/>
            <person name="Teplow D.B."/>
            <person name="Ross S."/>
            <person name="Amarante P."/>
            <person name="Loeloff R."/>
            <person name="Luo Y."/>
            <person name="Fisher S."/>
            <person name="Fuller J."/>
            <person name="Edenson S."/>
            <person name="Lile J."/>
            <person name="Jarosinski M.A."/>
            <person name="Biere A.L."/>
            <person name="Curran E."/>
            <person name="Burgess T."/>
            <person name="Louis J.-C."/>
            <person name="Collins F."/>
            <person name="Treanor J."/>
            <person name="Rogers G."/>
            <person name="Citron M."/>
        </authorList>
    </citation>
    <scope>NUCLEOTIDE SEQUENCE [MRNA] (ISOFORM A)</scope>
    <source>
        <tissue>Brain</tissue>
    </source>
</reference>
<reference key="2">
    <citation type="journal article" date="1999" name="Nature">
        <title>Purification and cloning of amyloid precursor protein beta-secretase from human brain.</title>
        <authorList>
            <person name="Sinha S."/>
            <person name="Anderson J.P."/>
            <person name="Barbour R."/>
            <person name="Basi G.S."/>
            <person name="Caccavello R."/>
            <person name="Davis D."/>
            <person name="Doan M."/>
            <person name="Dovey H.F."/>
            <person name="Frigon N."/>
            <person name="Hong J."/>
            <person name="Jacobson-Croak K."/>
            <person name="Jewett N."/>
            <person name="Keim P."/>
            <person name="Knops J."/>
            <person name="Lieberburg I."/>
            <person name="Power M."/>
            <person name="Tan H."/>
            <person name="Tatsuno G."/>
            <person name="Tung J."/>
            <person name="Schenk D."/>
            <person name="Seubert P."/>
            <person name="Suomensaari S.M."/>
            <person name="Wang S."/>
            <person name="Walker D."/>
            <person name="Zhao J."/>
            <person name="McConlogue L."/>
            <person name="Varghese J."/>
        </authorList>
    </citation>
    <scope>NUCLEOTIDE SEQUENCE [MRNA] (ISOFORM A)</scope>
    <scope>PROTEIN SEQUENCE OF 46-68</scope>
    <scope>CHARACTERIZATION</scope>
    <source>
        <tissue>Brain</tissue>
    </source>
</reference>
<reference key="3">
    <citation type="journal article" date="1999" name="Nature">
        <title>Membrane-anchored aspartyl protease with Alzheimer's disease beta-secretase activity.</title>
        <authorList>
            <person name="Yan R."/>
            <person name="Bienkowski M.J."/>
            <person name="Shuck M.E."/>
            <person name="Miao H."/>
            <person name="Tory M.C."/>
            <person name="Pauley A.M."/>
            <person name="Brashier J.R."/>
            <person name="Stratman N.C."/>
            <person name="Mathews W.R."/>
            <person name="Buhl A.E."/>
            <person name="Carter D.B."/>
            <person name="Tomasselli A.G."/>
            <person name="Parodi L.A."/>
            <person name="Heinrikson R.L."/>
            <person name="Gurney M.E."/>
        </authorList>
    </citation>
    <scope>NUCLEOTIDE SEQUENCE [MRNA] (ISOFORM A)</scope>
</reference>
<reference key="4">
    <citation type="journal article" date="1999" name="Mol. Cell. Neurosci.">
        <title>Identification of a novel aspartic proteinase (Asp 2) as beta-secretase.</title>
        <authorList>
            <person name="Hussain I."/>
            <person name="Powell D.J."/>
            <person name="Howlett D.R."/>
            <person name="Tew D.G."/>
            <person name="Meek T.D."/>
            <person name="Chapman C."/>
            <person name="Gloger I.S."/>
            <person name="Murphy K.E."/>
            <person name="Southan C.D."/>
            <person name="Ryan D.M."/>
            <person name="Smith T.S."/>
            <person name="Simmons D.L."/>
            <person name="Walsh F.S."/>
            <person name="Dingwall C."/>
            <person name="Christie G."/>
        </authorList>
    </citation>
    <scope>NUCLEOTIDE SEQUENCE [MRNA] (ISOFORM A)</scope>
    <scope>FUNCTION</scope>
    <scope>MUTAGENESIS OF ASP-93 AND ASP-284</scope>
</reference>
<reference key="5">
    <citation type="submission" date="2001-01" db="EMBL/GenBank/DDBJ databases">
        <title>New beta-site APP cleaving enzyme isoform (BACE-1B) obtained from human brain and pancreas.</title>
        <authorList>
            <person name="Michel B."/>
            <person name="De Pietri Tonelli D."/>
            <person name="Zacchetti D."/>
            <person name="Keller P."/>
        </authorList>
    </citation>
    <scope>NUCLEOTIDE SEQUENCE [MRNA] (ISOFORM B)</scope>
    <source>
        <tissue>Brain</tissue>
        <tissue>Pancreas</tissue>
    </source>
</reference>
<reference key="6">
    <citation type="submission" date="2001-01" db="EMBL/GenBank/DDBJ databases">
        <title>New beta-site APP cleaving enzyme isoform (BACE-1C) obtained from human pancreas.</title>
        <authorList>
            <person name="Zacchetti D."/>
            <person name="De Pietri Tonelli D."/>
            <person name="Schnurbus R."/>
        </authorList>
    </citation>
    <scope>NUCLEOTIDE SEQUENCE [MRNA] (ISOFORM C)</scope>
    <source>
        <tissue>Pancreas</tissue>
    </source>
</reference>
<reference key="7">
    <citation type="journal article" date="2001" name="Neurosci. Lett.">
        <title>Three novel alternatively spliced isoforms of the human beta-site amyloid precursor protein cleaving enzyme (BACE) and their effect on amyloid beta-peptide production.</title>
        <authorList>
            <person name="Tanahashi H."/>
            <person name="Tabira T."/>
        </authorList>
    </citation>
    <scope>NUCLEOTIDE SEQUENCE [MRNA] (ISOFORMS B; C AND D)</scope>
    <source>
        <tissue>Brain</tissue>
    </source>
</reference>
<reference key="8">
    <citation type="journal article" date="1999" name="DNA Res.">
        <title>Characterization of cDNA clones selected by the GeneMark analysis from size-fractionated cDNA libraries from human brain.</title>
        <authorList>
            <person name="Hirosawa M."/>
            <person name="Nagase T."/>
            <person name="Ishikawa K."/>
            <person name="Kikuno R."/>
            <person name="Nomura N."/>
            <person name="Ohara O."/>
        </authorList>
    </citation>
    <scope>NUCLEOTIDE SEQUENCE [LARGE SCALE MRNA] (ISOFORM A)</scope>
    <source>
        <tissue>Brain</tissue>
    </source>
</reference>
<reference key="9">
    <citation type="journal article" date="2002" name="DNA Res.">
        <title>Construction of expression-ready cDNA clones for KIAA genes: manual curation of 330 KIAA cDNA clones.</title>
        <authorList>
            <person name="Nakajima D."/>
            <person name="Okazaki N."/>
            <person name="Yamakawa H."/>
            <person name="Kikuno R."/>
            <person name="Ohara O."/>
            <person name="Nagase T."/>
        </authorList>
    </citation>
    <scope>SEQUENCE REVISION</scope>
</reference>
<reference key="10">
    <citation type="submission" date="2005-04" db="EMBL/GenBank/DDBJ databases">
        <authorList>
            <consortium name="NIEHS SNPs program"/>
        </authorList>
    </citation>
    <scope>NUCLEOTIDE SEQUENCE [GENOMIC DNA]</scope>
    <scope>VARIANT ALA-265</scope>
</reference>
<reference key="11">
    <citation type="submission" date="2007-02" db="EMBL/GenBank/DDBJ databases">
        <authorList>
            <consortium name="NHLBI resequencing and genotyping service (RS&amp;G)"/>
        </authorList>
    </citation>
    <scope>NUCLEOTIDE SEQUENCE [GENOMIC DNA]</scope>
</reference>
<reference key="12">
    <citation type="journal article" date="2006" name="Nature">
        <title>Human chromosome 11 DNA sequence and analysis including novel gene identification.</title>
        <authorList>
            <person name="Taylor T.D."/>
            <person name="Noguchi H."/>
            <person name="Totoki Y."/>
            <person name="Toyoda A."/>
            <person name="Kuroki Y."/>
            <person name="Dewar K."/>
            <person name="Lloyd C."/>
            <person name="Itoh T."/>
            <person name="Takeda T."/>
            <person name="Kim D.-W."/>
            <person name="She X."/>
            <person name="Barlow K.F."/>
            <person name="Bloom T."/>
            <person name="Bruford E."/>
            <person name="Chang J.L."/>
            <person name="Cuomo C.A."/>
            <person name="Eichler E."/>
            <person name="FitzGerald M.G."/>
            <person name="Jaffe D.B."/>
            <person name="LaButti K."/>
            <person name="Nicol R."/>
            <person name="Park H.-S."/>
            <person name="Seaman C."/>
            <person name="Sougnez C."/>
            <person name="Yang X."/>
            <person name="Zimmer A.R."/>
            <person name="Zody M.C."/>
            <person name="Birren B.W."/>
            <person name="Nusbaum C."/>
            <person name="Fujiyama A."/>
            <person name="Hattori M."/>
            <person name="Rogers J."/>
            <person name="Lander E.S."/>
            <person name="Sakaki Y."/>
        </authorList>
    </citation>
    <scope>NUCLEOTIDE SEQUENCE [LARGE SCALE GENOMIC DNA]</scope>
</reference>
<reference key="13">
    <citation type="submission" date="2005-07" db="EMBL/GenBank/DDBJ databases">
        <authorList>
            <person name="Mural R.J."/>
            <person name="Istrail S."/>
            <person name="Sutton G.G."/>
            <person name="Florea L."/>
            <person name="Halpern A.L."/>
            <person name="Mobarry C.M."/>
            <person name="Lippert R."/>
            <person name="Walenz B."/>
            <person name="Shatkay H."/>
            <person name="Dew I."/>
            <person name="Miller J.R."/>
            <person name="Flanigan M.J."/>
            <person name="Edwards N.J."/>
            <person name="Bolanos R."/>
            <person name="Fasulo D."/>
            <person name="Halldorsson B.V."/>
            <person name="Hannenhalli S."/>
            <person name="Turner R."/>
            <person name="Yooseph S."/>
            <person name="Lu F."/>
            <person name="Nusskern D.R."/>
            <person name="Shue B.C."/>
            <person name="Zheng X.H."/>
            <person name="Zhong F."/>
            <person name="Delcher A.L."/>
            <person name="Huson D.H."/>
            <person name="Kravitz S.A."/>
            <person name="Mouchard L."/>
            <person name="Reinert K."/>
            <person name="Remington K.A."/>
            <person name="Clark A.G."/>
            <person name="Waterman M.S."/>
            <person name="Eichler E.E."/>
            <person name="Adams M.D."/>
            <person name="Hunkapiller M.W."/>
            <person name="Myers E.W."/>
            <person name="Venter J.C."/>
        </authorList>
    </citation>
    <scope>NUCLEOTIDE SEQUENCE [LARGE SCALE GENOMIC DNA]</scope>
</reference>
<reference key="14">
    <citation type="journal article" date="2004" name="Genome Res.">
        <title>The status, quality, and expansion of the NIH full-length cDNA project: the Mammalian Gene Collection (MGC).</title>
        <authorList>
            <consortium name="The MGC Project Team"/>
        </authorList>
    </citation>
    <scope>NUCLEOTIDE SEQUENCE [LARGE SCALE MRNA] (ISOFORM A)</scope>
    <source>
        <tissue>Lung</tissue>
    </source>
</reference>
<reference key="15">
    <citation type="journal article" date="2000" name="Proc. Natl. Acad. Sci. U.S.A.">
        <title>Human aspartic protease memapsin 2 cleaves the beta-secretase site of beta-amyloid precursor protein.</title>
        <authorList>
            <person name="Lin X."/>
            <person name="Koelsch G."/>
            <person name="Wu S."/>
            <person name="Downs D."/>
            <person name="Dashti A."/>
            <person name="Tang J."/>
        </authorList>
    </citation>
    <scope>NUCLEOTIDE SEQUENCE [MRNA] OF 14-501 (ISOFORM A)</scope>
    <scope>FUNCTION</scope>
    <scope>TISSUE SPECIFICITY</scope>
    <scope>CATALYTIC ACTIVITY</scope>
    <scope>BIOPHYSICOCHEMICAL PROPERTIES</scope>
</reference>
<reference key="16">
    <citation type="journal article" date="2000" name="Mol. Cell. Neurosci.">
        <title>ASP1 (BACE2) cleaves the amyloid precursor protein at the beta-secretase site.</title>
        <authorList>
            <person name="Hussain I."/>
            <person name="Powell D.J."/>
            <person name="Howlett D.R."/>
            <person name="Chapman G.A."/>
            <person name="Gilmour L."/>
            <person name="Murdock P.R."/>
            <person name="Tew D.G."/>
            <person name="Meek T.D."/>
            <person name="Chapman C."/>
            <person name="Schneider K."/>
            <person name="Ratcliffe S.J."/>
            <person name="Tattersall D."/>
            <person name="Testa T.T."/>
            <person name="Southan C."/>
            <person name="Ryan D.M."/>
            <person name="Simmons D.L."/>
            <person name="Walsh F.S."/>
            <person name="Dingwall C."/>
            <person name="Christie G."/>
        </authorList>
    </citation>
    <scope>TISSUE SPECIFICITY</scope>
    <scope>GLYCOSYLATION</scope>
</reference>
<reference key="17">
    <citation type="journal article" date="2001" name="J. Biol. Chem.">
        <title>The transmembrane domain of the Alzheimer's beta-secretase (BACE1) determines its late Golgi localization and access to beta -amyloid precursor protein (APP) substrate.</title>
        <authorList>
            <person name="Yan R."/>
            <person name="Han P."/>
            <person name="Miao H."/>
            <person name="Greengard P."/>
            <person name="Xu H."/>
        </authorList>
    </citation>
    <scope>SUBCELLULAR LOCATION</scope>
    <scope>DOMAIN</scope>
</reference>
<reference key="18">
    <citation type="journal article" date="2002" name="J. Neurochem.">
        <title>The disulphide bonds in the catalytic domain of BACE are critical but not essential for amyloid precursor protein processing activity.</title>
        <authorList>
            <person name="Fischer F."/>
            <person name="Molinari M."/>
            <person name="Bodendorf U."/>
            <person name="Paganetti P."/>
        </authorList>
    </citation>
    <scope>DISULFIDE BONDS</scope>
</reference>
<reference key="19">
    <citation type="journal article" date="2003" name="Biochemistry">
        <title>Biochemical and structural characterization of the interaction of memapsin 2 (beta-secretase) cytosolic domain with the VHS domain of GGA proteins.</title>
        <authorList>
            <person name="He X."/>
            <person name="Zhu G."/>
            <person name="Koelsch G."/>
            <person name="Rodgers K.K."/>
            <person name="Zhang X.C."/>
            <person name="Tang J."/>
        </authorList>
    </citation>
    <scope>INTERACTION WITH GGA1; GGA2 AND GGA3</scope>
</reference>
<reference key="20">
    <citation type="journal article" date="2004" name="Nat. Med.">
        <title>Reticulon family members modulate BACE1 activity and amyloid-beta peptide generation.</title>
        <authorList>
            <person name="He W."/>
            <person name="Lu Y."/>
            <person name="Qahwash I."/>
            <person name="Hu X.-Y."/>
            <person name="Chang A."/>
            <person name="Yan R."/>
        </authorList>
    </citation>
    <scope>INTERACTION WITH RTN1; RTN2; RTN3 AND RTN4</scope>
    <scope>ACTIVITY REGULATION</scope>
</reference>
<reference key="21">
    <citation type="journal article" date="2005" name="J. Biol. Chem.">
        <title>BACE is degraded via the lysosomal pathway.</title>
        <authorList>
            <person name="Koh Y.H."/>
            <person name="von Arnim C.A."/>
            <person name="Hyman B.T."/>
            <person name="Tanzi R.E."/>
            <person name="Tesco G."/>
        </authorList>
    </citation>
    <scope>SUBCELLULAR LOCATION</scope>
    <scope>MUTAGENESIS OF 499-LEU-LEU-500</scope>
    <scope>LYSOSOMAL DEGRADATION</scope>
</reference>
<reference key="22">
    <citation type="journal article" date="2005" name="J. Biol. Chem.">
        <title>GGA proteins mediate the recycling pathway of memapsin 2 (BACE).</title>
        <authorList>
            <person name="He X."/>
            <person name="Li F."/>
            <person name="Chang W.P."/>
            <person name="Tang J."/>
        </authorList>
    </citation>
    <scope>SUBCELLULAR LOCATION</scope>
    <scope>MUTAGENESIS OF SER-498 AND 499-LEU-LEU-500</scope>
</reference>
<reference key="23">
    <citation type="journal article" date="2005" name="Mol. Cell. Neurosci.">
        <title>GGA proteins regulate retrograde transport of BACE1 from endosomes to the trans-Golgi network.</title>
        <authorList>
            <person name="Wahle T."/>
            <person name="Prager K."/>
            <person name="Raffler N."/>
            <person name="Haass C."/>
            <person name="Famulok M."/>
            <person name="Walter J."/>
        </authorList>
    </citation>
    <scope>SUBCELLULAR LOCATION</scope>
    <scope>MUTAGENESIS OF SER-498</scope>
    <scope>PHOSPHORYLATION AT SER-498</scope>
</reference>
<reference key="24">
    <citation type="journal article" date="2006" name="Eur. J. Neurosci.">
        <title>Reticulons RTN3 and RTN4-B/C interact with BACE1 and inhibit its ability to produce amyloid beta-protein.</title>
        <authorList>
            <person name="Murayama K.S."/>
            <person name="Kametani F."/>
            <person name="Saito S."/>
            <person name="Kume H."/>
            <person name="Akiyama H."/>
            <person name="Araki W."/>
        </authorList>
    </citation>
    <scope>INTERACTION WITH RTN3 AND RTN4</scope>
    <scope>ACTIVITY REGULATION</scope>
</reference>
<reference key="25">
    <citation type="journal article" date="2006" name="J. Mol. Biol.">
        <title>Mapping of interaction domains mediating binding between BACE1 and RTN/Nogo proteins.</title>
        <authorList>
            <person name="He W."/>
            <person name="Hu X."/>
            <person name="Shi Q."/>
            <person name="Zhou X."/>
            <person name="Lu Y."/>
            <person name="Fisher C."/>
            <person name="Yan R."/>
        </authorList>
    </citation>
    <scope>INTERACTION WITH RTN3</scope>
</reference>
<reference key="26">
    <citation type="journal article" date="2006" name="J. Neurosci.">
        <title>Interaction of the cytosolic domains of sorLA/LR11 with the amyloid precursor protein (APP) and beta-secretase beta-site APP-cleaving enzyme.</title>
        <authorList>
            <person name="Spoelgen R."/>
            <person name="von Arnim C.A."/>
            <person name="Thomas A.V."/>
            <person name="Peltan I.D."/>
            <person name="Koker M."/>
            <person name="Deng A."/>
            <person name="Irizarry M.C."/>
            <person name="Andersen O.M."/>
            <person name="Willnow T.E."/>
            <person name="Hyman B.T."/>
        </authorList>
    </citation>
    <scope>INTERACTION WITH SORL1</scope>
</reference>
<reference key="27">
    <citation type="journal article" date="2007" name="Biochem. J.">
        <title>A reversible form of lysine acetylation in the ER and Golgi lumen controls the molecular stabilization of BACE1.</title>
        <authorList>
            <person name="Costantini C."/>
            <person name="Ko M.H."/>
            <person name="Jonas M.C."/>
            <person name="Puglielli L."/>
        </authorList>
    </citation>
    <scope>IDENTIFICATION BY MASS SPECTROMETRY</scope>
    <scope>SUBCELLULAR LOCATION</scope>
    <scope>ACETYLATION AT LYS-126; LYS-275; LYS-279; LYS-285; LYS-299; LYS-300 AND LYS-307</scope>
    <scope>GLYCOSYLATION</scope>
</reference>
<reference key="28">
    <citation type="journal article" date="2008" name="EMBO Rep.">
        <title>PCSK9 is required for the disposal of non-acetylated intermediates of the nascent membrane protein BACE1.</title>
        <authorList>
            <person name="Jonas M.C."/>
            <person name="Costantini C."/>
            <person name="Puglielli L."/>
        </authorList>
    </citation>
    <scope>INTERACTION WITH PCSK9</scope>
</reference>
<reference key="29">
    <citation type="journal article" date="2009" name="J. Biol. Chem.">
        <title>Two endoplasmic reticulum (ER)/ER Golgi intermediate compartment-based lysine acetyltransferases post-translationally regulate BACE1 levels.</title>
        <authorList>
            <person name="Ko M.H."/>
            <person name="Puglielli L."/>
        </authorList>
    </citation>
    <scope>ACETYLATION AT LYS-126; LYS-275; LYS-279; LYS-285; LYS-299; LYS-300 AND LYS-307 BY NAT8 AND NAT8B</scope>
    <scope>DEACETYLATION</scope>
    <scope>INTERACTION WITH NAT8 AND NAT8B</scope>
</reference>
<reference key="30">
    <citation type="journal article" date="2010" name="FASEB J.">
        <title>Proteomic identification of sorting nexin 6 as a negative regulator of BACE1-mediated APP processing.</title>
        <authorList>
            <person name="Okada H."/>
            <person name="Zhang W."/>
            <person name="Peterhoff C."/>
            <person name="Hwang J.C."/>
            <person name="Nixon R.A."/>
            <person name="Ryu S.H."/>
            <person name="Kim T.W."/>
        </authorList>
    </citation>
    <scope>FUNCTION</scope>
    <scope>INTERACTION WITH SNX6</scope>
    <scope>SUBCELLULAR LOCATION</scope>
</reference>
<reference key="31">
    <citation type="journal article" date="2010" name="J. Biol. Chem.">
        <title>Ubiquitin regulates GGA3-mediated degradation of BACE1.</title>
        <authorList>
            <person name="Kang E.L."/>
            <person name="Cameron A.N."/>
            <person name="Piazza F."/>
            <person name="Walker K.R."/>
            <person name="Tesco G."/>
        </authorList>
    </citation>
    <scope>UBIQUITINATION AT LYS-501</scope>
    <scope>MUTAGENESIS OF 499-LEU-LEU-500 AND LYS-501</scope>
</reference>
<reference key="32">
    <citation type="journal article" date="2010" name="J. Cell Sci.">
        <title>AT-1 is the ER membrane acetyl-CoA transporter and is essential for cell viability.</title>
        <authorList>
            <person name="Jonas M.C."/>
            <person name="Pehar M."/>
            <person name="Puglielli L."/>
        </authorList>
    </citation>
    <scope>ACETYLATION</scope>
</reference>
<reference key="33">
    <citation type="journal article" date="2012" name="J. Biol. Chem.">
        <title>BACE1 protein endocytosis and trafficking are differentially regulated by ubiquitination at lysine 501 and the Di-leucine motif in the carboxyl terminus.</title>
        <authorList>
            <person name="Kang E.L."/>
            <person name="Biscaro B."/>
            <person name="Piazza F."/>
            <person name="Tesco G."/>
        </authorList>
    </citation>
    <scope>SUBCELLULAR LOCATION</scope>
    <scope>MUTAGENESIS OF 499-LEU-LEU-500 AND LYS-501</scope>
    <scope>DOMAIN</scope>
</reference>
<reference key="34">
    <citation type="journal article" date="2015" name="Neurochem. Res.">
        <title>Transcriptional regulation of BACE1 by NFAT3 leads to enhanced amyloidogenic processing.</title>
        <authorList>
            <person name="Mei Z."/>
            <person name="Yan P."/>
            <person name="Tan X."/>
            <person name="Zheng S."/>
            <person name="Situ B."/>
        </authorList>
    </citation>
    <scope>INDUCTION BY NFATC4</scope>
</reference>
<reference key="35">
    <citation type="journal article" date="2016" name="Hum. Mol. Genet.">
        <title>BIN1 regulates BACE1 intracellular trafficking and amyloid-beta production.</title>
        <authorList>
            <person name="Miyagawa T."/>
            <person name="Ebinuma I."/>
            <person name="Morohashi Y."/>
            <person name="Hori Y."/>
            <person name="Young Chang M."/>
            <person name="Hattori H."/>
            <person name="Maehara T."/>
            <person name="Yokoshima S."/>
            <person name="Fukuyama T."/>
            <person name="Tsuji S."/>
            <person name="Iwatsubo T."/>
            <person name="Prendergast G.C."/>
            <person name="Tomita T."/>
        </authorList>
    </citation>
    <scope>INTERACTION WITH BIN1</scope>
</reference>
<reference key="36">
    <citation type="journal article" date="2016" name="J. Biol. Chem.">
        <title>The Endosome-associated Deubiquitinating Enzyme USP8 Regulates BACE1 Enzyme Ubiquitination and Degradation.</title>
        <authorList>
            <person name="Yeates E.F."/>
            <person name="Tesco G."/>
        </authorList>
    </citation>
    <scope>DEUBIQUITINATION AT LYS-501</scope>
    <scope>MUTAGENESIS OF LYS-501</scope>
    <scope>SUBCELLULAR LOCATION</scope>
</reference>
<reference key="37">
    <citation type="journal article" date="2016" name="J. Cell Sci.">
        <title>SEPT8 modulates beta-amyloidogenic processing of APP by affecting the sorting and accumulation of BACE1.</title>
        <authorList>
            <person name="Kurkinen K.M."/>
            <person name="Marttinen M."/>
            <person name="Turner L."/>
            <person name="Natunen T."/>
            <person name="Maekinen P."/>
            <person name="Haapalinna F."/>
            <person name="Sarajaervi T."/>
            <person name="Gabbouj S."/>
            <person name="Kurki M."/>
            <person name="Paananen J."/>
            <person name="Koivisto A.M."/>
            <person name="Rauramaa T."/>
            <person name="Leinonen V."/>
            <person name="Tanila H."/>
            <person name="Soininen H."/>
            <person name="Lucas F.R."/>
            <person name="Haapasalo A."/>
            <person name="Hiltunen M."/>
        </authorList>
    </citation>
    <scope>SUBCELLULAR LOCATION</scope>
</reference>
<reference key="38">
    <citation type="journal article" date="2000" name="Science">
        <title>Structure of the protease domain of memapsin 2 (beta-secretase) complexed with inhibitor.</title>
        <authorList>
            <person name="Hong L."/>
            <person name="Koelsch G."/>
            <person name="Lin X."/>
            <person name="Wu S."/>
            <person name="Terzyan S."/>
            <person name="Ghosh A.K."/>
            <person name="Zhang X.C."/>
            <person name="Tang J."/>
        </authorList>
    </citation>
    <scope>X-RAY CRYSTALLOGRAPHY (1.9 ANGSTROMS) OF 56-446 IN COMPLEX WITH SUBSTRATE ANALOG</scope>
</reference>
<reference key="39">
    <citation type="journal article" date="2002" name="Biochemistry">
        <title>Crystal structure of memapsin 2 (beta-secretase) in complex with an inhibitor OM00-3.</title>
        <authorList>
            <person name="Hong L."/>
            <person name="Turner R.T. III"/>
            <person name="Koelsch G."/>
            <person name="Shin D."/>
            <person name="Ghosh A.K."/>
            <person name="Tang J."/>
        </authorList>
    </citation>
    <scope>X-RAY CRYSTALLOGRAPHY (2.1 ANGSTROMS) OF 56-446 IN COMPLEX WITH SUBSTRATE ANALOG</scope>
</reference>
<reference key="40">
    <citation type="journal article" date="2004" name="Biochemistry">
        <title>Flap position of free memapsin 2 (beta-secretase), a model for flap opening in aspartic protease catalysis.</title>
        <authorList>
            <person name="Hong L."/>
            <person name="Tang J."/>
        </authorList>
    </citation>
    <scope>X-RAY CRYSTALLOGRAPHY (2.0 ANGSTROMS) OF 58-446</scope>
</reference>
<reference key="41">
    <citation type="journal article" date="2004" name="J. Mol. Biol.">
        <title>Apo and inhibitor complex structures of BACE (beta-secretase).</title>
        <authorList>
            <person name="Patel S."/>
            <person name="Vuillard L."/>
            <person name="Cleasby A."/>
            <person name="Murray C.W."/>
            <person name="Yon J."/>
        </authorList>
    </citation>
    <scope>X-RAY CRYSTALLOGRAPHY (1.75 ANGSTROMS) OF 43-453 IN COMPLEX WITH SUBSTRATE ANALOG</scope>
</reference>
<reference key="42">
    <citation type="journal article" date="2005" name="Biochemistry">
        <title>Structural locations and functional roles of new subsites S5, S6, and S7 in memapsin 2 (beta-secretase).</title>
        <authorList>
            <person name="Turner R.T. III"/>
            <person name="Hong L."/>
            <person name="Koelsch G."/>
            <person name="Ghosh A.K."/>
            <person name="Tang J."/>
        </authorList>
    </citation>
    <scope>X-RAY CRYSTALLOGRAPHY (2.0 ANGSTROMS) OF 58-446</scope>
</reference>
<evidence type="ECO:0000250" key="1">
    <source>
        <dbReference type="UniProtKB" id="P56818"/>
    </source>
</evidence>
<evidence type="ECO:0000255" key="2"/>
<evidence type="ECO:0000255" key="3">
    <source>
        <dbReference type="PROSITE-ProRule" id="PRU01103"/>
    </source>
</evidence>
<evidence type="ECO:0000255" key="4">
    <source>
        <dbReference type="PROSITE-ProRule" id="PRU10094"/>
    </source>
</evidence>
<evidence type="ECO:0000256" key="5">
    <source>
        <dbReference type="SAM" id="MobiDB-lite"/>
    </source>
</evidence>
<evidence type="ECO:0000269" key="6">
    <source>
    </source>
</evidence>
<evidence type="ECO:0000269" key="7">
    <source>
    </source>
</evidence>
<evidence type="ECO:0000269" key="8">
    <source>
    </source>
</evidence>
<evidence type="ECO:0000269" key="9">
    <source>
    </source>
</evidence>
<evidence type="ECO:0000269" key="10">
    <source>
    </source>
</evidence>
<evidence type="ECO:0000269" key="11">
    <source>
    </source>
</evidence>
<evidence type="ECO:0000269" key="12">
    <source>
    </source>
</evidence>
<evidence type="ECO:0000269" key="13">
    <source>
    </source>
</evidence>
<evidence type="ECO:0000269" key="14">
    <source>
    </source>
</evidence>
<evidence type="ECO:0000269" key="15">
    <source>
    </source>
</evidence>
<evidence type="ECO:0000269" key="16">
    <source>
    </source>
</evidence>
<evidence type="ECO:0000269" key="17">
    <source>
    </source>
</evidence>
<evidence type="ECO:0000269" key="18">
    <source>
    </source>
</evidence>
<evidence type="ECO:0000269" key="19">
    <source>
    </source>
</evidence>
<evidence type="ECO:0000269" key="20">
    <source>
    </source>
</evidence>
<evidence type="ECO:0000269" key="21">
    <source>
    </source>
</evidence>
<evidence type="ECO:0000269" key="22">
    <source>
    </source>
</evidence>
<evidence type="ECO:0000269" key="23">
    <source>
    </source>
</evidence>
<evidence type="ECO:0000269" key="24">
    <source>
    </source>
</evidence>
<evidence type="ECO:0000269" key="25">
    <source>
    </source>
</evidence>
<evidence type="ECO:0000269" key="26">
    <source>
    </source>
</evidence>
<evidence type="ECO:0000269" key="27">
    <source>
    </source>
</evidence>
<evidence type="ECO:0000269" key="28">
    <source>
    </source>
</evidence>
<evidence type="ECO:0000269" key="29">
    <source>
    </source>
</evidence>
<evidence type="ECO:0000269" key="30">
    <source>
    </source>
</evidence>
<evidence type="ECO:0000269" key="31">
    <source ref="10"/>
</evidence>
<evidence type="ECO:0000303" key="32">
    <source>
    </source>
</evidence>
<evidence type="ECO:0000303" key="33">
    <source>
    </source>
</evidence>
<evidence type="ECO:0000303" key="34">
    <source>
    </source>
</evidence>
<evidence type="ECO:0000303" key="35">
    <source>
    </source>
</evidence>
<evidence type="ECO:0000303" key="36">
    <source ref="5"/>
</evidence>
<evidence type="ECO:0000303" key="37">
    <source ref="6"/>
</evidence>
<evidence type="ECO:0000305" key="38"/>
<evidence type="ECO:0000305" key="39">
    <source>
    </source>
</evidence>
<evidence type="ECO:0000312" key="40">
    <source>
        <dbReference type="HGNC" id="HGNC:933"/>
    </source>
</evidence>
<evidence type="ECO:0007829" key="41">
    <source>
        <dbReference type="PDB" id="1SGZ"/>
    </source>
</evidence>
<evidence type="ECO:0007829" key="42">
    <source>
        <dbReference type="PDB" id="2VA7"/>
    </source>
</evidence>
<evidence type="ECO:0007829" key="43">
    <source>
        <dbReference type="PDB" id="3S7L"/>
    </source>
</evidence>
<evidence type="ECO:0007829" key="44">
    <source>
        <dbReference type="PDB" id="4FSL"/>
    </source>
</evidence>
<evidence type="ECO:0007829" key="45">
    <source>
        <dbReference type="PDB" id="6E3Z"/>
    </source>
</evidence>
<evidence type="ECO:0007829" key="46">
    <source>
        <dbReference type="PDB" id="7MYI"/>
    </source>
</evidence>
<organism>
    <name type="scientific">Homo sapiens</name>
    <name type="common">Human</name>
    <dbReference type="NCBI Taxonomy" id="9606"/>
    <lineage>
        <taxon>Eukaryota</taxon>
        <taxon>Metazoa</taxon>
        <taxon>Chordata</taxon>
        <taxon>Craniata</taxon>
        <taxon>Vertebrata</taxon>
        <taxon>Euteleostomi</taxon>
        <taxon>Mammalia</taxon>
        <taxon>Eutheria</taxon>
        <taxon>Euarchontoglires</taxon>
        <taxon>Primates</taxon>
        <taxon>Haplorrhini</taxon>
        <taxon>Catarrhini</taxon>
        <taxon>Hominidae</taxon>
        <taxon>Homo</taxon>
    </lineage>
</organism>
<accession>P56817</accession>
<accession>A0M8W7</accession>
<accession>B0YIU9</accession>
<accession>E9PE65</accession>
<accession>H7BXJ9</accession>
<accession>Q9BYB9</accession>
<accession>Q9BYC0</accession>
<accession>Q9BYC1</accession>
<accession>Q9UJT5</accession>
<accession>Q9ULS1</accession>
<gene>
    <name evidence="40" type="primary">BACE1</name>
    <name type="synonym">BACE</name>
    <name type="synonym">KIAA1149</name>
</gene>
<proteinExistence type="evidence at protein level"/>
<keyword id="KW-0002">3D-structure</keyword>
<keyword id="KW-0007">Acetylation</keyword>
<keyword id="KW-0025">Alternative splicing</keyword>
<keyword id="KW-0064">Aspartyl protease</keyword>
<keyword id="KW-1003">Cell membrane</keyword>
<keyword id="KW-0966">Cell projection</keyword>
<keyword id="KW-0968">Cytoplasmic vesicle</keyword>
<keyword id="KW-0903">Direct protein sequencing</keyword>
<keyword id="KW-1015">Disulfide bond</keyword>
<keyword id="KW-0256">Endoplasmic reticulum</keyword>
<keyword id="KW-0967">Endosome</keyword>
<keyword id="KW-0325">Glycoprotein</keyword>
<keyword id="KW-0333">Golgi apparatus</keyword>
<keyword id="KW-0378">Hydrolase</keyword>
<keyword id="KW-1017">Isopeptide bond</keyword>
<keyword id="KW-0449">Lipoprotein</keyword>
<keyword id="KW-0458">Lysosome</keyword>
<keyword id="KW-0472">Membrane</keyword>
<keyword id="KW-0564">Palmitate</keyword>
<keyword id="KW-0597">Phosphoprotein</keyword>
<keyword id="KW-0645">Protease</keyword>
<keyword id="KW-1267">Proteomics identification</keyword>
<keyword id="KW-1185">Reference proteome</keyword>
<keyword id="KW-0732">Signal</keyword>
<keyword id="KW-0812">Transmembrane</keyword>
<keyword id="KW-1133">Transmembrane helix</keyword>
<keyword id="KW-0832">Ubl conjugation</keyword>
<keyword id="KW-0865">Zymogen</keyword>
<feature type="signal peptide" evidence="2">
    <location>
        <begin position="1"/>
        <end position="21"/>
    </location>
</feature>
<feature type="propeptide" id="PRO_0000025939" evidence="6">
    <location>
        <begin position="22"/>
        <end position="45"/>
    </location>
</feature>
<feature type="chain" id="PRO_0000025940" description="Beta-secretase 1">
    <location>
        <begin position="46"/>
        <end position="501"/>
    </location>
</feature>
<feature type="topological domain" description="Extracellular" evidence="2">
    <location>
        <begin position="22"/>
        <end position="457"/>
    </location>
</feature>
<feature type="transmembrane region" description="Helical" evidence="2">
    <location>
        <begin position="458"/>
        <end position="478"/>
    </location>
</feature>
<feature type="topological domain" description="Cytoplasmic" evidence="2">
    <location>
        <begin position="479"/>
        <end position="501"/>
    </location>
</feature>
<feature type="domain" description="Peptidase A1" evidence="3">
    <location>
        <begin position="75"/>
        <end position="416"/>
    </location>
</feature>
<feature type="region of interest" description="Disordered" evidence="5">
    <location>
        <begin position="39"/>
        <end position="58"/>
    </location>
</feature>
<feature type="region of interest" description="Interaction with RTN3">
    <location>
        <begin position="479"/>
        <end position="501"/>
    </location>
</feature>
<feature type="short sequence motif" description="DXXLL" evidence="15">
    <location>
        <begin position="496"/>
        <end position="500"/>
    </location>
</feature>
<feature type="active site" evidence="4">
    <location>
        <position position="93"/>
    </location>
</feature>
<feature type="active site" evidence="4">
    <location>
        <position position="289"/>
    </location>
</feature>
<feature type="modified residue" description="N6-acetyllysine" evidence="20 22">
    <location>
        <position position="126"/>
    </location>
</feature>
<feature type="modified residue" description="N6-acetyllysine" evidence="20 22">
    <location>
        <position position="275"/>
    </location>
</feature>
<feature type="modified residue" description="N6-acetyllysine" evidence="20 22">
    <location>
        <position position="279"/>
    </location>
</feature>
<feature type="modified residue" description="N6-acetyllysine" evidence="20 22">
    <location>
        <position position="285"/>
    </location>
</feature>
<feature type="modified residue" description="N6-acetyllysine" evidence="20 22">
    <location>
        <position position="299"/>
    </location>
</feature>
<feature type="modified residue" description="N6-acetyllysine" evidence="20 22">
    <location>
        <position position="300"/>
    </location>
</feature>
<feature type="modified residue" description="N6-acetyllysine" evidence="20 22">
    <location>
        <position position="307"/>
    </location>
</feature>
<feature type="modified residue" description="Phosphoserine" evidence="15">
    <location>
        <position position="498"/>
    </location>
</feature>
<feature type="lipid moiety-binding region" description="S-palmitoyl cysteine" evidence="1">
    <location>
        <position position="474"/>
    </location>
</feature>
<feature type="lipid moiety-binding region" description="S-palmitoyl cysteine" evidence="1">
    <location>
        <position position="478"/>
    </location>
</feature>
<feature type="lipid moiety-binding region" description="S-palmitoyl cysteine" evidence="1">
    <location>
        <position position="482"/>
    </location>
</feature>
<feature type="lipid moiety-binding region" description="S-palmitoyl cysteine" evidence="1">
    <location>
        <position position="485"/>
    </location>
</feature>
<feature type="glycosylation site" description="N-linked (GlcNAc...) asparagine" evidence="2">
    <location>
        <position position="153"/>
    </location>
</feature>
<feature type="glycosylation site" description="N-linked (GlcNAc...) asparagine" evidence="2">
    <location>
        <position position="172"/>
    </location>
</feature>
<feature type="glycosylation site" description="N-linked (GlcNAc...) asparagine" evidence="2">
    <location>
        <position position="223"/>
    </location>
</feature>
<feature type="glycosylation site" description="N-linked (GlcNAc...) asparagine" evidence="2">
    <location>
        <position position="354"/>
    </location>
</feature>
<feature type="disulfide bond" evidence="11">
    <location>
        <begin position="216"/>
        <end position="420"/>
    </location>
</feature>
<feature type="disulfide bond" evidence="11">
    <location>
        <begin position="278"/>
        <end position="443"/>
    </location>
</feature>
<feature type="disulfide bond" evidence="11">
    <location>
        <begin position="330"/>
        <end position="380"/>
    </location>
</feature>
<feature type="cross-link" description="Glycyl lysine isopeptide (Lys-Gly) (interchain with G-Cter in ubiquitin)" evidence="24 30">
    <location>
        <position position="501"/>
    </location>
</feature>
<feature type="splice variant" id="VSP_047092" description="In isoform 5 and isoform 6." evidence="38">
    <original>MAQALPWLLLWMGAGVLPAH</original>
    <variation>MVPFIYLQAHFTLCSGWSST</variation>
    <location>
        <begin position="1"/>
        <end position="20"/>
    </location>
</feature>
<feature type="splice variant" id="VSP_047093" description="In isoform 5 and isoform 6." evidence="38">
    <location>
        <begin position="21"/>
        <end position="120"/>
    </location>
</feature>
<feature type="splice variant" id="VSP_005222" description="In isoform C and isoform D." evidence="34 37">
    <location>
        <begin position="146"/>
        <end position="189"/>
    </location>
</feature>
<feature type="splice variant" id="VSP_005223" description="In isoform B, isoform D and isoform 6." evidence="34 36">
    <location>
        <begin position="190"/>
        <end position="214"/>
    </location>
</feature>
<feature type="sequence variant" id="VAR_060692" description="In dbSNP:rs28989503." evidence="31">
    <original>V</original>
    <variation>A</variation>
    <location>
        <position position="265"/>
    </location>
</feature>
<feature type="sequence variant" id="VAR_051509" description="In dbSNP:rs539765.">
    <original>R</original>
    <variation>C</variation>
    <location>
        <position position="481"/>
    </location>
</feature>
<feature type="mutagenesis site" description="Decreases beta-cleaved soluble APP production." evidence="7">
    <original>D</original>
    <variation>N</variation>
    <location>
        <position position="93"/>
    </location>
</feature>
<feature type="mutagenesis site" description="Almost abolishes beta-cleaved soluble APP production." evidence="7">
    <original>D</original>
    <variation>N</variation>
    <location>
        <position position="284"/>
    </location>
</feature>
<feature type="mutagenesis site" description="No effect on endocytosis from the cell surface. Increases recycling from endosomes to the cell surface." evidence="14 15">
    <original>S</original>
    <variation>A</variation>
    <location>
        <position position="498"/>
    </location>
</feature>
<feature type="mutagenesis site" description="No effect on endocytosis form the cell surface. Decreases recycling from endosomes to the cell surface." evidence="15">
    <original>S</original>
    <variation>D</variation>
    <location>
        <position position="498"/>
    </location>
</feature>
<feature type="mutagenesis site" description="Impairs endocytosis and produces a delayed retrograde transport to the trans-Golgi network and delivery to the lysosmes, decreasinf its degradation. Disrupts location to late endosomes and lysosomes. Locates mainly at the cell surface. No effect on degradation regulated by GGA3. Effects on protein stability and defective internalization increases; when associated with R-501." evidence="14 16 24 26">
    <original>LL</original>
    <variation>AA</variation>
    <location>
        <begin position="499"/>
        <end position="500"/>
    </location>
</feature>
<feature type="mutagenesis site" description="Inhibits ubiquitination. No effect on endocytosis rate. Induced protein stability and acculmulation in early and late endosomes, lysosomes and cell membrane. Effects on protein stability and defective internalization increases; when associated with A-499-500-A." evidence="24 26 30">
    <original>K</original>
    <variation>R</variation>
    <location>
        <position position="501"/>
    </location>
</feature>
<feature type="turn" evidence="46">
    <location>
        <begin position="61"/>
        <end position="65"/>
    </location>
</feature>
<feature type="strand" evidence="46">
    <location>
        <begin position="67"/>
        <end position="70"/>
    </location>
</feature>
<feature type="turn" evidence="46">
    <location>
        <begin position="71"/>
        <end position="73"/>
    </location>
</feature>
<feature type="strand" evidence="46">
    <location>
        <begin position="74"/>
        <end position="81"/>
    </location>
</feature>
<feature type="turn" evidence="46">
    <location>
        <begin position="82"/>
        <end position="85"/>
    </location>
</feature>
<feature type="strand" evidence="46">
    <location>
        <begin position="86"/>
        <end position="93"/>
    </location>
</feature>
<feature type="strand" evidence="46">
    <location>
        <begin position="99"/>
        <end position="102"/>
    </location>
</feature>
<feature type="strand" evidence="43">
    <location>
        <begin position="109"/>
        <end position="111"/>
    </location>
</feature>
<feature type="helix" evidence="46">
    <location>
        <begin position="115"/>
        <end position="117"/>
    </location>
</feature>
<feature type="strand" evidence="46">
    <location>
        <begin position="122"/>
        <end position="132"/>
    </location>
</feature>
<feature type="strand" evidence="46">
    <location>
        <begin position="135"/>
        <end position="147"/>
    </location>
</feature>
<feature type="turn" evidence="45">
    <location>
        <begin position="149"/>
        <end position="152"/>
    </location>
</feature>
<feature type="strand" evidence="46">
    <location>
        <begin position="155"/>
        <end position="168"/>
    </location>
</feature>
<feature type="turn" evidence="41">
    <location>
        <begin position="172"/>
        <end position="174"/>
    </location>
</feature>
<feature type="strand" evidence="46">
    <location>
        <begin position="178"/>
        <end position="181"/>
    </location>
</feature>
<feature type="helix" evidence="46">
    <location>
        <begin position="185"/>
        <end position="187"/>
    </location>
</feature>
<feature type="strand" evidence="44">
    <location>
        <begin position="188"/>
        <end position="190"/>
    </location>
</feature>
<feature type="helix" evidence="46">
    <location>
        <begin position="197"/>
        <end position="204"/>
    </location>
</feature>
<feature type="strand" evidence="46">
    <location>
        <begin position="211"/>
        <end position="215"/>
    </location>
</feature>
<feature type="helix" evidence="46">
    <location>
        <begin position="224"/>
        <end position="229"/>
    </location>
</feature>
<feature type="strand" evidence="46">
    <location>
        <begin position="233"/>
        <end position="239"/>
    </location>
</feature>
<feature type="helix" evidence="46">
    <location>
        <begin position="242"/>
        <end position="244"/>
    </location>
</feature>
<feature type="strand" evidence="46">
    <location>
        <begin position="245"/>
        <end position="253"/>
    </location>
</feature>
<feature type="turn" evidence="46">
    <location>
        <begin position="257"/>
        <end position="260"/>
    </location>
</feature>
<feature type="strand" evidence="46">
    <location>
        <begin position="264"/>
        <end position="269"/>
    </location>
</feature>
<feature type="helix" evidence="46">
    <location>
        <begin position="278"/>
        <end position="282"/>
    </location>
</feature>
<feature type="strand" evidence="46">
    <location>
        <begin position="286"/>
        <end position="288"/>
    </location>
</feature>
<feature type="strand" evidence="46">
    <location>
        <begin position="294"/>
        <end position="298"/>
    </location>
</feature>
<feature type="helix" evidence="46">
    <location>
        <begin position="299"/>
        <end position="312"/>
    </location>
</feature>
<feature type="turn" evidence="46">
    <location>
        <begin position="313"/>
        <end position="315"/>
    </location>
</feature>
<feature type="helix" evidence="46">
    <location>
        <begin position="320"/>
        <end position="323"/>
    </location>
</feature>
<feature type="strand" evidence="46">
    <location>
        <begin position="329"/>
        <end position="332"/>
    </location>
</feature>
<feature type="turn" evidence="42">
    <location>
        <begin position="333"/>
        <end position="335"/>
    </location>
</feature>
<feature type="helix" evidence="46">
    <location>
        <begin position="338"/>
        <end position="340"/>
    </location>
</feature>
<feature type="strand" evidence="46">
    <location>
        <begin position="344"/>
        <end position="349"/>
    </location>
</feature>
<feature type="strand" evidence="46">
    <location>
        <begin position="355"/>
        <end position="361"/>
    </location>
</feature>
<feature type="helix" evidence="46">
    <location>
        <begin position="363"/>
        <end position="366"/>
    </location>
</feature>
<feature type="strand" evidence="46">
    <location>
        <begin position="367"/>
        <end position="370"/>
    </location>
</feature>
<feature type="strand" evidence="46">
    <location>
        <begin position="373"/>
        <end position="375"/>
    </location>
</feature>
<feature type="strand" evidence="46">
    <location>
        <begin position="379"/>
        <end position="383"/>
    </location>
</feature>
<feature type="strand" evidence="46">
    <location>
        <begin position="385"/>
        <end position="390"/>
    </location>
</feature>
<feature type="strand" evidence="46">
    <location>
        <begin position="392"/>
        <end position="394"/>
    </location>
</feature>
<feature type="helix" evidence="46">
    <location>
        <begin position="396"/>
        <end position="399"/>
    </location>
</feature>
<feature type="strand" evidence="46">
    <location>
        <begin position="402"/>
        <end position="407"/>
    </location>
</feature>
<feature type="turn" evidence="46">
    <location>
        <begin position="408"/>
        <end position="411"/>
    </location>
</feature>
<feature type="strand" evidence="46">
    <location>
        <begin position="412"/>
        <end position="418"/>
    </location>
</feature>
<feature type="strand" evidence="46">
    <location>
        <begin position="430"/>
        <end position="436"/>
    </location>
</feature>
<feature type="helix" evidence="46">
    <location>
        <begin position="440"/>
        <end position="443"/>
    </location>
</feature>
<sequence>MAQALPWLLLWMGAGVLPAHGTQHGIRLPLRSGLGGAPLGLRLPRETDEEPEEPGRRGSFVEMVDNLRGKSGQGYYVEMTVGSPPQTLNILVDTGSSNFAVGAAPHPFLHRYYQRQLSSTYRDLRKGVYVPYTQGKWEGELGTDLVSIPHGPNVTVRANIAAITESDKFFINGSNWEGILGLAYAEIARPDDSLEPFFDSLVKQTHVPNLFSLQLCGAGFPLNQSEVLASVGGSMIIGGIDHSLYTGSLWYTPIRREWYYEVIIVRVEINGQDLKMDCKEYNYDKSIVDSGTTNLRLPKKVFEAAVKSIKAASSTEKFPDGFWLGEQLVCWQAGTTPWNIFPVISLYLMGEVTNQSFRITILPQQYLRPVEDVATSQDDCYKFAISQSSTGTVMGAVIMEGFYVVFDRARKRIGFAVSACHVHDEFRTAAVEGPFVTLDMEDCGYNIPQTDESTLMTIAYVMAAICALFMLPLCLMVCQWRCLRCLRQQHDDFADDISLLK</sequence>
<name>BACE1_HUMAN</name>
<protein>
    <recommendedName>
        <fullName evidence="38">Beta-secretase 1</fullName>
        <ecNumber evidence="8">3.4.23.46</ecNumber>
    </recommendedName>
    <alternativeName>
        <fullName evidence="32">Aspartyl protease 2</fullName>
        <shortName evidence="32">ASP2</shortName>
        <shortName evidence="32">Asp 2</shortName>
    </alternativeName>
    <alternativeName>
        <fullName>Beta-site amyloid precursor protein cleaving enzyme 1</fullName>
        <shortName>Beta-site APP cleaving enzyme 1</shortName>
    </alternativeName>
    <alternativeName>
        <fullName evidence="33 35">Memapsin-2</fullName>
    </alternativeName>
    <alternativeName>
        <fullName>Membrane-associated aspartic protease 2</fullName>
    </alternativeName>
</protein>
<dbReference type="EC" id="3.4.23.46" evidence="8"/>
<dbReference type="EMBL" id="AF190725">
    <property type="protein sequence ID" value="AAF04142.1"/>
    <property type="molecule type" value="mRNA"/>
</dbReference>
<dbReference type="EMBL" id="AF201468">
    <property type="protein sequence ID" value="AAF18982.1"/>
    <property type="molecule type" value="mRNA"/>
</dbReference>
<dbReference type="EMBL" id="AF200343">
    <property type="protein sequence ID" value="AAF17079.1"/>
    <property type="molecule type" value="mRNA"/>
</dbReference>
<dbReference type="EMBL" id="AF204943">
    <property type="protein sequence ID" value="AAF26367.1"/>
    <property type="molecule type" value="mRNA"/>
</dbReference>
<dbReference type="EMBL" id="AF338816">
    <property type="protein sequence ID" value="AAK38374.1"/>
    <property type="molecule type" value="mRNA"/>
</dbReference>
<dbReference type="EMBL" id="AF338817">
    <property type="protein sequence ID" value="AAK38375.1"/>
    <property type="molecule type" value="mRNA"/>
</dbReference>
<dbReference type="EMBL" id="AB050436">
    <property type="protein sequence ID" value="BAB40931.1"/>
    <property type="molecule type" value="mRNA"/>
</dbReference>
<dbReference type="EMBL" id="AB050437">
    <property type="protein sequence ID" value="BAB40932.1"/>
    <property type="molecule type" value="mRNA"/>
</dbReference>
<dbReference type="EMBL" id="AB050438">
    <property type="protein sequence ID" value="BAB40933.1"/>
    <property type="molecule type" value="mRNA"/>
</dbReference>
<dbReference type="EMBL" id="AB032975">
    <property type="protein sequence ID" value="BAA86463.2"/>
    <property type="status" value="ALT_FRAME"/>
    <property type="molecule type" value="mRNA"/>
</dbReference>
<dbReference type="EMBL" id="DQ007053">
    <property type="protein sequence ID" value="AAY16982.1"/>
    <property type="molecule type" value="Genomic_DNA"/>
</dbReference>
<dbReference type="EMBL" id="EF444940">
    <property type="protein sequence ID" value="ACA05927.1"/>
    <property type="molecule type" value="Genomic_DNA"/>
</dbReference>
<dbReference type="EMBL" id="AP000892">
    <property type="status" value="NOT_ANNOTATED_CDS"/>
    <property type="molecule type" value="Genomic_DNA"/>
</dbReference>
<dbReference type="EMBL" id="CH471065">
    <property type="protein sequence ID" value="EAW67313.1"/>
    <property type="molecule type" value="Genomic_DNA"/>
</dbReference>
<dbReference type="EMBL" id="BC065492">
    <property type="protein sequence ID" value="AAH65492.1"/>
    <property type="molecule type" value="mRNA"/>
</dbReference>
<dbReference type="EMBL" id="AF200193">
    <property type="protein sequence ID" value="AAF13715.1"/>
    <property type="molecule type" value="mRNA"/>
</dbReference>
<dbReference type="CCDS" id="CCDS44739.1">
    <molecule id="P56817-2"/>
</dbReference>
<dbReference type="CCDS" id="CCDS44740.1">
    <molecule id="P56817-3"/>
</dbReference>
<dbReference type="CCDS" id="CCDS44741.1">
    <molecule id="P56817-4"/>
</dbReference>
<dbReference type="CCDS" id="CCDS55786.1">
    <molecule id="P56817-6"/>
</dbReference>
<dbReference type="CCDS" id="CCDS55787.1">
    <molecule id="P56817-5"/>
</dbReference>
<dbReference type="CCDS" id="CCDS8383.1">
    <molecule id="P56817-1"/>
</dbReference>
<dbReference type="PIR" id="A59090">
    <property type="entry name" value="A59090"/>
</dbReference>
<dbReference type="RefSeq" id="NP_001193977.1">
    <molecule id="P56817-5"/>
    <property type="nucleotide sequence ID" value="NM_001207048.3"/>
</dbReference>
<dbReference type="RefSeq" id="NP_001193978.1">
    <molecule id="P56817-6"/>
    <property type="nucleotide sequence ID" value="NM_001207049.3"/>
</dbReference>
<dbReference type="RefSeq" id="NP_036236.1">
    <molecule id="P56817-1"/>
    <property type="nucleotide sequence ID" value="NM_012104.6"/>
</dbReference>
<dbReference type="RefSeq" id="NP_620427.1">
    <molecule id="P56817-3"/>
    <property type="nucleotide sequence ID" value="NM_138971.4"/>
</dbReference>
<dbReference type="RefSeq" id="NP_620428.1">
    <molecule id="P56817-2"/>
    <property type="nucleotide sequence ID" value="NM_138972.4"/>
</dbReference>
<dbReference type="RefSeq" id="NP_620429.1">
    <molecule id="P56817-4"/>
    <property type="nucleotide sequence ID" value="NM_138973.4"/>
</dbReference>
<dbReference type="PDB" id="1FKN">
    <property type="method" value="X-ray"/>
    <property type="resolution" value="1.90 A"/>
    <property type="chains" value="A/B=56-446"/>
</dbReference>
<dbReference type="PDB" id="1M4H">
    <property type="method" value="X-ray"/>
    <property type="resolution" value="2.10 A"/>
    <property type="chains" value="A/B=56-446"/>
</dbReference>
<dbReference type="PDB" id="1PY1">
    <property type="method" value="X-ray"/>
    <property type="resolution" value="2.60 A"/>
    <property type="chains" value="E/F/G/H=494-501"/>
</dbReference>
<dbReference type="PDB" id="1SGZ">
    <property type="method" value="X-ray"/>
    <property type="resolution" value="2.00 A"/>
    <property type="chains" value="A/B/C/D=58-446"/>
</dbReference>
<dbReference type="PDB" id="1TQF">
    <property type="method" value="X-ray"/>
    <property type="resolution" value="1.80 A"/>
    <property type="chains" value="A=43-446"/>
</dbReference>
<dbReference type="PDB" id="1UJJ">
    <property type="method" value="X-ray"/>
    <property type="resolution" value="2.60 A"/>
    <property type="chains" value="C=490-501"/>
</dbReference>
<dbReference type="PDB" id="1UJK">
    <property type="method" value="X-ray"/>
    <property type="resolution" value="1.90 A"/>
    <property type="chains" value="C/D=490-501"/>
</dbReference>
<dbReference type="PDB" id="1W50">
    <property type="method" value="X-ray"/>
    <property type="resolution" value="1.75 A"/>
    <property type="chains" value="A=43-453"/>
</dbReference>
<dbReference type="PDB" id="1W51">
    <property type="method" value="X-ray"/>
    <property type="resolution" value="2.55 A"/>
    <property type="chains" value="A=43-453"/>
</dbReference>
<dbReference type="PDB" id="1XN2">
    <property type="method" value="X-ray"/>
    <property type="resolution" value="1.90 A"/>
    <property type="chains" value="A/B/C/D=58-446"/>
</dbReference>
<dbReference type="PDB" id="1XN3">
    <property type="method" value="X-ray"/>
    <property type="resolution" value="2.00 A"/>
    <property type="chains" value="A/B/C/D=58-446"/>
</dbReference>
<dbReference type="PDB" id="1XS7">
    <property type="method" value="X-ray"/>
    <property type="resolution" value="2.80 A"/>
    <property type="chains" value="D=58-446"/>
</dbReference>
<dbReference type="PDB" id="1YM2">
    <property type="method" value="X-ray"/>
    <property type="resolution" value="2.05 A"/>
    <property type="chains" value="A/B/C=48-447"/>
</dbReference>
<dbReference type="PDB" id="1YM4">
    <property type="method" value="X-ray"/>
    <property type="resolution" value="2.25 A"/>
    <property type="chains" value="A/B/C=48-453"/>
</dbReference>
<dbReference type="PDB" id="2B8L">
    <property type="method" value="X-ray"/>
    <property type="resolution" value="1.70 A"/>
    <property type="chains" value="A=43-446"/>
</dbReference>
<dbReference type="PDB" id="2B8V">
    <property type="method" value="X-ray"/>
    <property type="resolution" value="1.80 A"/>
    <property type="chains" value="A=43-446"/>
</dbReference>
<dbReference type="PDB" id="2F3E">
    <property type="method" value="X-ray"/>
    <property type="resolution" value="2.11 A"/>
    <property type="chains" value="A/B/C=48-447"/>
</dbReference>
<dbReference type="PDB" id="2F3F">
    <property type="method" value="X-ray"/>
    <property type="resolution" value="2.30 A"/>
    <property type="chains" value="A/B/C=48-447"/>
</dbReference>
<dbReference type="PDB" id="2FDP">
    <property type="method" value="X-ray"/>
    <property type="resolution" value="2.50 A"/>
    <property type="chains" value="A/B/C=59-446"/>
</dbReference>
<dbReference type="PDB" id="2G94">
    <property type="method" value="X-ray"/>
    <property type="resolution" value="1.86 A"/>
    <property type="chains" value="A/B/C/D=58-446"/>
</dbReference>
<dbReference type="PDB" id="2HIZ">
    <property type="method" value="X-ray"/>
    <property type="resolution" value="2.50 A"/>
    <property type="chains" value="A/B/C=14-453"/>
</dbReference>
<dbReference type="PDB" id="2HM1">
    <property type="method" value="X-ray"/>
    <property type="resolution" value="2.20 A"/>
    <property type="chains" value="A=57-453"/>
</dbReference>
<dbReference type="PDB" id="2IQG">
    <property type="method" value="X-ray"/>
    <property type="resolution" value="1.70 A"/>
    <property type="chains" value="A=57-453"/>
</dbReference>
<dbReference type="PDB" id="2IRZ">
    <property type="method" value="X-ray"/>
    <property type="resolution" value="1.80 A"/>
    <property type="chains" value="A=43-446"/>
</dbReference>
<dbReference type="PDB" id="2IS0">
    <property type="method" value="X-ray"/>
    <property type="resolution" value="2.20 A"/>
    <property type="chains" value="A=43-446"/>
</dbReference>
<dbReference type="PDB" id="2NTR">
    <property type="method" value="X-ray"/>
    <property type="resolution" value="1.80 A"/>
    <property type="chains" value="A=43-446"/>
</dbReference>
<dbReference type="PDB" id="2OAH">
    <property type="method" value="X-ray"/>
    <property type="resolution" value="1.80 A"/>
    <property type="chains" value="A=43-446"/>
</dbReference>
<dbReference type="PDB" id="2OF0">
    <property type="method" value="X-ray"/>
    <property type="resolution" value="2.25 A"/>
    <property type="chains" value="A=45-446"/>
</dbReference>
<dbReference type="PDB" id="2OHK">
    <property type="method" value="X-ray"/>
    <property type="resolution" value="2.20 A"/>
    <property type="chains" value="A=45-446"/>
</dbReference>
<dbReference type="PDB" id="2OHL">
    <property type="method" value="X-ray"/>
    <property type="resolution" value="2.65 A"/>
    <property type="chains" value="A=45-446"/>
</dbReference>
<dbReference type="PDB" id="2OHM">
    <property type="method" value="X-ray"/>
    <property type="resolution" value="2.70 A"/>
    <property type="chains" value="A=45-446"/>
</dbReference>
<dbReference type="PDB" id="2OHN">
    <property type="method" value="X-ray"/>
    <property type="resolution" value="2.15 A"/>
    <property type="chains" value="A=45-446"/>
</dbReference>
<dbReference type="PDB" id="2OHP">
    <property type="method" value="X-ray"/>
    <property type="resolution" value="2.25 A"/>
    <property type="chains" value="A=45-446"/>
</dbReference>
<dbReference type="PDB" id="2OHQ">
    <property type="method" value="X-ray"/>
    <property type="resolution" value="2.10 A"/>
    <property type="chains" value="A=45-446"/>
</dbReference>
<dbReference type="PDB" id="2OHR">
    <property type="method" value="X-ray"/>
    <property type="resolution" value="2.25 A"/>
    <property type="chains" value="A=45-446"/>
</dbReference>
<dbReference type="PDB" id="2OHS">
    <property type="method" value="X-ray"/>
    <property type="resolution" value="2.45 A"/>
    <property type="chains" value="A=45-446"/>
</dbReference>
<dbReference type="PDB" id="2OHT">
    <property type="method" value="X-ray"/>
    <property type="resolution" value="2.30 A"/>
    <property type="chains" value="A=45-446"/>
</dbReference>
<dbReference type="PDB" id="2OHU">
    <property type="method" value="X-ray"/>
    <property type="resolution" value="2.35 A"/>
    <property type="chains" value="A=45-446"/>
</dbReference>
<dbReference type="PDB" id="2P4J">
    <property type="method" value="X-ray"/>
    <property type="resolution" value="2.50 A"/>
    <property type="chains" value="A/B/C/D=58-446"/>
</dbReference>
<dbReference type="PDB" id="2P83">
    <property type="method" value="X-ray"/>
    <property type="resolution" value="2.50 A"/>
    <property type="chains" value="A/B/C=14-446"/>
</dbReference>
<dbReference type="PDB" id="2P8H">
    <property type="method" value="X-ray"/>
    <property type="resolution" value="1.80 A"/>
    <property type="chains" value="A=43-446"/>
</dbReference>
<dbReference type="PDB" id="2PH6">
    <property type="method" value="X-ray"/>
    <property type="resolution" value="2.00 A"/>
    <property type="chains" value="A=43-446"/>
</dbReference>
<dbReference type="PDB" id="2PH8">
    <property type="method" value="X-ray"/>
    <property type="resolution" value="1.70 A"/>
    <property type="chains" value="A=43-446"/>
</dbReference>
<dbReference type="PDB" id="2Q11">
    <property type="method" value="X-ray"/>
    <property type="resolution" value="2.40 A"/>
    <property type="chains" value="A/B/C=59-446"/>
</dbReference>
<dbReference type="PDB" id="2Q15">
    <property type="method" value="X-ray"/>
    <property type="resolution" value="2.40 A"/>
    <property type="chains" value="A=62-446"/>
</dbReference>
<dbReference type="PDB" id="2QK5">
    <property type="method" value="X-ray"/>
    <property type="resolution" value="2.20 A"/>
    <property type="chains" value="A/B=55-447"/>
</dbReference>
<dbReference type="PDB" id="2QMD">
    <property type="method" value="X-ray"/>
    <property type="resolution" value="1.65 A"/>
    <property type="chains" value="A/B=55-447"/>
</dbReference>
<dbReference type="PDB" id="2QMF">
    <property type="method" value="X-ray"/>
    <property type="resolution" value="1.75 A"/>
    <property type="chains" value="A/B=55-447"/>
</dbReference>
<dbReference type="PDB" id="2QMG">
    <property type="method" value="X-ray"/>
    <property type="resolution" value="1.89 A"/>
    <property type="chains" value="A/B=55-447"/>
</dbReference>
<dbReference type="PDB" id="2QP8">
    <property type="method" value="X-ray"/>
    <property type="resolution" value="1.50 A"/>
    <property type="chains" value="A/B=55-447"/>
</dbReference>
<dbReference type="PDB" id="2QU2">
    <property type="method" value="X-ray"/>
    <property type="resolution" value="2.60 A"/>
    <property type="chains" value="A=46-454"/>
</dbReference>
<dbReference type="PDB" id="2QU3">
    <property type="method" value="X-ray"/>
    <property type="resolution" value="2.00 A"/>
    <property type="chains" value="A=46-454"/>
</dbReference>
<dbReference type="PDB" id="2QZK">
    <property type="method" value="X-ray"/>
    <property type="resolution" value="1.80 A"/>
    <property type="chains" value="A=43-446"/>
</dbReference>
<dbReference type="PDB" id="2QZL">
    <property type="method" value="X-ray"/>
    <property type="resolution" value="1.80 A"/>
    <property type="chains" value="A=43-446"/>
</dbReference>
<dbReference type="PDB" id="2VA5">
    <property type="method" value="X-ray"/>
    <property type="resolution" value="2.75 A"/>
    <property type="chains" value="A=14-453"/>
</dbReference>
<dbReference type="PDB" id="2VA6">
    <property type="method" value="X-ray"/>
    <property type="resolution" value="2.50 A"/>
    <property type="chains" value="A=14-453"/>
</dbReference>
<dbReference type="PDB" id="2VA7">
    <property type="method" value="X-ray"/>
    <property type="resolution" value="2.20 A"/>
    <property type="chains" value="A=14-453"/>
</dbReference>
<dbReference type="PDB" id="2VIE">
    <property type="method" value="X-ray"/>
    <property type="resolution" value="1.90 A"/>
    <property type="chains" value="A=61-452"/>
</dbReference>
<dbReference type="PDB" id="2VIJ">
    <property type="method" value="X-ray"/>
    <property type="resolution" value="1.60 A"/>
    <property type="chains" value="A=61-452"/>
</dbReference>
<dbReference type="PDB" id="2VIY">
    <property type="method" value="X-ray"/>
    <property type="resolution" value="1.82 A"/>
    <property type="chains" value="A=61-452"/>
</dbReference>
<dbReference type="PDB" id="2VIZ">
    <property type="method" value="X-ray"/>
    <property type="resolution" value="1.60 A"/>
    <property type="chains" value="A=61-452"/>
</dbReference>
<dbReference type="PDB" id="2VJ6">
    <property type="method" value="X-ray"/>
    <property type="resolution" value="1.80 A"/>
    <property type="chains" value="A=61-452"/>
</dbReference>
<dbReference type="PDB" id="2VJ7">
    <property type="method" value="X-ray"/>
    <property type="resolution" value="1.60 A"/>
    <property type="chains" value="A=61-452"/>
</dbReference>
<dbReference type="PDB" id="2VJ9">
    <property type="method" value="X-ray"/>
    <property type="resolution" value="1.60 A"/>
    <property type="chains" value="A=61-452"/>
</dbReference>
<dbReference type="PDB" id="2VKM">
    <property type="method" value="X-ray"/>
    <property type="resolution" value="2.05 A"/>
    <property type="chains" value="A/B/C/D=58-446"/>
</dbReference>
<dbReference type="PDB" id="2VNM">
    <property type="method" value="X-ray"/>
    <property type="resolution" value="1.79 A"/>
    <property type="chains" value="A=61-452"/>
</dbReference>
<dbReference type="PDB" id="2VNN">
    <property type="method" value="X-ray"/>
    <property type="resolution" value="1.87 A"/>
    <property type="chains" value="A=61-452"/>
</dbReference>
<dbReference type="PDB" id="2WEZ">
    <property type="method" value="X-ray"/>
    <property type="resolution" value="1.70 A"/>
    <property type="chains" value="A=61-452"/>
</dbReference>
<dbReference type="PDB" id="2WF0">
    <property type="method" value="X-ray"/>
    <property type="resolution" value="1.60 A"/>
    <property type="chains" value="A=61-452"/>
</dbReference>
<dbReference type="PDB" id="2WF1">
    <property type="method" value="X-ray"/>
    <property type="resolution" value="1.60 A"/>
    <property type="chains" value="A=61-452"/>
</dbReference>
<dbReference type="PDB" id="2WF2">
    <property type="method" value="X-ray"/>
    <property type="resolution" value="1.80 A"/>
    <property type="chains" value="A=61-452"/>
</dbReference>
<dbReference type="PDB" id="2WF3">
    <property type="method" value="X-ray"/>
    <property type="resolution" value="2.08 A"/>
    <property type="chains" value="A=61-452"/>
</dbReference>
<dbReference type="PDB" id="2WF4">
    <property type="method" value="X-ray"/>
    <property type="resolution" value="1.80 A"/>
    <property type="chains" value="A=61-452"/>
</dbReference>
<dbReference type="PDB" id="2WJO">
    <property type="method" value="X-ray"/>
    <property type="resolution" value="2.50 A"/>
    <property type="chains" value="A=58-460"/>
</dbReference>
<dbReference type="PDB" id="2XFI">
    <property type="method" value="X-ray"/>
    <property type="resolution" value="1.73 A"/>
    <property type="chains" value="A=61-452"/>
</dbReference>
<dbReference type="PDB" id="2XFJ">
    <property type="method" value="X-ray"/>
    <property type="resolution" value="1.80 A"/>
    <property type="chains" value="A=61-452"/>
</dbReference>
<dbReference type="PDB" id="2XFK">
    <property type="method" value="X-ray"/>
    <property type="resolution" value="1.80 A"/>
    <property type="chains" value="A=61-452"/>
</dbReference>
<dbReference type="PDB" id="2ZDZ">
    <property type="method" value="X-ray"/>
    <property type="resolution" value="2.00 A"/>
    <property type="chains" value="A=46-454"/>
</dbReference>
<dbReference type="PDB" id="2ZE1">
    <property type="method" value="X-ray"/>
    <property type="resolution" value="2.20 A"/>
    <property type="chains" value="A=46-454"/>
</dbReference>
<dbReference type="PDB" id="2ZHR">
    <property type="method" value="X-ray"/>
    <property type="resolution" value="2.50 A"/>
    <property type="chains" value="A/B=45-454"/>
</dbReference>
<dbReference type="PDB" id="2ZHS">
    <property type="method" value="X-ray"/>
    <property type="resolution" value="2.70 A"/>
    <property type="chains" value="A=45-454"/>
</dbReference>
<dbReference type="PDB" id="2ZHT">
    <property type="method" value="X-ray"/>
    <property type="resolution" value="2.35 A"/>
    <property type="chains" value="A=45-454"/>
</dbReference>
<dbReference type="PDB" id="2ZHU">
    <property type="method" value="X-ray"/>
    <property type="resolution" value="2.40 A"/>
    <property type="chains" value="A=45-454"/>
</dbReference>
<dbReference type="PDB" id="2ZHV">
    <property type="method" value="X-ray"/>
    <property type="resolution" value="1.85 A"/>
    <property type="chains" value="A=45-454"/>
</dbReference>
<dbReference type="PDB" id="2ZJH">
    <property type="method" value="X-ray"/>
    <property type="resolution" value="2.60 A"/>
    <property type="chains" value="A=43-446"/>
</dbReference>
<dbReference type="PDB" id="2ZJI">
    <property type="method" value="X-ray"/>
    <property type="resolution" value="2.30 A"/>
    <property type="chains" value="A=43-446"/>
</dbReference>
<dbReference type="PDB" id="2ZJJ">
    <property type="method" value="X-ray"/>
    <property type="resolution" value="2.20 A"/>
    <property type="chains" value="A=43-446"/>
</dbReference>
<dbReference type="PDB" id="2ZJK">
    <property type="method" value="X-ray"/>
    <property type="resolution" value="3.00 A"/>
    <property type="chains" value="A/B/C=43-446"/>
</dbReference>
<dbReference type="PDB" id="2ZJL">
    <property type="method" value="X-ray"/>
    <property type="resolution" value="2.10 A"/>
    <property type="chains" value="A=43-446"/>
</dbReference>
<dbReference type="PDB" id="2ZJM">
    <property type="method" value="X-ray"/>
    <property type="resolution" value="1.90 A"/>
    <property type="chains" value="A=43-446"/>
</dbReference>
<dbReference type="PDB" id="2ZJN">
    <property type="method" value="X-ray"/>
    <property type="resolution" value="2.70 A"/>
    <property type="chains" value="A=43-446"/>
</dbReference>
<dbReference type="PDB" id="3BRA">
    <property type="method" value="X-ray"/>
    <property type="resolution" value="2.30 A"/>
    <property type="chains" value="A=46-454"/>
</dbReference>
<dbReference type="PDB" id="3BUF">
    <property type="method" value="X-ray"/>
    <property type="resolution" value="2.30 A"/>
    <property type="chains" value="A=46-454"/>
</dbReference>
<dbReference type="PDB" id="3BUG">
    <property type="method" value="X-ray"/>
    <property type="resolution" value="2.50 A"/>
    <property type="chains" value="A=46-454"/>
</dbReference>
<dbReference type="PDB" id="3BUH">
    <property type="method" value="X-ray"/>
    <property type="resolution" value="2.30 A"/>
    <property type="chains" value="A=46-454"/>
</dbReference>
<dbReference type="PDB" id="3CIB">
    <property type="method" value="X-ray"/>
    <property type="resolution" value="1.72 A"/>
    <property type="chains" value="A/B=58-447"/>
</dbReference>
<dbReference type="PDB" id="3CIC">
    <property type="method" value="X-ray"/>
    <property type="resolution" value="1.75 A"/>
    <property type="chains" value="A/B=58-447"/>
</dbReference>
<dbReference type="PDB" id="3CID">
    <property type="method" value="X-ray"/>
    <property type="resolution" value="1.80 A"/>
    <property type="chains" value="A/B=58-447"/>
</dbReference>
<dbReference type="PDB" id="3CKP">
    <property type="method" value="X-ray"/>
    <property type="resolution" value="2.30 A"/>
    <property type="chains" value="A/B/C=43-454"/>
</dbReference>
<dbReference type="PDB" id="3CKR">
    <property type="method" value="X-ray"/>
    <property type="resolution" value="2.70 A"/>
    <property type="chains" value="A/B/C=43-454"/>
</dbReference>
<dbReference type="PDB" id="3DM6">
    <property type="method" value="X-ray"/>
    <property type="resolution" value="2.60 A"/>
    <property type="chains" value="A/B/C=42-446"/>
</dbReference>
<dbReference type="PDB" id="3DUY">
    <property type="method" value="X-ray"/>
    <property type="resolution" value="1.97 A"/>
    <property type="chains" value="A/B/C=48-447"/>
</dbReference>
<dbReference type="PDB" id="3DV1">
    <property type="method" value="X-ray"/>
    <property type="resolution" value="2.10 A"/>
    <property type="chains" value="A/B/C=48-447"/>
</dbReference>
<dbReference type="PDB" id="3DV5">
    <property type="method" value="X-ray"/>
    <property type="resolution" value="2.10 A"/>
    <property type="chains" value="A/B/C=48-447"/>
</dbReference>
<dbReference type="PDB" id="3EXO">
    <property type="method" value="X-ray"/>
    <property type="resolution" value="2.10 A"/>
    <property type="chains" value="A=43-454"/>
</dbReference>
<dbReference type="PDB" id="3FKT">
    <property type="method" value="X-ray"/>
    <property type="resolution" value="1.90 A"/>
    <property type="chains" value="A=43-446"/>
</dbReference>
<dbReference type="PDB" id="3H0B">
    <property type="method" value="X-ray"/>
    <property type="resolution" value="2.70 A"/>
    <property type="chains" value="A/B/C=43-446"/>
</dbReference>
<dbReference type="PDB" id="3HVG">
    <property type="method" value="X-ray"/>
    <property type="resolution" value="2.26 A"/>
    <property type="chains" value="A/B/C=46-453"/>
</dbReference>
<dbReference type="PDB" id="3HW1">
    <property type="method" value="X-ray"/>
    <property type="resolution" value="2.48 A"/>
    <property type="chains" value="A/B/C=46-453"/>
</dbReference>
<dbReference type="PDB" id="3I25">
    <property type="method" value="X-ray"/>
    <property type="resolution" value="2.10 A"/>
    <property type="chains" value="A/B/C=42-446"/>
</dbReference>
<dbReference type="PDB" id="3IGB">
    <property type="method" value="X-ray"/>
    <property type="resolution" value="2.24 A"/>
    <property type="chains" value="A=46-454"/>
</dbReference>
<dbReference type="PDB" id="3IN3">
    <property type="method" value="X-ray"/>
    <property type="resolution" value="2.00 A"/>
    <property type="chains" value="A=46-454"/>
</dbReference>
<dbReference type="PDB" id="3IN4">
    <property type="method" value="X-ray"/>
    <property type="resolution" value="2.30 A"/>
    <property type="chains" value="A=46-454"/>
</dbReference>
<dbReference type="PDB" id="3IND">
    <property type="method" value="X-ray"/>
    <property type="resolution" value="2.25 A"/>
    <property type="chains" value="A=46-454"/>
</dbReference>
<dbReference type="PDB" id="3INE">
    <property type="method" value="X-ray"/>
    <property type="resolution" value="2.00 A"/>
    <property type="chains" value="A=46-454"/>
</dbReference>
<dbReference type="PDB" id="3INF">
    <property type="method" value="X-ray"/>
    <property type="resolution" value="1.85 A"/>
    <property type="chains" value="A=46-454"/>
</dbReference>
<dbReference type="PDB" id="3INH">
    <property type="method" value="X-ray"/>
    <property type="resolution" value="1.80 A"/>
    <property type="chains" value="A=46-454"/>
</dbReference>
<dbReference type="PDB" id="3IVH">
    <property type="method" value="X-ray"/>
    <property type="resolution" value="1.80 A"/>
    <property type="chains" value="A=57-453"/>
</dbReference>
<dbReference type="PDB" id="3IVI">
    <property type="method" value="X-ray"/>
    <property type="resolution" value="2.20 A"/>
    <property type="chains" value="A/B/C=57-453"/>
</dbReference>
<dbReference type="PDB" id="3IXJ">
    <property type="method" value="X-ray"/>
    <property type="resolution" value="2.20 A"/>
    <property type="chains" value="A/B/C=59-446"/>
</dbReference>
<dbReference type="PDB" id="3IXK">
    <property type="method" value="X-ray"/>
    <property type="resolution" value="2.50 A"/>
    <property type="chains" value="A/B/C=42-446"/>
</dbReference>
<dbReference type="PDB" id="3K5C">
    <property type="method" value="X-ray"/>
    <property type="resolution" value="2.12 A"/>
    <property type="chains" value="A/B/C=48-447"/>
</dbReference>
<dbReference type="PDB" id="3K5D">
    <property type="method" value="X-ray"/>
    <property type="resolution" value="2.90 A"/>
    <property type="chains" value="A/B/C=48-453"/>
</dbReference>
<dbReference type="PDB" id="3K5F">
    <property type="method" value="X-ray"/>
    <property type="resolution" value="2.25 A"/>
    <property type="chains" value="A/B/C=48-447"/>
</dbReference>
<dbReference type="PDB" id="3K5G">
    <property type="method" value="X-ray"/>
    <property type="resolution" value="2.00 A"/>
    <property type="chains" value="A/B/C=48-447"/>
</dbReference>
<dbReference type="PDB" id="3KMX">
    <property type="method" value="X-ray"/>
    <property type="resolution" value="1.70 A"/>
    <property type="chains" value="A/B=53-447"/>
</dbReference>
<dbReference type="PDB" id="3KMY">
    <property type="method" value="X-ray"/>
    <property type="resolution" value="1.90 A"/>
    <property type="chains" value="A/B=53-447"/>
</dbReference>
<dbReference type="PDB" id="3KN0">
    <property type="method" value="X-ray"/>
    <property type="resolution" value="1.90 A"/>
    <property type="chains" value="A/B=53-447"/>
</dbReference>
<dbReference type="PDB" id="3KYR">
    <property type="method" value="X-ray"/>
    <property type="resolution" value="2.60 A"/>
    <property type="chains" value="A/B/C=42-446"/>
</dbReference>
<dbReference type="PDB" id="3L38">
    <property type="method" value="X-ray"/>
    <property type="resolution" value="2.10 A"/>
    <property type="chains" value="A=46-454"/>
</dbReference>
<dbReference type="PDB" id="3L3A">
    <property type="method" value="X-ray"/>
    <property type="resolution" value="2.36 A"/>
    <property type="chains" value="A=46-454"/>
</dbReference>
<dbReference type="PDB" id="3L58">
    <property type="method" value="X-ray"/>
    <property type="resolution" value="1.80 A"/>
    <property type="chains" value="A/B=41-454"/>
</dbReference>
<dbReference type="PDB" id="3L59">
    <property type="method" value="X-ray"/>
    <property type="resolution" value="2.00 A"/>
    <property type="chains" value="A/B=41-454"/>
</dbReference>
<dbReference type="PDB" id="3L5B">
    <property type="method" value="X-ray"/>
    <property type="resolution" value="1.80 A"/>
    <property type="chains" value="A/B=41-454"/>
</dbReference>
<dbReference type="PDB" id="3L5C">
    <property type="method" value="X-ray"/>
    <property type="resolution" value="1.80 A"/>
    <property type="chains" value="A/B=41-454"/>
</dbReference>
<dbReference type="PDB" id="3L5D">
    <property type="method" value="X-ray"/>
    <property type="resolution" value="1.75 A"/>
    <property type="chains" value="A/B=41-454"/>
</dbReference>
<dbReference type="PDB" id="3L5E">
    <property type="method" value="X-ray"/>
    <property type="resolution" value="1.53 A"/>
    <property type="chains" value="A/B=41-454"/>
</dbReference>
<dbReference type="PDB" id="3L5F">
    <property type="method" value="X-ray"/>
    <property type="resolution" value="1.70 A"/>
    <property type="chains" value="A/B=41-454"/>
</dbReference>
<dbReference type="PDB" id="3LHG">
    <property type="method" value="X-ray"/>
    <property type="resolution" value="2.10 A"/>
    <property type="chains" value="A=46-454"/>
</dbReference>
<dbReference type="PDB" id="3LNK">
    <property type="method" value="X-ray"/>
    <property type="resolution" value="1.80 A"/>
    <property type="chains" value="A/B=53-447"/>
</dbReference>
<dbReference type="PDB" id="3LPI">
    <property type="method" value="X-ray"/>
    <property type="resolution" value="2.05 A"/>
    <property type="chains" value="A/B=14-454"/>
</dbReference>
<dbReference type="PDB" id="3LPJ">
    <property type="method" value="X-ray"/>
    <property type="resolution" value="1.79 A"/>
    <property type="chains" value="A/B=14-454"/>
</dbReference>
<dbReference type="PDB" id="3LPK">
    <property type="method" value="X-ray"/>
    <property type="resolution" value="1.93 A"/>
    <property type="chains" value="A/B=14-454"/>
</dbReference>
<dbReference type="PDB" id="3MSJ">
    <property type="method" value="X-ray"/>
    <property type="resolution" value="1.80 A"/>
    <property type="chains" value="A/B/C=43-453"/>
</dbReference>
<dbReference type="PDB" id="3MSK">
    <property type="method" value="X-ray"/>
    <property type="resolution" value="2.00 A"/>
    <property type="chains" value="A=48-453"/>
</dbReference>
<dbReference type="PDB" id="3MSL">
    <property type="method" value="X-ray"/>
    <property type="resolution" value="2.40 A"/>
    <property type="chains" value="A=48-453"/>
</dbReference>
<dbReference type="PDB" id="3N4L">
    <property type="method" value="X-ray"/>
    <property type="resolution" value="2.70 A"/>
    <property type="chains" value="A/B/C=57-453"/>
</dbReference>
<dbReference type="PDB" id="3NSH">
    <property type="method" value="X-ray"/>
    <property type="resolution" value="2.20 A"/>
    <property type="chains" value="A/B/C=57-453"/>
</dbReference>
<dbReference type="PDB" id="3OHF">
    <property type="method" value="X-ray"/>
    <property type="resolution" value="2.10 A"/>
    <property type="chains" value="A/B=14-454"/>
</dbReference>
<dbReference type="PDB" id="3OHH">
    <property type="method" value="X-ray"/>
    <property type="resolution" value="2.01 A"/>
    <property type="chains" value="A/B=14-454"/>
</dbReference>
<dbReference type="PDB" id="3OOZ">
    <property type="method" value="X-ray"/>
    <property type="resolution" value="1.80 A"/>
    <property type="chains" value="A=46-454"/>
</dbReference>
<dbReference type="PDB" id="3PI5">
    <property type="method" value="X-ray"/>
    <property type="resolution" value="2.40 A"/>
    <property type="chains" value="A/B/C=48-447"/>
</dbReference>
<dbReference type="PDB" id="3QBH">
    <property type="method" value="X-ray"/>
    <property type="resolution" value="2.24 A"/>
    <property type="chains" value="A/B/C=48-447"/>
</dbReference>
<dbReference type="PDB" id="3QI1">
    <property type="method" value="X-ray"/>
    <property type="resolution" value="2.30 A"/>
    <property type="chains" value="A=57-453"/>
</dbReference>
<dbReference type="PDB" id="3R1G">
    <property type="method" value="X-ray"/>
    <property type="resolution" value="2.80 A"/>
    <property type="chains" value="B=57-453"/>
</dbReference>
<dbReference type="PDB" id="3R2F">
    <property type="method" value="X-ray"/>
    <property type="resolution" value="2.53 A"/>
    <property type="chains" value="A/B/D/E=14-454"/>
</dbReference>
<dbReference type="PDB" id="3RSV">
    <property type="method" value="X-ray"/>
    <property type="resolution" value="2.50 A"/>
    <property type="chains" value="A=43-453"/>
</dbReference>
<dbReference type="PDB" id="3RSX">
    <property type="method" value="X-ray"/>
    <property type="resolution" value="2.48 A"/>
    <property type="chains" value="A=43-453"/>
</dbReference>
<dbReference type="PDB" id="3RTH">
    <property type="method" value="X-ray"/>
    <property type="resolution" value="2.70 A"/>
    <property type="chains" value="A=43-453"/>
</dbReference>
<dbReference type="PDB" id="3RTM">
    <property type="method" value="X-ray"/>
    <property type="resolution" value="2.76 A"/>
    <property type="chains" value="A=43-453"/>
</dbReference>
<dbReference type="PDB" id="3RTN">
    <property type="method" value="X-ray"/>
    <property type="resolution" value="2.70 A"/>
    <property type="chains" value="A=43-453"/>
</dbReference>
<dbReference type="PDB" id="3RU1">
    <property type="method" value="X-ray"/>
    <property type="resolution" value="2.30 A"/>
    <property type="chains" value="A=43-453"/>
</dbReference>
<dbReference type="PDB" id="3RVI">
    <property type="method" value="X-ray"/>
    <property type="resolution" value="2.65 A"/>
    <property type="chains" value="A=43-453"/>
</dbReference>
<dbReference type="PDB" id="3S2O">
    <property type="method" value="X-ray"/>
    <property type="resolution" value="2.60 A"/>
    <property type="chains" value="A=48-453"/>
</dbReference>
<dbReference type="PDB" id="3S7L">
    <property type="method" value="X-ray"/>
    <property type="resolution" value="2.16 A"/>
    <property type="chains" value="A=46-454"/>
</dbReference>
<dbReference type="PDB" id="3S7M">
    <property type="method" value="X-ray"/>
    <property type="resolution" value="2.20 A"/>
    <property type="chains" value="A=46-454"/>
</dbReference>
<dbReference type="PDB" id="3SKF">
    <property type="method" value="X-ray"/>
    <property type="resolution" value="3.00 A"/>
    <property type="chains" value="A/B=14-454"/>
</dbReference>
<dbReference type="PDB" id="3SKG">
    <property type="method" value="X-ray"/>
    <property type="resolution" value="2.88 A"/>
    <property type="chains" value="A/B/D/E=14-454"/>
</dbReference>
<dbReference type="PDB" id="3TPJ">
    <property type="method" value="X-ray"/>
    <property type="resolution" value="1.61 A"/>
    <property type="chains" value="A=43-454"/>
</dbReference>
<dbReference type="PDB" id="3TPL">
    <property type="method" value="X-ray"/>
    <property type="resolution" value="2.50 A"/>
    <property type="chains" value="A/B/C=43-454"/>
</dbReference>
<dbReference type="PDB" id="3TPP">
    <property type="method" value="X-ray"/>
    <property type="resolution" value="1.60 A"/>
    <property type="chains" value="A=43-454"/>
</dbReference>
<dbReference type="PDB" id="3TPR">
    <property type="method" value="X-ray"/>
    <property type="resolution" value="2.55 A"/>
    <property type="chains" value="A=43-454"/>
</dbReference>
<dbReference type="PDB" id="3U6A">
    <property type="method" value="X-ray"/>
    <property type="resolution" value="2.20 A"/>
    <property type="chains" value="A/B/C=58-446"/>
</dbReference>
<dbReference type="PDB" id="3UDH">
    <property type="method" value="X-ray"/>
    <property type="resolution" value="1.70 A"/>
    <property type="chains" value="A=58-453"/>
</dbReference>
<dbReference type="PDB" id="3UDJ">
    <property type="method" value="X-ray"/>
    <property type="resolution" value="1.80 A"/>
    <property type="chains" value="A=58-453"/>
</dbReference>
<dbReference type="PDB" id="3UDK">
    <property type="method" value="X-ray"/>
    <property type="resolution" value="2.51 A"/>
    <property type="chains" value="A=58-453"/>
</dbReference>
<dbReference type="PDB" id="3UDM">
    <property type="method" value="X-ray"/>
    <property type="resolution" value="1.94 A"/>
    <property type="chains" value="A=58-453"/>
</dbReference>
<dbReference type="PDB" id="3UDN">
    <property type="method" value="X-ray"/>
    <property type="resolution" value="2.19 A"/>
    <property type="chains" value="A=58-453"/>
</dbReference>
<dbReference type="PDB" id="3UDP">
    <property type="method" value="X-ray"/>
    <property type="resolution" value="1.95 A"/>
    <property type="chains" value="A=58-453"/>
</dbReference>
<dbReference type="PDB" id="3UDQ">
    <property type="method" value="X-ray"/>
    <property type="resolution" value="2.73 A"/>
    <property type="chains" value="A=58-453"/>
</dbReference>
<dbReference type="PDB" id="3UDR">
    <property type="method" value="X-ray"/>
    <property type="resolution" value="1.95 A"/>
    <property type="chains" value="A=58-453"/>
</dbReference>
<dbReference type="PDB" id="3UDY">
    <property type="method" value="X-ray"/>
    <property type="resolution" value="2.00 A"/>
    <property type="chains" value="A=58-453"/>
</dbReference>
<dbReference type="PDB" id="3UFL">
    <property type="method" value="X-ray"/>
    <property type="resolution" value="1.90 A"/>
    <property type="chains" value="A=58-446"/>
</dbReference>
<dbReference type="PDB" id="3UQP">
    <property type="method" value="X-ray"/>
    <property type="resolution" value="1.77 A"/>
    <property type="chains" value="A=43-454"/>
</dbReference>
<dbReference type="PDB" id="3UQR">
    <property type="method" value="X-ray"/>
    <property type="resolution" value="3.06 A"/>
    <property type="chains" value="A/B/C=43-454"/>
</dbReference>
<dbReference type="PDB" id="3UQU">
    <property type="method" value="X-ray"/>
    <property type="resolution" value="1.70 A"/>
    <property type="chains" value="A=43-454"/>
</dbReference>
<dbReference type="PDB" id="3UQW">
    <property type="method" value="X-ray"/>
    <property type="resolution" value="2.20 A"/>
    <property type="chains" value="A=43-454"/>
</dbReference>
<dbReference type="PDB" id="3UQX">
    <property type="method" value="X-ray"/>
    <property type="resolution" value="1.70 A"/>
    <property type="chains" value="A=43-454"/>
</dbReference>
<dbReference type="PDB" id="3VEU">
    <property type="method" value="X-ray"/>
    <property type="resolution" value="1.52 A"/>
    <property type="chains" value="A=48-447"/>
</dbReference>
<dbReference type="PDB" id="3VF3">
    <property type="method" value="X-ray"/>
    <property type="resolution" value="1.48 A"/>
    <property type="chains" value="A=48-447"/>
</dbReference>
<dbReference type="PDB" id="3VG1">
    <property type="method" value="X-ray"/>
    <property type="resolution" value="1.77 A"/>
    <property type="chains" value="A=48-447"/>
</dbReference>
<dbReference type="PDB" id="3VV6">
    <property type="method" value="X-ray"/>
    <property type="resolution" value="2.05 A"/>
    <property type="chains" value="A=43-454"/>
</dbReference>
<dbReference type="PDB" id="3VV7">
    <property type="method" value="X-ray"/>
    <property type="resolution" value="2.10 A"/>
    <property type="chains" value="A=43-454"/>
</dbReference>
<dbReference type="PDB" id="3VV8">
    <property type="method" value="X-ray"/>
    <property type="resolution" value="2.50 A"/>
    <property type="chains" value="A=43-454"/>
</dbReference>
<dbReference type="PDB" id="3WB4">
    <property type="method" value="X-ray"/>
    <property type="resolution" value="2.25 A"/>
    <property type="chains" value="A=43-454"/>
</dbReference>
<dbReference type="PDB" id="3WB5">
    <property type="method" value="X-ray"/>
    <property type="resolution" value="2.50 A"/>
    <property type="chains" value="A=43-454"/>
</dbReference>
<dbReference type="PDB" id="3ZMG">
    <property type="method" value="X-ray"/>
    <property type="resolution" value="1.74 A"/>
    <property type="chains" value="A=46-454"/>
</dbReference>
<dbReference type="PDB" id="3ZOV">
    <property type="method" value="X-ray"/>
    <property type="resolution" value="2.10 A"/>
    <property type="chains" value="A=46-454"/>
</dbReference>
<dbReference type="PDB" id="4ACU">
    <property type="method" value="X-ray"/>
    <property type="resolution" value="1.75 A"/>
    <property type="chains" value="A=43-453"/>
</dbReference>
<dbReference type="PDB" id="4ACX">
    <property type="method" value="X-ray"/>
    <property type="resolution" value="2.00 A"/>
    <property type="chains" value="A=43-453"/>
</dbReference>
<dbReference type="PDB" id="4AZY">
    <property type="method" value="X-ray"/>
    <property type="resolution" value="1.79 A"/>
    <property type="chains" value="A=43-453"/>
</dbReference>
<dbReference type="PDB" id="4B00">
    <property type="method" value="X-ray"/>
    <property type="resolution" value="1.83 A"/>
    <property type="chains" value="A=43-453"/>
</dbReference>
<dbReference type="PDB" id="4B05">
    <property type="method" value="X-ray"/>
    <property type="resolution" value="1.80 A"/>
    <property type="chains" value="A=43-453"/>
</dbReference>
<dbReference type="PDB" id="4B0Q">
    <property type="method" value="X-ray"/>
    <property type="resolution" value="1.87 A"/>
    <property type="chains" value="A=62-445"/>
</dbReference>
<dbReference type="PDB" id="4B1C">
    <property type="method" value="X-ray"/>
    <property type="resolution" value="1.95 A"/>
    <property type="chains" value="A=58-445"/>
</dbReference>
<dbReference type="PDB" id="4B1D">
    <property type="method" value="X-ray"/>
    <property type="resolution" value="1.95 A"/>
    <property type="chains" value="A=58-445"/>
</dbReference>
<dbReference type="PDB" id="4B1E">
    <property type="method" value="X-ray"/>
    <property type="resolution" value="1.95 A"/>
    <property type="chains" value="A=58-445"/>
</dbReference>
<dbReference type="PDB" id="4B70">
    <property type="method" value="X-ray"/>
    <property type="resolution" value="1.60 A"/>
    <property type="chains" value="A=61-445"/>
</dbReference>
<dbReference type="PDB" id="4B72">
    <property type="method" value="X-ray"/>
    <property type="resolution" value="1.60 A"/>
    <property type="chains" value="A=58-445"/>
</dbReference>
<dbReference type="PDB" id="4B77">
    <property type="method" value="X-ray"/>
    <property type="resolution" value="1.80 A"/>
    <property type="chains" value="A=58-445"/>
</dbReference>
<dbReference type="PDB" id="4B78">
    <property type="method" value="X-ray"/>
    <property type="resolution" value="1.50 A"/>
    <property type="chains" value="A=62-445"/>
</dbReference>
<dbReference type="PDB" id="4BEK">
    <property type="method" value="X-ray"/>
    <property type="resolution" value="2.39 A"/>
    <property type="chains" value="A=46-454"/>
</dbReference>
<dbReference type="PDB" id="4BFD">
    <property type="method" value="X-ray"/>
    <property type="resolution" value="2.30 A"/>
    <property type="chains" value="A=46-454"/>
</dbReference>
<dbReference type="PDB" id="4D83">
    <property type="method" value="X-ray"/>
    <property type="resolution" value="2.40 A"/>
    <property type="chains" value="A/B/C=48-447"/>
</dbReference>
<dbReference type="PDB" id="4D85">
    <property type="method" value="X-ray"/>
    <property type="resolution" value="2.65 A"/>
    <property type="chains" value="A=48-453"/>
</dbReference>
<dbReference type="PDB" id="4D88">
    <property type="method" value="X-ray"/>
    <property type="resolution" value="1.70 A"/>
    <property type="chains" value="A=48-447"/>
</dbReference>
<dbReference type="PDB" id="4D89">
    <property type="method" value="X-ray"/>
    <property type="resolution" value="1.65 A"/>
    <property type="chains" value="A=48-447"/>
</dbReference>
<dbReference type="PDB" id="4D8C">
    <property type="method" value="X-ray"/>
    <property type="resolution" value="2.07 A"/>
    <property type="chains" value="A/B/C=48-447"/>
</dbReference>
<dbReference type="PDB" id="4DH6">
    <property type="method" value="X-ray"/>
    <property type="resolution" value="2.50 A"/>
    <property type="chains" value="A=43-453"/>
</dbReference>
<dbReference type="PDB" id="4DI2">
    <property type="method" value="X-ray"/>
    <property type="resolution" value="2.00 A"/>
    <property type="chains" value="A/B/C=43-453"/>
</dbReference>
<dbReference type="PDB" id="4DJU">
    <property type="method" value="X-ray"/>
    <property type="resolution" value="1.80 A"/>
    <property type="chains" value="A/B=41-454"/>
</dbReference>
<dbReference type="PDB" id="4DJV">
    <property type="method" value="X-ray"/>
    <property type="resolution" value="1.73 A"/>
    <property type="chains" value="A/B=41-454"/>
</dbReference>
<dbReference type="PDB" id="4DJW">
    <property type="method" value="X-ray"/>
    <property type="resolution" value="1.90 A"/>
    <property type="chains" value="A/B=41-454"/>
</dbReference>
<dbReference type="PDB" id="4DJX">
    <property type="method" value="X-ray"/>
    <property type="resolution" value="1.50 A"/>
    <property type="chains" value="A/B=41-454"/>
</dbReference>
<dbReference type="PDB" id="4DJY">
    <property type="method" value="X-ray"/>
    <property type="resolution" value="1.86 A"/>
    <property type="chains" value="A/B=41-454"/>
</dbReference>
<dbReference type="PDB" id="4DPF">
    <property type="method" value="X-ray"/>
    <property type="resolution" value="1.80 A"/>
    <property type="chains" value="A=57-446"/>
</dbReference>
<dbReference type="PDB" id="4DPI">
    <property type="method" value="X-ray"/>
    <property type="resolution" value="1.90 A"/>
    <property type="chains" value="A=57-446"/>
</dbReference>
<dbReference type="PDB" id="4DUS">
    <property type="method" value="X-ray"/>
    <property type="resolution" value="2.50 A"/>
    <property type="chains" value="A=43-453"/>
</dbReference>
<dbReference type="PDB" id="4DV9">
    <property type="method" value="X-ray"/>
    <property type="resolution" value="2.08 A"/>
    <property type="chains" value="A=43-454"/>
</dbReference>
<dbReference type="PDB" id="4DVF">
    <property type="method" value="X-ray"/>
    <property type="resolution" value="1.80 A"/>
    <property type="chains" value="A/B=43-454"/>
</dbReference>
<dbReference type="PDB" id="4EWO">
    <property type="method" value="X-ray"/>
    <property type="resolution" value="1.80 A"/>
    <property type="chains" value="A=61-446"/>
</dbReference>
<dbReference type="PDB" id="4EXG">
    <property type="method" value="X-ray"/>
    <property type="resolution" value="1.80 A"/>
    <property type="chains" value="A=61-446"/>
</dbReference>
<dbReference type="PDB" id="4FCO">
    <property type="method" value="X-ray"/>
    <property type="resolution" value="1.76 A"/>
    <property type="chains" value="A=43-454"/>
</dbReference>
<dbReference type="PDB" id="4FGX">
    <property type="method" value="X-ray"/>
    <property type="resolution" value="1.59 A"/>
    <property type="chains" value="A=43-454"/>
</dbReference>
<dbReference type="PDB" id="4FM7">
    <property type="method" value="X-ray"/>
    <property type="resolution" value="1.56 A"/>
    <property type="chains" value="A=58-453"/>
</dbReference>
<dbReference type="PDB" id="4FM8">
    <property type="method" value="X-ray"/>
    <property type="resolution" value="1.90 A"/>
    <property type="chains" value="A=58-453"/>
</dbReference>
<dbReference type="PDB" id="4FRI">
    <property type="method" value="X-ray"/>
    <property type="resolution" value="2.30 A"/>
    <property type="chains" value="A=43-453"/>
</dbReference>
<dbReference type="PDB" id="4FRJ">
    <property type="method" value="X-ray"/>
    <property type="resolution" value="1.95 A"/>
    <property type="chains" value="A=43-453"/>
</dbReference>
<dbReference type="PDB" id="4FRK">
    <property type="method" value="X-ray"/>
    <property type="resolution" value="2.10 A"/>
    <property type="chains" value="A=43-453"/>
</dbReference>
<dbReference type="PDB" id="4FRS">
    <property type="method" value="X-ray"/>
    <property type="resolution" value="1.70 A"/>
    <property type="chains" value="A/B=53-447"/>
</dbReference>
<dbReference type="PDB" id="4FS4">
    <property type="method" value="X-ray"/>
    <property type="resolution" value="1.74 A"/>
    <property type="chains" value="A/B=58-447"/>
</dbReference>
<dbReference type="PDB" id="4FSE">
    <property type="method" value="X-ray"/>
    <property type="resolution" value="2.65 A"/>
    <property type="chains" value="A/B/D/E=14-454"/>
</dbReference>
<dbReference type="PDB" id="4FSL">
    <property type="method" value="X-ray"/>
    <property type="resolution" value="2.50 A"/>
    <property type="chains" value="A/B/D/E=43-453"/>
</dbReference>
<dbReference type="PDB" id="4GID">
    <property type="method" value="X-ray"/>
    <property type="resolution" value="2.00 A"/>
    <property type="chains" value="A/B/C/D=59-446"/>
</dbReference>
<dbReference type="PDB" id="4GMI">
    <property type="method" value="X-ray"/>
    <property type="resolution" value="1.80 A"/>
    <property type="chains" value="A=57-446"/>
</dbReference>
<dbReference type="PDB" id="4H1E">
    <property type="method" value="X-ray"/>
    <property type="resolution" value="1.90 A"/>
    <property type="chains" value="A/B=41-454"/>
</dbReference>
<dbReference type="PDB" id="4H3F">
    <property type="method" value="X-ray"/>
    <property type="resolution" value="1.70 A"/>
    <property type="chains" value="A/B=41-454"/>
</dbReference>
<dbReference type="PDB" id="4H3G">
    <property type="method" value="X-ray"/>
    <property type="resolution" value="1.85 A"/>
    <property type="chains" value="A/B=41-454"/>
</dbReference>
<dbReference type="PDB" id="4H3I">
    <property type="method" value="X-ray"/>
    <property type="resolution" value="1.96 A"/>
    <property type="chains" value="A/B=41-454"/>
</dbReference>
<dbReference type="PDB" id="4H3J">
    <property type="method" value="X-ray"/>
    <property type="resolution" value="1.60 A"/>
    <property type="chains" value="A/B=41-454"/>
</dbReference>
<dbReference type="PDB" id="4HA5">
    <property type="method" value="X-ray"/>
    <property type="resolution" value="1.83 A"/>
    <property type="chains" value="A/B=41-454"/>
</dbReference>
<dbReference type="PDB" id="4HZT">
    <property type="method" value="X-ray"/>
    <property type="resolution" value="1.80 A"/>
    <property type="chains" value="A=57-453"/>
</dbReference>
<dbReference type="PDB" id="4I0D">
    <property type="method" value="X-ray"/>
    <property type="resolution" value="1.91 A"/>
    <property type="chains" value="A=57-453"/>
</dbReference>
<dbReference type="PDB" id="4I0E">
    <property type="method" value="X-ray"/>
    <property type="resolution" value="1.70 A"/>
    <property type="chains" value="A=57-453"/>
</dbReference>
<dbReference type="PDB" id="4I0F">
    <property type="method" value="X-ray"/>
    <property type="resolution" value="1.80 A"/>
    <property type="chains" value="A=57-453"/>
</dbReference>
<dbReference type="PDB" id="4I0G">
    <property type="method" value="X-ray"/>
    <property type="resolution" value="1.78 A"/>
    <property type="chains" value="A=57-453"/>
</dbReference>
<dbReference type="PDB" id="4I0H">
    <property type="method" value="X-ray"/>
    <property type="resolution" value="2.20 A"/>
    <property type="chains" value="A/B/C=57-453"/>
</dbReference>
<dbReference type="PDB" id="4I0I">
    <property type="method" value="X-ray"/>
    <property type="resolution" value="2.20 A"/>
    <property type="chains" value="A/B/C=57-453"/>
</dbReference>
<dbReference type="PDB" id="4I0J">
    <property type="method" value="X-ray"/>
    <property type="resolution" value="1.99 A"/>
    <property type="chains" value="A=57-453"/>
</dbReference>
<dbReference type="PDB" id="4I0Z">
    <property type="method" value="X-ray"/>
    <property type="resolution" value="1.80 A"/>
    <property type="chains" value="A=57-453"/>
</dbReference>
<dbReference type="PDB" id="4I10">
    <property type="method" value="X-ray"/>
    <property type="resolution" value="2.07 A"/>
    <property type="chains" value="A=57-453"/>
</dbReference>
<dbReference type="PDB" id="4I11">
    <property type="method" value="X-ray"/>
    <property type="resolution" value="1.89 A"/>
    <property type="chains" value="A=57-453"/>
</dbReference>
<dbReference type="PDB" id="4I12">
    <property type="method" value="X-ray"/>
    <property type="resolution" value="1.78 A"/>
    <property type="chains" value="A=57-453"/>
</dbReference>
<dbReference type="PDB" id="4I1C">
    <property type="method" value="X-ray"/>
    <property type="resolution" value="2.00 A"/>
    <property type="chains" value="A=57-453"/>
</dbReference>
<dbReference type="PDB" id="4IVS">
    <property type="method" value="X-ray"/>
    <property type="resolution" value="2.64 A"/>
    <property type="chains" value="A=43-454"/>
</dbReference>
<dbReference type="PDB" id="4IVT">
    <property type="method" value="X-ray"/>
    <property type="resolution" value="1.60 A"/>
    <property type="chains" value="A=43-454"/>
</dbReference>
<dbReference type="PDB" id="4J0P">
    <property type="method" value="X-ray"/>
    <property type="resolution" value="1.97 A"/>
    <property type="chains" value="A=46-454"/>
</dbReference>
<dbReference type="PDB" id="4J0T">
    <property type="method" value="X-ray"/>
    <property type="resolution" value="2.05 A"/>
    <property type="chains" value="A=46-454"/>
</dbReference>
<dbReference type="PDB" id="4J0V">
    <property type="method" value="X-ray"/>
    <property type="resolution" value="1.94 A"/>
    <property type="chains" value="A=46-454"/>
</dbReference>
<dbReference type="PDB" id="4J0Y">
    <property type="method" value="X-ray"/>
    <property type="resolution" value="1.77 A"/>
    <property type="chains" value="A=46-454"/>
</dbReference>
<dbReference type="PDB" id="4J0Z">
    <property type="method" value="X-ray"/>
    <property type="resolution" value="2.13 A"/>
    <property type="chains" value="A=46-454"/>
</dbReference>
<dbReference type="PDB" id="4J17">
    <property type="method" value="X-ray"/>
    <property type="resolution" value="1.81 A"/>
    <property type="chains" value="A=46-454"/>
</dbReference>
<dbReference type="PDB" id="4J1C">
    <property type="method" value="X-ray"/>
    <property type="resolution" value="2.01 A"/>
    <property type="chains" value="A=46-454"/>
</dbReference>
<dbReference type="PDB" id="4J1E">
    <property type="method" value="X-ray"/>
    <property type="resolution" value="1.78 A"/>
    <property type="chains" value="A=46-454"/>
</dbReference>
<dbReference type="PDB" id="4J1F">
    <property type="method" value="X-ray"/>
    <property type="resolution" value="2.25 A"/>
    <property type="chains" value="A=46-454"/>
</dbReference>
<dbReference type="PDB" id="4J1H">
    <property type="method" value="X-ray"/>
    <property type="resolution" value="2.20 A"/>
    <property type="chains" value="A=46-454"/>
</dbReference>
<dbReference type="PDB" id="4J1I">
    <property type="method" value="X-ray"/>
    <property type="resolution" value="2.05 A"/>
    <property type="chains" value="A=46-454"/>
</dbReference>
<dbReference type="PDB" id="4J1K">
    <property type="method" value="X-ray"/>
    <property type="resolution" value="2.18 A"/>
    <property type="chains" value="A=46-454"/>
</dbReference>
<dbReference type="PDB" id="4JOO">
    <property type="method" value="X-ray"/>
    <property type="resolution" value="1.80 A"/>
    <property type="chains" value="A=57-453"/>
</dbReference>
<dbReference type="PDB" id="4JP9">
    <property type="method" value="X-ray"/>
    <property type="resolution" value="1.80 A"/>
    <property type="chains" value="A=57-453"/>
</dbReference>
<dbReference type="PDB" id="4JPC">
    <property type="method" value="X-ray"/>
    <property type="resolution" value="1.80 A"/>
    <property type="chains" value="A=57-453"/>
</dbReference>
<dbReference type="PDB" id="4JPE">
    <property type="method" value="X-ray"/>
    <property type="resolution" value="1.80 A"/>
    <property type="chains" value="A=57-453"/>
</dbReference>
<dbReference type="PDB" id="4K8S">
    <property type="method" value="X-ray"/>
    <property type="resolution" value="2.39 A"/>
    <property type="chains" value="A/B/C=59-446"/>
</dbReference>
<dbReference type="PDB" id="4K9H">
    <property type="method" value="X-ray"/>
    <property type="resolution" value="2.29 A"/>
    <property type="chains" value="A/B/C=59-446"/>
</dbReference>
<dbReference type="PDB" id="4KE0">
    <property type="method" value="X-ray"/>
    <property type="resolution" value="2.30 A"/>
    <property type="chains" value="A/B/C=43-453"/>
</dbReference>
<dbReference type="PDB" id="4KE1">
    <property type="method" value="X-ray"/>
    <property type="resolution" value="1.91 A"/>
    <property type="chains" value="A=43-453"/>
</dbReference>
<dbReference type="PDB" id="4L7G">
    <property type="method" value="X-ray"/>
    <property type="resolution" value="1.38 A"/>
    <property type="chains" value="A=57-453"/>
</dbReference>
<dbReference type="PDB" id="4L7H">
    <property type="method" value="X-ray"/>
    <property type="resolution" value="1.85 A"/>
    <property type="chains" value="A=57-453"/>
</dbReference>
<dbReference type="PDB" id="4L7J">
    <property type="method" value="X-ray"/>
    <property type="resolution" value="1.65 A"/>
    <property type="chains" value="A=57-453"/>
</dbReference>
<dbReference type="PDB" id="4LC7">
    <property type="method" value="X-ray"/>
    <property type="resolution" value="1.70 A"/>
    <property type="chains" value="A=57-453"/>
</dbReference>
<dbReference type="PDB" id="4LXA">
    <property type="method" value="X-ray"/>
    <property type="resolution" value="1.95 A"/>
    <property type="chains" value="A/B/C=48-447"/>
</dbReference>
<dbReference type="PDB" id="4LXK">
    <property type="method" value="X-ray"/>
    <property type="resolution" value="2.05 A"/>
    <property type="chains" value="A/B/C=48-447"/>
</dbReference>
<dbReference type="PDB" id="4LXM">
    <property type="method" value="X-ray"/>
    <property type="resolution" value="2.30 A"/>
    <property type="chains" value="A/B/C=48-447"/>
</dbReference>
<dbReference type="PDB" id="4N00">
    <property type="method" value="X-ray"/>
    <property type="resolution" value="1.80 A"/>
    <property type="chains" value="A=57-453"/>
</dbReference>
<dbReference type="PDB" id="4PZW">
    <property type="method" value="X-ray"/>
    <property type="resolution" value="1.80 A"/>
    <property type="chains" value="A=57-453"/>
</dbReference>
<dbReference type="PDB" id="4PZX">
    <property type="method" value="X-ray"/>
    <property type="resolution" value="1.80 A"/>
    <property type="chains" value="A=57-453"/>
</dbReference>
<dbReference type="PDB" id="4R5N">
    <property type="method" value="X-ray"/>
    <property type="resolution" value="1.80 A"/>
    <property type="chains" value="A=57-453"/>
</dbReference>
<dbReference type="PDB" id="4R8Y">
    <property type="method" value="X-ray"/>
    <property type="resolution" value="1.90 A"/>
    <property type="chains" value="A/B=41-454"/>
</dbReference>
<dbReference type="PDB" id="4R91">
    <property type="method" value="X-ray"/>
    <property type="resolution" value="1.58 A"/>
    <property type="chains" value="A/B=41-454"/>
</dbReference>
<dbReference type="PDB" id="4R92">
    <property type="method" value="X-ray"/>
    <property type="resolution" value="1.71 A"/>
    <property type="chains" value="A/B=41-454"/>
</dbReference>
<dbReference type="PDB" id="4R93">
    <property type="method" value="X-ray"/>
    <property type="resolution" value="1.71 A"/>
    <property type="chains" value="A/B=41-454"/>
</dbReference>
<dbReference type="PDB" id="4R95">
    <property type="method" value="X-ray"/>
    <property type="resolution" value="1.99 A"/>
    <property type="chains" value="A/B=41-454"/>
</dbReference>
<dbReference type="PDB" id="4RCD">
    <property type="method" value="X-ray"/>
    <property type="resolution" value="1.90 A"/>
    <property type="chains" value="A=43-453"/>
</dbReference>
<dbReference type="PDB" id="4RCE">
    <property type="method" value="X-ray"/>
    <property type="resolution" value="2.40 A"/>
    <property type="chains" value="A=43-453"/>
</dbReference>
<dbReference type="PDB" id="4RCF">
    <property type="method" value="X-ray"/>
    <property type="resolution" value="1.78 A"/>
    <property type="chains" value="A=43-453"/>
</dbReference>
<dbReference type="PDB" id="4RRN">
    <property type="method" value="X-ray"/>
    <property type="resolution" value="1.80 A"/>
    <property type="chains" value="A=57-453"/>
</dbReference>
<dbReference type="PDB" id="4RRO">
    <property type="method" value="X-ray"/>
    <property type="resolution" value="1.80 A"/>
    <property type="chains" value="A=57-453"/>
</dbReference>
<dbReference type="PDB" id="4RRS">
    <property type="method" value="X-ray"/>
    <property type="resolution" value="1.80 A"/>
    <property type="chains" value="A=57-453"/>
</dbReference>
<dbReference type="PDB" id="4TRW">
    <property type="method" value="X-ray"/>
    <property type="resolution" value="2.85 A"/>
    <property type="chains" value="A/B/C=58-447"/>
</dbReference>
<dbReference type="PDB" id="4TRY">
    <property type="method" value="X-ray"/>
    <property type="resolution" value="2.75 A"/>
    <property type="chains" value="A/B/C=60-447"/>
</dbReference>
<dbReference type="PDB" id="4TRZ">
    <property type="method" value="X-ray"/>
    <property type="resolution" value="3.25 A"/>
    <property type="chains" value="A/B/C=60-447"/>
</dbReference>
<dbReference type="PDB" id="4WTU">
    <property type="method" value="X-ray"/>
    <property type="resolution" value="1.85 A"/>
    <property type="chains" value="A=43-453"/>
</dbReference>
<dbReference type="PDB" id="4WY1">
    <property type="method" value="X-ray"/>
    <property type="resolution" value="1.98 A"/>
    <property type="chains" value="A=58-453"/>
</dbReference>
<dbReference type="PDB" id="4WY6">
    <property type="method" value="X-ray"/>
    <property type="resolution" value="2.10 A"/>
    <property type="chains" value="A=46-454"/>
</dbReference>
<dbReference type="PDB" id="4X2L">
    <property type="method" value="X-ray"/>
    <property type="resolution" value="2.55 A"/>
    <property type="chains" value="A=46-454"/>
</dbReference>
<dbReference type="PDB" id="4X7I">
    <property type="method" value="X-ray"/>
    <property type="resolution" value="1.77 A"/>
    <property type="chains" value="A/B=14-454"/>
</dbReference>
<dbReference type="PDB" id="4XKX">
    <property type="method" value="X-ray"/>
    <property type="resolution" value="1.80 A"/>
    <property type="chains" value="A=43-453"/>
</dbReference>
<dbReference type="PDB" id="4XXS">
    <property type="method" value="X-ray"/>
    <property type="resolution" value="1.86 A"/>
    <property type="chains" value="A=46-454"/>
</dbReference>
<dbReference type="PDB" id="4YBI">
    <property type="method" value="X-ray"/>
    <property type="resolution" value="1.84 A"/>
    <property type="chains" value="A/B=14-454"/>
</dbReference>
<dbReference type="PDB" id="4ZPE">
    <property type="method" value="X-ray"/>
    <property type="resolution" value="1.70 A"/>
    <property type="chains" value="A=43-446"/>
</dbReference>
<dbReference type="PDB" id="4ZPF">
    <property type="method" value="X-ray"/>
    <property type="resolution" value="1.80 A"/>
    <property type="chains" value="A=43-446"/>
</dbReference>
<dbReference type="PDB" id="4ZPG">
    <property type="method" value="X-ray"/>
    <property type="resolution" value="2.00 A"/>
    <property type="chains" value="A=43-446"/>
</dbReference>
<dbReference type="PDB" id="4ZSM">
    <property type="method" value="X-ray"/>
    <property type="resolution" value="1.96 A"/>
    <property type="chains" value="A/B=14-454"/>
</dbReference>
<dbReference type="PDB" id="4ZSP">
    <property type="method" value="X-ray"/>
    <property type="resolution" value="1.91 A"/>
    <property type="chains" value="A/B=14-454"/>
</dbReference>
<dbReference type="PDB" id="4ZSQ">
    <property type="method" value="X-ray"/>
    <property type="resolution" value="2.30 A"/>
    <property type="chains" value="A/B=14-454"/>
</dbReference>
<dbReference type="PDB" id="4ZSR">
    <property type="method" value="X-ray"/>
    <property type="resolution" value="1.65 A"/>
    <property type="chains" value="A/B=14-454"/>
</dbReference>
<dbReference type="PDB" id="5CLM">
    <property type="method" value="X-ray"/>
    <property type="resolution" value="2.61 A"/>
    <property type="chains" value="A=46-446"/>
</dbReference>
<dbReference type="PDB" id="5DQC">
    <property type="method" value="X-ray"/>
    <property type="resolution" value="2.47 A"/>
    <property type="chains" value="A/B/C=58-447"/>
</dbReference>
<dbReference type="PDB" id="5ENK">
    <property type="method" value="X-ray"/>
    <property type="resolution" value="2.11 A"/>
    <property type="chains" value="A=14-454"/>
</dbReference>
<dbReference type="PDB" id="5ENM">
    <property type="method" value="X-ray"/>
    <property type="resolution" value="1.98 A"/>
    <property type="chains" value="A=14-454"/>
</dbReference>
<dbReference type="PDB" id="5EZX">
    <property type="method" value="X-ray"/>
    <property type="resolution" value="1.90 A"/>
    <property type="chains" value="A=57-446"/>
</dbReference>
<dbReference type="PDB" id="5EZZ">
    <property type="method" value="X-ray"/>
    <property type="resolution" value="2.10 A"/>
    <property type="chains" value="A=57-446"/>
</dbReference>
<dbReference type="PDB" id="5F00">
    <property type="method" value="X-ray"/>
    <property type="resolution" value="1.95 A"/>
    <property type="chains" value="A=57-446"/>
</dbReference>
<dbReference type="PDB" id="5F01">
    <property type="method" value="X-ray"/>
    <property type="resolution" value="1.52 A"/>
    <property type="chains" value="A=57-446"/>
</dbReference>
<dbReference type="PDB" id="5HD0">
    <property type="method" value="X-ray"/>
    <property type="resolution" value="1.65 A"/>
    <property type="chains" value="A/B=41-454"/>
</dbReference>
<dbReference type="PDB" id="5HDU">
    <property type="method" value="X-ray"/>
    <property type="resolution" value="1.58 A"/>
    <property type="chains" value="A/B=41-454"/>
</dbReference>
<dbReference type="PDB" id="5HDV">
    <property type="method" value="X-ray"/>
    <property type="resolution" value="1.71 A"/>
    <property type="chains" value="A/B=41-454"/>
</dbReference>
<dbReference type="PDB" id="5HDX">
    <property type="method" value="X-ray"/>
    <property type="resolution" value="1.60 A"/>
    <property type="chains" value="A/B=41-454"/>
</dbReference>
<dbReference type="PDB" id="5HDZ">
    <property type="method" value="X-ray"/>
    <property type="resolution" value="1.49 A"/>
    <property type="chains" value="A/B=41-454"/>
</dbReference>
<dbReference type="PDB" id="5HE4">
    <property type="method" value="X-ray"/>
    <property type="resolution" value="1.53 A"/>
    <property type="chains" value="A/B=41-454"/>
</dbReference>
<dbReference type="PDB" id="5HE5">
    <property type="method" value="X-ray"/>
    <property type="resolution" value="1.55 A"/>
    <property type="chains" value="A/B=41-454"/>
</dbReference>
<dbReference type="PDB" id="5HE7">
    <property type="method" value="X-ray"/>
    <property type="resolution" value="1.71 A"/>
    <property type="chains" value="A/B=41-454"/>
</dbReference>
<dbReference type="PDB" id="5HTZ">
    <property type="method" value="X-ray"/>
    <property type="resolution" value="1.95 A"/>
    <property type="chains" value="A/B=43-454"/>
</dbReference>
<dbReference type="PDB" id="5HU0">
    <property type="method" value="X-ray"/>
    <property type="resolution" value="1.83 A"/>
    <property type="chains" value="A/B=43-454"/>
</dbReference>
<dbReference type="PDB" id="5HU1">
    <property type="method" value="X-ray"/>
    <property type="resolution" value="1.50 A"/>
    <property type="chains" value="A/B=43-454"/>
</dbReference>
<dbReference type="PDB" id="5I3V">
    <property type="method" value="X-ray"/>
    <property type="resolution" value="1.62 A"/>
    <property type="chains" value="A=43-453"/>
</dbReference>
<dbReference type="PDB" id="5I3W">
    <property type="method" value="X-ray"/>
    <property type="resolution" value="2.15 A"/>
    <property type="chains" value="A=43-453"/>
</dbReference>
<dbReference type="PDB" id="5I3X">
    <property type="method" value="X-ray"/>
    <property type="resolution" value="1.85 A"/>
    <property type="chains" value="A=43-453"/>
</dbReference>
<dbReference type="PDB" id="5I3Y">
    <property type="method" value="X-ray"/>
    <property type="resolution" value="2.15 A"/>
    <property type="chains" value="A=43-453"/>
</dbReference>
<dbReference type="PDB" id="5IE1">
    <property type="method" value="X-ray"/>
    <property type="resolution" value="2.30 A"/>
    <property type="chains" value="A=43-453"/>
</dbReference>
<dbReference type="PDB" id="5KQF">
    <property type="method" value="X-ray"/>
    <property type="resolution" value="1.98 A"/>
    <property type="chains" value="A=14-454"/>
</dbReference>
<dbReference type="PDB" id="5KR8">
    <property type="method" value="X-ray"/>
    <property type="resolution" value="2.12 A"/>
    <property type="chains" value="A=14-454"/>
</dbReference>
<dbReference type="PDB" id="5MBW">
    <property type="method" value="X-ray"/>
    <property type="resolution" value="2.95 A"/>
    <property type="chains" value="A=46-454"/>
</dbReference>
<dbReference type="PDB" id="5MCO">
    <property type="method" value="X-ray"/>
    <property type="resolution" value="2.49 A"/>
    <property type="chains" value="A=46-454"/>
</dbReference>
<dbReference type="PDB" id="5MCQ">
    <property type="method" value="X-ray"/>
    <property type="resolution" value="1.82 A"/>
    <property type="chains" value="A=46-454"/>
</dbReference>
<dbReference type="PDB" id="5MXD">
    <property type="method" value="X-ray"/>
    <property type="resolution" value="2.52 A"/>
    <property type="chains" value="A/B/C=22-446"/>
</dbReference>
<dbReference type="PDB" id="5QCO">
    <property type="method" value="X-ray"/>
    <property type="resolution" value="2.70 A"/>
    <property type="chains" value="A/B/C=48-447"/>
</dbReference>
<dbReference type="PDB" id="5QCP">
    <property type="method" value="X-ray"/>
    <property type="resolution" value="2.45 A"/>
    <property type="chains" value="A/B/C=48-447"/>
</dbReference>
<dbReference type="PDB" id="5QCQ">
    <property type="method" value="X-ray"/>
    <property type="resolution" value="1.97 A"/>
    <property type="chains" value="A/B/C=48-447"/>
</dbReference>
<dbReference type="PDB" id="5QCR">
    <property type="method" value="X-ray"/>
    <property type="resolution" value="2.20 A"/>
    <property type="chains" value="A/B/C=48-447"/>
</dbReference>
<dbReference type="PDB" id="5QCS">
    <property type="method" value="X-ray"/>
    <property type="resolution" value="2.31 A"/>
    <property type="chains" value="A/B/C=48-447"/>
</dbReference>
<dbReference type="PDB" id="5QCT">
    <property type="method" value="X-ray"/>
    <property type="resolution" value="2.05 A"/>
    <property type="chains" value="A/B/C=48-447"/>
</dbReference>
<dbReference type="PDB" id="5QCU">
    <property type="method" value="X-ray"/>
    <property type="resolution" value="1.95 A"/>
    <property type="chains" value="A/B/C=48-447"/>
</dbReference>
<dbReference type="PDB" id="5QCV">
    <property type="method" value="X-ray"/>
    <property type="resolution" value="2.25 A"/>
    <property type="chains" value="A/B/C=48-447"/>
</dbReference>
<dbReference type="PDB" id="5QCW">
    <property type="method" value="X-ray"/>
    <property type="resolution" value="2.10 A"/>
    <property type="chains" value="A/B/C=48-447"/>
</dbReference>
<dbReference type="PDB" id="5QCX">
    <property type="method" value="X-ray"/>
    <property type="resolution" value="2.20 A"/>
    <property type="chains" value="A/B/C=48-447"/>
</dbReference>
<dbReference type="PDB" id="5QCY">
    <property type="method" value="X-ray"/>
    <property type="resolution" value="2.15 A"/>
    <property type="chains" value="A/B/C=48-447"/>
</dbReference>
<dbReference type="PDB" id="5QCZ">
    <property type="method" value="X-ray"/>
    <property type="resolution" value="2.30 A"/>
    <property type="chains" value="A/B/C=48-447"/>
</dbReference>
<dbReference type="PDB" id="5QD0">
    <property type="method" value="X-ray"/>
    <property type="resolution" value="2.60 A"/>
    <property type="chains" value="A/B/C=48-447"/>
</dbReference>
<dbReference type="PDB" id="5QD1">
    <property type="method" value="X-ray"/>
    <property type="resolution" value="2.40 A"/>
    <property type="chains" value="A/B/C=48-447"/>
</dbReference>
<dbReference type="PDB" id="5QD2">
    <property type="method" value="X-ray"/>
    <property type="resolution" value="2.50 A"/>
    <property type="chains" value="A/B/C=48-447"/>
</dbReference>
<dbReference type="PDB" id="5QD3">
    <property type="method" value="X-ray"/>
    <property type="resolution" value="2.46 A"/>
    <property type="chains" value="A/B/C=48-447"/>
</dbReference>
<dbReference type="PDB" id="5QD4">
    <property type="method" value="X-ray"/>
    <property type="resolution" value="2.11 A"/>
    <property type="chains" value="A/B/C=48-447"/>
</dbReference>
<dbReference type="PDB" id="5QD5">
    <property type="method" value="X-ray"/>
    <property type="resolution" value="2.30 A"/>
    <property type="chains" value="A/B/C=48-447"/>
</dbReference>
<dbReference type="PDB" id="5QD6">
    <property type="method" value="X-ray"/>
    <property type="resolution" value="2.51 A"/>
    <property type="chains" value="A/B/C=48-447"/>
</dbReference>
<dbReference type="PDB" id="5QD7">
    <property type="method" value="X-ray"/>
    <property type="resolution" value="2.12 A"/>
    <property type="chains" value="A/B/C=48-447"/>
</dbReference>
<dbReference type="PDB" id="5QD8">
    <property type="method" value="X-ray"/>
    <property type="resolution" value="2.45 A"/>
    <property type="chains" value="A/B/C=48-447"/>
</dbReference>
<dbReference type="PDB" id="5QD9">
    <property type="method" value="X-ray"/>
    <property type="resolution" value="2.60 A"/>
    <property type="chains" value="A/B/C=48-447"/>
</dbReference>
<dbReference type="PDB" id="5QDA">
    <property type="method" value="X-ray"/>
    <property type="resolution" value="2.10 A"/>
    <property type="chains" value="A/B/C=48-447"/>
</dbReference>
<dbReference type="PDB" id="5QDB">
    <property type="method" value="X-ray"/>
    <property type="resolution" value="2.10 A"/>
    <property type="chains" value="A/B/C=48-447"/>
</dbReference>
<dbReference type="PDB" id="5QDC">
    <property type="method" value="X-ray"/>
    <property type="resolution" value="2.10 A"/>
    <property type="chains" value="A/B/C=48-447"/>
</dbReference>
<dbReference type="PDB" id="5QDD">
    <property type="method" value="X-ray"/>
    <property type="resolution" value="2.00 A"/>
    <property type="chains" value="A/B/C=48-447"/>
</dbReference>
<dbReference type="PDB" id="5T1U">
    <property type="method" value="X-ray"/>
    <property type="resolution" value="1.78 A"/>
    <property type="chains" value="A=46-454"/>
</dbReference>
<dbReference type="PDB" id="5T1W">
    <property type="method" value="X-ray"/>
    <property type="resolution" value="2.96 A"/>
    <property type="chains" value="A=46-454"/>
</dbReference>
<dbReference type="PDB" id="5TOL">
    <property type="method" value="X-ray"/>
    <property type="resolution" value="2.51 A"/>
    <property type="chains" value="A=43-454"/>
</dbReference>
<dbReference type="PDB" id="5UYU">
    <property type="method" value="X-ray"/>
    <property type="resolution" value="1.90 A"/>
    <property type="chains" value="A=43-453"/>
</dbReference>
<dbReference type="PDB" id="5V0N">
    <property type="method" value="X-ray"/>
    <property type="resolution" value="2.15 A"/>
    <property type="chains" value="A/B/C=14-454"/>
</dbReference>
<dbReference type="PDB" id="5YGX">
    <property type="method" value="X-ray"/>
    <property type="resolution" value="2.20 A"/>
    <property type="chains" value="A=43-454"/>
</dbReference>
<dbReference type="PDB" id="5YGY">
    <property type="method" value="X-ray"/>
    <property type="resolution" value="2.30 A"/>
    <property type="chains" value="A=43-454"/>
</dbReference>
<dbReference type="PDB" id="6BFD">
    <property type="method" value="X-ray"/>
    <property type="resolution" value="1.62 A"/>
    <property type="chains" value="A/B=14-454"/>
</dbReference>
<dbReference type="PDB" id="6BFE">
    <property type="method" value="X-ray"/>
    <property type="resolution" value="1.51 A"/>
    <property type="chains" value="A/B=14-454"/>
</dbReference>
<dbReference type="PDB" id="6BFW">
    <property type="method" value="X-ray"/>
    <property type="resolution" value="1.84 A"/>
    <property type="chains" value="A/B=14-454"/>
</dbReference>
<dbReference type="PDB" id="6BFX">
    <property type="method" value="X-ray"/>
    <property type="resolution" value="1.99 A"/>
    <property type="chains" value="A/B=14-454"/>
</dbReference>
<dbReference type="PDB" id="6C2I">
    <property type="method" value="X-ray"/>
    <property type="resolution" value="1.95 A"/>
    <property type="chains" value="A=43-453"/>
</dbReference>
<dbReference type="PDB" id="6DHC">
    <property type="method" value="X-ray"/>
    <property type="resolution" value="2.85 A"/>
    <property type="chains" value="A/B/C=14-454"/>
</dbReference>
<dbReference type="PDB" id="6DMI">
    <property type="method" value="X-ray"/>
    <property type="resolution" value="1.90 A"/>
    <property type="chains" value="A=57-446"/>
</dbReference>
<dbReference type="PDB" id="6E3Z">
    <property type="method" value="X-ray"/>
    <property type="resolution" value="1.94 A"/>
    <property type="chains" value="A/B/C=22-446"/>
</dbReference>
<dbReference type="PDB" id="6EJ2">
    <property type="method" value="X-ray"/>
    <property type="resolution" value="1.46 A"/>
    <property type="chains" value="A=1-501"/>
</dbReference>
<dbReference type="PDB" id="6EJ3">
    <property type="method" value="X-ray"/>
    <property type="resolution" value="1.94 A"/>
    <property type="chains" value="A=1-501"/>
</dbReference>
<dbReference type="PDB" id="6EQM">
    <property type="method" value="X-ray"/>
    <property type="resolution" value="1.35 A"/>
    <property type="chains" value="A=48-447"/>
</dbReference>
<dbReference type="PDB" id="6FGY">
    <property type="method" value="X-ray"/>
    <property type="resolution" value="1.54 A"/>
    <property type="chains" value="A=60-453"/>
</dbReference>
<dbReference type="PDB" id="6JSE">
    <property type="method" value="X-ray"/>
    <property type="resolution" value="2.00 A"/>
    <property type="chains" value="A=43-454"/>
</dbReference>
<dbReference type="PDB" id="6JSF">
    <property type="method" value="X-ray"/>
    <property type="resolution" value="2.30 A"/>
    <property type="chains" value="A=43-454"/>
</dbReference>
<dbReference type="PDB" id="6JSG">
    <property type="method" value="X-ray"/>
    <property type="resolution" value="2.30 A"/>
    <property type="chains" value="A=43-454"/>
</dbReference>
<dbReference type="PDB" id="6JSN">
    <property type="method" value="X-ray"/>
    <property type="resolution" value="2.60 A"/>
    <property type="chains" value="A=43-454"/>
</dbReference>
<dbReference type="PDB" id="6JT3">
    <property type="method" value="X-ray"/>
    <property type="resolution" value="2.40 A"/>
    <property type="chains" value="A=43-454"/>
</dbReference>
<dbReference type="PDB" id="6JT4">
    <property type="method" value="X-ray"/>
    <property type="resolution" value="2.20 A"/>
    <property type="chains" value="A=43-454"/>
</dbReference>
<dbReference type="PDB" id="6NV7">
    <property type="method" value="X-ray"/>
    <property type="resolution" value="2.13 A"/>
    <property type="chains" value="A/B/C=58-447"/>
</dbReference>
<dbReference type="PDB" id="6NV9">
    <property type="method" value="X-ray"/>
    <property type="resolution" value="2.13 A"/>
    <property type="chains" value="A/B/C=58-447"/>
</dbReference>
<dbReference type="PDB" id="6NW3">
    <property type="method" value="X-ray"/>
    <property type="resolution" value="2.35 A"/>
    <property type="chains" value="A/B/C=58-447"/>
</dbReference>
<dbReference type="PDB" id="6OD6">
    <property type="method" value="X-ray"/>
    <property type="resolution" value="2.00 A"/>
    <property type="chains" value="A/B/C=22-446"/>
</dbReference>
<dbReference type="PDB" id="6PZ4">
    <property type="method" value="X-ray"/>
    <property type="resolution" value="1.85 A"/>
    <property type="chains" value="A=43-453"/>
</dbReference>
<dbReference type="PDB" id="6UVP">
    <property type="method" value="X-ray"/>
    <property type="resolution" value="1.56 A"/>
    <property type="chains" value="A/B=14-454"/>
</dbReference>
<dbReference type="PDB" id="6UVV">
    <property type="method" value="X-ray"/>
    <property type="resolution" value="1.63 A"/>
    <property type="chains" value="A/B=14-454"/>
</dbReference>
<dbReference type="PDB" id="6UVY">
    <property type="method" value="X-ray"/>
    <property type="resolution" value="1.71 A"/>
    <property type="chains" value="A/B=14-454"/>
</dbReference>
<dbReference type="PDB" id="6UWP">
    <property type="method" value="X-ray"/>
    <property type="resolution" value="1.29 A"/>
    <property type="chains" value="A/B=14-454"/>
</dbReference>
<dbReference type="PDB" id="6UWV">
    <property type="method" value="X-ray"/>
    <property type="resolution" value="1.47 A"/>
    <property type="chains" value="A/B=14-454"/>
</dbReference>
<dbReference type="PDB" id="6WNY">
    <property type="method" value="X-ray"/>
    <property type="resolution" value="1.86 A"/>
    <property type="chains" value="A=43-453"/>
</dbReference>
<dbReference type="PDB" id="7B1E">
    <property type="method" value="X-ray"/>
    <property type="resolution" value="1.62 A"/>
    <property type="chains" value="A=48-447"/>
</dbReference>
<dbReference type="PDB" id="7B1P">
    <property type="method" value="X-ray"/>
    <property type="resolution" value="1.77 A"/>
    <property type="chains" value="A=48-447"/>
</dbReference>
<dbReference type="PDB" id="7B1Q">
    <property type="method" value="X-ray"/>
    <property type="resolution" value="1.94 A"/>
    <property type="chains" value="A=48-447"/>
</dbReference>
<dbReference type="PDB" id="7D2V">
    <property type="method" value="X-ray"/>
    <property type="resolution" value="2.10 A"/>
    <property type="chains" value="A=43-454"/>
</dbReference>
<dbReference type="PDB" id="7D2X">
    <property type="method" value="X-ray"/>
    <property type="resolution" value="2.45 A"/>
    <property type="chains" value="A=43-454"/>
</dbReference>
<dbReference type="PDB" id="7D36">
    <property type="method" value="X-ray"/>
    <property type="resolution" value="2.30 A"/>
    <property type="chains" value="A=43-454"/>
</dbReference>
<dbReference type="PDB" id="7D5A">
    <property type="method" value="X-ray"/>
    <property type="resolution" value="2.20 A"/>
    <property type="chains" value="A=43-454"/>
</dbReference>
<dbReference type="PDB" id="7DCZ">
    <property type="method" value="X-ray"/>
    <property type="resolution" value="2.30 A"/>
    <property type="chains" value="A=43-454"/>
</dbReference>
<dbReference type="PDB" id="7F1D">
    <property type="method" value="X-ray"/>
    <property type="resolution" value="2.05 A"/>
    <property type="chains" value="A=43-454"/>
</dbReference>
<dbReference type="PDB" id="7MYI">
    <property type="method" value="X-ray"/>
    <property type="resolution" value="1.25 A"/>
    <property type="chains" value="A/B=14-454"/>
</dbReference>
<dbReference type="PDB" id="7MYR">
    <property type="method" value="X-ray"/>
    <property type="resolution" value="1.72 A"/>
    <property type="chains" value="A/B=14-454"/>
</dbReference>
<dbReference type="PDB" id="7MYU">
    <property type="method" value="X-ray"/>
    <property type="resolution" value="1.94 A"/>
    <property type="chains" value="A/B=14-454"/>
</dbReference>
<dbReference type="PDB" id="7N66">
    <property type="method" value="X-ray"/>
    <property type="resolution" value="2.10 A"/>
    <property type="chains" value="A=43-454"/>
</dbReference>
<dbReference type="PDBsum" id="1FKN"/>
<dbReference type="PDBsum" id="1M4H"/>
<dbReference type="PDBsum" id="1PY1"/>
<dbReference type="PDBsum" id="1SGZ"/>
<dbReference type="PDBsum" id="1TQF"/>
<dbReference type="PDBsum" id="1UJJ"/>
<dbReference type="PDBsum" id="1UJK"/>
<dbReference type="PDBsum" id="1W50"/>
<dbReference type="PDBsum" id="1W51"/>
<dbReference type="PDBsum" id="1XN2"/>
<dbReference type="PDBsum" id="1XN3"/>
<dbReference type="PDBsum" id="1XS7"/>
<dbReference type="PDBsum" id="1YM2"/>
<dbReference type="PDBsum" id="1YM4"/>
<dbReference type="PDBsum" id="2B8L"/>
<dbReference type="PDBsum" id="2B8V"/>
<dbReference type="PDBsum" id="2F3E"/>
<dbReference type="PDBsum" id="2F3F"/>
<dbReference type="PDBsum" id="2FDP"/>
<dbReference type="PDBsum" id="2G94"/>
<dbReference type="PDBsum" id="2HIZ"/>
<dbReference type="PDBsum" id="2HM1"/>
<dbReference type="PDBsum" id="2IQG"/>
<dbReference type="PDBsum" id="2IRZ"/>
<dbReference type="PDBsum" id="2IS0"/>
<dbReference type="PDBsum" id="2NTR"/>
<dbReference type="PDBsum" id="2OAH"/>
<dbReference type="PDBsum" id="2OF0"/>
<dbReference type="PDBsum" id="2OHK"/>
<dbReference type="PDBsum" id="2OHL"/>
<dbReference type="PDBsum" id="2OHM"/>
<dbReference type="PDBsum" id="2OHN"/>
<dbReference type="PDBsum" id="2OHP"/>
<dbReference type="PDBsum" id="2OHQ"/>
<dbReference type="PDBsum" id="2OHR"/>
<dbReference type="PDBsum" id="2OHS"/>
<dbReference type="PDBsum" id="2OHT"/>
<dbReference type="PDBsum" id="2OHU"/>
<dbReference type="PDBsum" id="2P4J"/>
<dbReference type="PDBsum" id="2P83"/>
<dbReference type="PDBsum" id="2P8H"/>
<dbReference type="PDBsum" id="2PH6"/>
<dbReference type="PDBsum" id="2PH8"/>
<dbReference type="PDBsum" id="2Q11"/>
<dbReference type="PDBsum" id="2Q15"/>
<dbReference type="PDBsum" id="2QK5"/>
<dbReference type="PDBsum" id="2QMD"/>
<dbReference type="PDBsum" id="2QMF"/>
<dbReference type="PDBsum" id="2QMG"/>
<dbReference type="PDBsum" id="2QP8"/>
<dbReference type="PDBsum" id="2QU2"/>
<dbReference type="PDBsum" id="2QU3"/>
<dbReference type="PDBsum" id="2QZK"/>
<dbReference type="PDBsum" id="2QZL"/>
<dbReference type="PDBsum" id="2VA5"/>
<dbReference type="PDBsum" id="2VA6"/>
<dbReference type="PDBsum" id="2VA7"/>
<dbReference type="PDBsum" id="2VIE"/>
<dbReference type="PDBsum" id="2VIJ"/>
<dbReference type="PDBsum" id="2VIY"/>
<dbReference type="PDBsum" id="2VIZ"/>
<dbReference type="PDBsum" id="2VJ6"/>
<dbReference type="PDBsum" id="2VJ7"/>
<dbReference type="PDBsum" id="2VJ9"/>
<dbReference type="PDBsum" id="2VKM"/>
<dbReference type="PDBsum" id="2VNM"/>
<dbReference type="PDBsum" id="2VNN"/>
<dbReference type="PDBsum" id="2WEZ"/>
<dbReference type="PDBsum" id="2WF0"/>
<dbReference type="PDBsum" id="2WF1"/>
<dbReference type="PDBsum" id="2WF2"/>
<dbReference type="PDBsum" id="2WF3"/>
<dbReference type="PDBsum" id="2WF4"/>
<dbReference type="PDBsum" id="2WJO"/>
<dbReference type="PDBsum" id="2XFI"/>
<dbReference type="PDBsum" id="2XFJ"/>
<dbReference type="PDBsum" id="2XFK"/>
<dbReference type="PDBsum" id="2ZDZ"/>
<dbReference type="PDBsum" id="2ZE1"/>
<dbReference type="PDBsum" id="2ZHR"/>
<dbReference type="PDBsum" id="2ZHS"/>
<dbReference type="PDBsum" id="2ZHT"/>
<dbReference type="PDBsum" id="2ZHU"/>
<dbReference type="PDBsum" id="2ZHV"/>
<dbReference type="PDBsum" id="2ZJH"/>
<dbReference type="PDBsum" id="2ZJI"/>
<dbReference type="PDBsum" id="2ZJJ"/>
<dbReference type="PDBsum" id="2ZJK"/>
<dbReference type="PDBsum" id="2ZJL"/>
<dbReference type="PDBsum" id="2ZJM"/>
<dbReference type="PDBsum" id="2ZJN"/>
<dbReference type="PDBsum" id="3BRA"/>
<dbReference type="PDBsum" id="3BUF"/>
<dbReference type="PDBsum" id="3BUG"/>
<dbReference type="PDBsum" id="3BUH"/>
<dbReference type="PDBsum" id="3CIB"/>
<dbReference type="PDBsum" id="3CIC"/>
<dbReference type="PDBsum" id="3CID"/>
<dbReference type="PDBsum" id="3CKP"/>
<dbReference type="PDBsum" id="3CKR"/>
<dbReference type="PDBsum" id="3DM6"/>
<dbReference type="PDBsum" id="3DUY"/>
<dbReference type="PDBsum" id="3DV1"/>
<dbReference type="PDBsum" id="3DV5"/>
<dbReference type="PDBsum" id="3EXO"/>
<dbReference type="PDBsum" id="3FKT"/>
<dbReference type="PDBsum" id="3H0B"/>
<dbReference type="PDBsum" id="3HVG"/>
<dbReference type="PDBsum" id="3HW1"/>
<dbReference type="PDBsum" id="3I25"/>
<dbReference type="PDBsum" id="3IGB"/>
<dbReference type="PDBsum" id="3IN3"/>
<dbReference type="PDBsum" id="3IN4"/>
<dbReference type="PDBsum" id="3IND"/>
<dbReference type="PDBsum" id="3INE"/>
<dbReference type="PDBsum" id="3INF"/>
<dbReference type="PDBsum" id="3INH"/>
<dbReference type="PDBsum" id="3IVH"/>
<dbReference type="PDBsum" id="3IVI"/>
<dbReference type="PDBsum" id="3IXJ"/>
<dbReference type="PDBsum" id="3IXK"/>
<dbReference type="PDBsum" id="3K5C"/>
<dbReference type="PDBsum" id="3K5D"/>
<dbReference type="PDBsum" id="3K5F"/>
<dbReference type="PDBsum" id="3K5G"/>
<dbReference type="PDBsum" id="3KMX"/>
<dbReference type="PDBsum" id="3KMY"/>
<dbReference type="PDBsum" id="3KN0"/>
<dbReference type="PDBsum" id="3KYR"/>
<dbReference type="PDBsum" id="3L38"/>
<dbReference type="PDBsum" id="3L3A"/>
<dbReference type="PDBsum" id="3L58"/>
<dbReference type="PDBsum" id="3L59"/>
<dbReference type="PDBsum" id="3L5B"/>
<dbReference type="PDBsum" id="3L5C"/>
<dbReference type="PDBsum" id="3L5D"/>
<dbReference type="PDBsum" id="3L5E"/>
<dbReference type="PDBsum" id="3L5F"/>
<dbReference type="PDBsum" id="3LHG"/>
<dbReference type="PDBsum" id="3LNK"/>
<dbReference type="PDBsum" id="3LPI"/>
<dbReference type="PDBsum" id="3LPJ"/>
<dbReference type="PDBsum" id="3LPK"/>
<dbReference type="PDBsum" id="3MSJ"/>
<dbReference type="PDBsum" id="3MSK"/>
<dbReference type="PDBsum" id="3MSL"/>
<dbReference type="PDBsum" id="3N4L"/>
<dbReference type="PDBsum" id="3NSH"/>
<dbReference type="PDBsum" id="3OHF"/>
<dbReference type="PDBsum" id="3OHH"/>
<dbReference type="PDBsum" id="3OOZ"/>
<dbReference type="PDBsum" id="3PI5"/>
<dbReference type="PDBsum" id="3QBH"/>
<dbReference type="PDBsum" id="3QI1"/>
<dbReference type="PDBsum" id="3R1G"/>
<dbReference type="PDBsum" id="3R2F"/>
<dbReference type="PDBsum" id="3RSV"/>
<dbReference type="PDBsum" id="3RSX"/>
<dbReference type="PDBsum" id="3RTH"/>
<dbReference type="PDBsum" id="3RTM"/>
<dbReference type="PDBsum" id="3RTN"/>
<dbReference type="PDBsum" id="3RU1"/>
<dbReference type="PDBsum" id="3RVI"/>
<dbReference type="PDBsum" id="3S2O"/>
<dbReference type="PDBsum" id="3S7L"/>
<dbReference type="PDBsum" id="3S7M"/>
<dbReference type="PDBsum" id="3SKF"/>
<dbReference type="PDBsum" id="3SKG"/>
<dbReference type="PDBsum" id="3TPJ"/>
<dbReference type="PDBsum" id="3TPL"/>
<dbReference type="PDBsum" id="3TPP"/>
<dbReference type="PDBsum" id="3TPR"/>
<dbReference type="PDBsum" id="3U6A"/>
<dbReference type="PDBsum" id="3UDH"/>
<dbReference type="PDBsum" id="3UDJ"/>
<dbReference type="PDBsum" id="3UDK"/>
<dbReference type="PDBsum" id="3UDM"/>
<dbReference type="PDBsum" id="3UDN"/>
<dbReference type="PDBsum" id="3UDP"/>
<dbReference type="PDBsum" id="3UDQ"/>
<dbReference type="PDBsum" id="3UDR"/>
<dbReference type="PDBsum" id="3UDY"/>
<dbReference type="PDBsum" id="3UFL"/>
<dbReference type="PDBsum" id="3UQP"/>
<dbReference type="PDBsum" id="3UQR"/>
<dbReference type="PDBsum" id="3UQU"/>
<dbReference type="PDBsum" id="3UQW"/>
<dbReference type="PDBsum" id="3UQX"/>
<dbReference type="PDBsum" id="3VEU"/>
<dbReference type="PDBsum" id="3VF3"/>
<dbReference type="PDBsum" id="3VG1"/>
<dbReference type="PDBsum" id="3VV6"/>
<dbReference type="PDBsum" id="3VV7"/>
<dbReference type="PDBsum" id="3VV8"/>
<dbReference type="PDBsum" id="3WB4"/>
<dbReference type="PDBsum" id="3WB5"/>
<dbReference type="PDBsum" id="3ZMG"/>
<dbReference type="PDBsum" id="3ZOV"/>
<dbReference type="PDBsum" id="4ACU"/>
<dbReference type="PDBsum" id="4ACX"/>
<dbReference type="PDBsum" id="4AZY"/>
<dbReference type="PDBsum" id="4B00"/>
<dbReference type="PDBsum" id="4B05"/>
<dbReference type="PDBsum" id="4B0Q"/>
<dbReference type="PDBsum" id="4B1C"/>
<dbReference type="PDBsum" id="4B1D"/>
<dbReference type="PDBsum" id="4B1E"/>
<dbReference type="PDBsum" id="4B70"/>
<dbReference type="PDBsum" id="4B72"/>
<dbReference type="PDBsum" id="4B77"/>
<dbReference type="PDBsum" id="4B78"/>
<dbReference type="PDBsum" id="4BEK"/>
<dbReference type="PDBsum" id="4BFD"/>
<dbReference type="PDBsum" id="4D83"/>
<dbReference type="PDBsum" id="4D85"/>
<dbReference type="PDBsum" id="4D88"/>
<dbReference type="PDBsum" id="4D89"/>
<dbReference type="PDBsum" id="4D8C"/>
<dbReference type="PDBsum" id="4DH6"/>
<dbReference type="PDBsum" id="4DI2"/>
<dbReference type="PDBsum" id="4DJU"/>
<dbReference type="PDBsum" id="4DJV"/>
<dbReference type="PDBsum" id="4DJW"/>
<dbReference type="PDBsum" id="4DJX"/>
<dbReference type="PDBsum" id="4DJY"/>
<dbReference type="PDBsum" id="4DPF"/>
<dbReference type="PDBsum" id="4DPI"/>
<dbReference type="PDBsum" id="4DUS"/>
<dbReference type="PDBsum" id="4DV9"/>
<dbReference type="PDBsum" id="4DVF"/>
<dbReference type="PDBsum" id="4EWO"/>
<dbReference type="PDBsum" id="4EXG"/>
<dbReference type="PDBsum" id="4FCO"/>
<dbReference type="PDBsum" id="4FGX"/>
<dbReference type="PDBsum" id="4FM7"/>
<dbReference type="PDBsum" id="4FM8"/>
<dbReference type="PDBsum" id="4FRI"/>
<dbReference type="PDBsum" id="4FRJ"/>
<dbReference type="PDBsum" id="4FRK"/>
<dbReference type="PDBsum" id="4FRS"/>
<dbReference type="PDBsum" id="4FS4"/>
<dbReference type="PDBsum" id="4FSE"/>
<dbReference type="PDBsum" id="4FSL"/>
<dbReference type="PDBsum" id="4GID"/>
<dbReference type="PDBsum" id="4GMI"/>
<dbReference type="PDBsum" id="4H1E"/>
<dbReference type="PDBsum" id="4H3F"/>
<dbReference type="PDBsum" id="4H3G"/>
<dbReference type="PDBsum" id="4H3I"/>
<dbReference type="PDBsum" id="4H3J"/>
<dbReference type="PDBsum" id="4HA5"/>
<dbReference type="PDBsum" id="4HZT"/>
<dbReference type="PDBsum" id="4I0D"/>
<dbReference type="PDBsum" id="4I0E"/>
<dbReference type="PDBsum" id="4I0F"/>
<dbReference type="PDBsum" id="4I0G"/>
<dbReference type="PDBsum" id="4I0H"/>
<dbReference type="PDBsum" id="4I0I"/>
<dbReference type="PDBsum" id="4I0J"/>
<dbReference type="PDBsum" id="4I0Z"/>
<dbReference type="PDBsum" id="4I10"/>
<dbReference type="PDBsum" id="4I11"/>
<dbReference type="PDBsum" id="4I12"/>
<dbReference type="PDBsum" id="4I1C"/>
<dbReference type="PDBsum" id="4IVS"/>
<dbReference type="PDBsum" id="4IVT"/>
<dbReference type="PDBsum" id="4J0P"/>
<dbReference type="PDBsum" id="4J0T"/>
<dbReference type="PDBsum" id="4J0V"/>
<dbReference type="PDBsum" id="4J0Y"/>
<dbReference type="PDBsum" id="4J0Z"/>
<dbReference type="PDBsum" id="4J17"/>
<dbReference type="PDBsum" id="4J1C"/>
<dbReference type="PDBsum" id="4J1E"/>
<dbReference type="PDBsum" id="4J1F"/>
<dbReference type="PDBsum" id="4J1H"/>
<dbReference type="PDBsum" id="4J1I"/>
<dbReference type="PDBsum" id="4J1K"/>
<dbReference type="PDBsum" id="4JOO"/>
<dbReference type="PDBsum" id="4JP9"/>
<dbReference type="PDBsum" id="4JPC"/>
<dbReference type="PDBsum" id="4JPE"/>
<dbReference type="PDBsum" id="4K8S"/>
<dbReference type="PDBsum" id="4K9H"/>
<dbReference type="PDBsum" id="4KE0"/>
<dbReference type="PDBsum" id="4KE1"/>
<dbReference type="PDBsum" id="4L7G"/>
<dbReference type="PDBsum" id="4L7H"/>
<dbReference type="PDBsum" id="4L7J"/>
<dbReference type="PDBsum" id="4LC7"/>
<dbReference type="PDBsum" id="4LXA"/>
<dbReference type="PDBsum" id="4LXK"/>
<dbReference type="PDBsum" id="4LXM"/>
<dbReference type="PDBsum" id="4N00"/>
<dbReference type="PDBsum" id="4PZW"/>
<dbReference type="PDBsum" id="4PZX"/>
<dbReference type="PDBsum" id="4R5N"/>
<dbReference type="PDBsum" id="4R8Y"/>
<dbReference type="PDBsum" id="4R91"/>
<dbReference type="PDBsum" id="4R92"/>
<dbReference type="PDBsum" id="4R93"/>
<dbReference type="PDBsum" id="4R95"/>
<dbReference type="PDBsum" id="4RCD"/>
<dbReference type="PDBsum" id="4RCE"/>
<dbReference type="PDBsum" id="4RCF"/>
<dbReference type="PDBsum" id="4RRN"/>
<dbReference type="PDBsum" id="4RRO"/>
<dbReference type="PDBsum" id="4RRS"/>
<dbReference type="PDBsum" id="4TRW"/>
<dbReference type="PDBsum" id="4TRY"/>
<dbReference type="PDBsum" id="4TRZ"/>
<dbReference type="PDBsum" id="4WTU"/>
<dbReference type="PDBsum" id="4WY1"/>
<dbReference type="PDBsum" id="4WY6"/>
<dbReference type="PDBsum" id="4X2L"/>
<dbReference type="PDBsum" id="4X7I"/>
<dbReference type="PDBsum" id="4XKX"/>
<dbReference type="PDBsum" id="4XXS"/>
<dbReference type="PDBsum" id="4YBI"/>
<dbReference type="PDBsum" id="4ZPE"/>
<dbReference type="PDBsum" id="4ZPF"/>
<dbReference type="PDBsum" id="4ZPG"/>
<dbReference type="PDBsum" id="4ZSM"/>
<dbReference type="PDBsum" id="4ZSP"/>
<dbReference type="PDBsum" id="4ZSQ"/>
<dbReference type="PDBsum" id="4ZSR"/>
<dbReference type="PDBsum" id="5CLM"/>
<dbReference type="PDBsum" id="5DQC"/>
<dbReference type="PDBsum" id="5ENK"/>
<dbReference type="PDBsum" id="5ENM"/>
<dbReference type="PDBsum" id="5EZX"/>
<dbReference type="PDBsum" id="5EZZ"/>
<dbReference type="PDBsum" id="5F00"/>
<dbReference type="PDBsum" id="5F01"/>
<dbReference type="PDBsum" id="5HD0"/>
<dbReference type="PDBsum" id="5HDU"/>
<dbReference type="PDBsum" id="5HDV"/>
<dbReference type="PDBsum" id="5HDX"/>
<dbReference type="PDBsum" id="5HDZ"/>
<dbReference type="PDBsum" id="5HE4"/>
<dbReference type="PDBsum" id="5HE5"/>
<dbReference type="PDBsum" id="5HE7"/>
<dbReference type="PDBsum" id="5HTZ"/>
<dbReference type="PDBsum" id="5HU0"/>
<dbReference type="PDBsum" id="5HU1"/>
<dbReference type="PDBsum" id="5I3V"/>
<dbReference type="PDBsum" id="5I3W"/>
<dbReference type="PDBsum" id="5I3X"/>
<dbReference type="PDBsum" id="5I3Y"/>
<dbReference type="PDBsum" id="5IE1"/>
<dbReference type="PDBsum" id="5KQF"/>
<dbReference type="PDBsum" id="5KR8"/>
<dbReference type="PDBsum" id="5MBW"/>
<dbReference type="PDBsum" id="5MCO"/>
<dbReference type="PDBsum" id="5MCQ"/>
<dbReference type="PDBsum" id="5MXD"/>
<dbReference type="PDBsum" id="5QCO"/>
<dbReference type="PDBsum" id="5QCP"/>
<dbReference type="PDBsum" id="5QCQ"/>
<dbReference type="PDBsum" id="5QCR"/>
<dbReference type="PDBsum" id="5QCS"/>
<dbReference type="PDBsum" id="5QCT"/>
<dbReference type="PDBsum" id="5QCU"/>
<dbReference type="PDBsum" id="5QCV"/>
<dbReference type="PDBsum" id="5QCW"/>
<dbReference type="PDBsum" id="5QCX"/>
<dbReference type="PDBsum" id="5QCY"/>
<dbReference type="PDBsum" id="5QCZ"/>
<dbReference type="PDBsum" id="5QD0"/>
<dbReference type="PDBsum" id="5QD1"/>
<dbReference type="PDBsum" id="5QD2"/>
<dbReference type="PDBsum" id="5QD3"/>
<dbReference type="PDBsum" id="5QD4"/>
<dbReference type="PDBsum" id="5QD5"/>
<dbReference type="PDBsum" id="5QD6"/>
<dbReference type="PDBsum" id="5QD7"/>
<dbReference type="PDBsum" id="5QD8"/>
<dbReference type="PDBsum" id="5QD9"/>
<dbReference type="PDBsum" id="5QDA"/>
<dbReference type="PDBsum" id="5QDB"/>
<dbReference type="PDBsum" id="5QDC"/>
<dbReference type="PDBsum" id="5QDD"/>
<dbReference type="PDBsum" id="5T1U"/>
<dbReference type="PDBsum" id="5T1W"/>
<dbReference type="PDBsum" id="5TOL"/>
<dbReference type="PDBsum" id="5UYU"/>
<dbReference type="PDBsum" id="5V0N"/>
<dbReference type="PDBsum" id="5YGX"/>
<dbReference type="PDBsum" id="5YGY"/>
<dbReference type="PDBsum" id="6BFD"/>
<dbReference type="PDBsum" id="6BFE"/>
<dbReference type="PDBsum" id="6BFW"/>
<dbReference type="PDBsum" id="6BFX"/>
<dbReference type="PDBsum" id="6C2I"/>
<dbReference type="PDBsum" id="6DHC"/>
<dbReference type="PDBsum" id="6DMI"/>
<dbReference type="PDBsum" id="6E3Z"/>
<dbReference type="PDBsum" id="6EJ2"/>
<dbReference type="PDBsum" id="6EJ3"/>
<dbReference type="PDBsum" id="6EQM"/>
<dbReference type="PDBsum" id="6FGY"/>
<dbReference type="PDBsum" id="6JSE"/>
<dbReference type="PDBsum" id="6JSF"/>
<dbReference type="PDBsum" id="6JSG"/>
<dbReference type="PDBsum" id="6JSN"/>
<dbReference type="PDBsum" id="6JT3"/>
<dbReference type="PDBsum" id="6JT4"/>
<dbReference type="PDBsum" id="6NV7"/>
<dbReference type="PDBsum" id="6NV9"/>
<dbReference type="PDBsum" id="6NW3"/>
<dbReference type="PDBsum" id="6OD6"/>
<dbReference type="PDBsum" id="6PZ4"/>
<dbReference type="PDBsum" id="6UVP"/>
<dbReference type="PDBsum" id="6UVV"/>
<dbReference type="PDBsum" id="6UVY"/>
<dbReference type="PDBsum" id="6UWP"/>
<dbReference type="PDBsum" id="6UWV"/>
<dbReference type="PDBsum" id="6WNY"/>
<dbReference type="PDBsum" id="7B1E"/>
<dbReference type="PDBsum" id="7B1P"/>
<dbReference type="PDBsum" id="7B1Q"/>
<dbReference type="PDBsum" id="7D2V"/>
<dbReference type="PDBsum" id="7D2X"/>
<dbReference type="PDBsum" id="7D36"/>
<dbReference type="PDBsum" id="7D5A"/>
<dbReference type="PDBsum" id="7DCZ"/>
<dbReference type="PDBsum" id="7F1D"/>
<dbReference type="PDBsum" id="7MYI"/>
<dbReference type="PDBsum" id="7MYR"/>
<dbReference type="PDBsum" id="7MYU"/>
<dbReference type="PDBsum" id="7N66"/>
<dbReference type="BMRB" id="P56817"/>
<dbReference type="SMR" id="P56817"/>
<dbReference type="BioGRID" id="117154">
    <property type="interactions" value="33"/>
</dbReference>
<dbReference type="CORUM" id="P56817"/>
<dbReference type="DIP" id="DIP-41388N"/>
<dbReference type="FunCoup" id="P56817">
    <property type="interactions" value="699"/>
</dbReference>
<dbReference type="IntAct" id="P56817">
    <property type="interactions" value="43"/>
</dbReference>
<dbReference type="MINT" id="P56817"/>
<dbReference type="STRING" id="9606.ENSP00000318585"/>
<dbReference type="BindingDB" id="P56817"/>
<dbReference type="ChEMBL" id="CHEMBL4822"/>
<dbReference type="DrugBank" id="DB07573">
    <property type="generic name" value="(2S)-1-(2,5-dimethylphenoxy)-3-morpholin-4-ylpropan-2-ol"/>
</dbReference>
<dbReference type="DrugBank" id="DB07736">
    <property type="generic name" value="(2S)-4-(4-fluorobenzyl)-N-(2-sulfanylethyl)piperazine-2-carboxamide"/>
</dbReference>
<dbReference type="DrugBank" id="DB07737">
    <property type="generic name" value="(2S)-4-(4-fluorobenzyl)-N-(3-sulfanylpropyl)piperazine-2-carboxamide"/>
</dbReference>
<dbReference type="DrugBank" id="DB07519">
    <property type="generic name" value="(6R)-2-amino-6-[2-(3'-methoxybiphenyl-3-yl)ethyl]-3,6-dimethyl-5,6-dihydropyrimidin-4(3H)-one"/>
</dbReference>
<dbReference type="DrugBank" id="DB07874">
    <property type="generic name" value="(6S)-2-amino-6-(3'-methoxybiphenyl-3-yl)-3,6-dimethyl-5,6-dihydropyrimidin-4(3H)-one"/>
</dbReference>
<dbReference type="DrugBank" id="DB07535">
    <property type="generic name" value="2-amino-6-[2-(1H-indol-6-yl)ethyl]pyrimidin-4(3H)-one"/>
</dbReference>
<dbReference type="DrugBank" id="DB08749">
    <property type="generic name" value="3-(2-AMINO-6-BENZOYLQUINAZOLIN-3(4H)-YL)-N-CYCLOHEXYL-N-METHYLPROPANAMIDE"/>
</dbReference>
<dbReference type="DrugBank" id="DB07345">
    <property type="generic name" value="4-(2-aminoethyl)-2-cyclohexylphenol"/>
</dbReference>
<dbReference type="DrugBank" id="DB07346">
    <property type="generic name" value="4-(2-aminoethyl)-2-ethylphenol"/>
</dbReference>
<dbReference type="DrugBank" id="DB07110">
    <property type="generic name" value="4-(4-FLUOROBENZYL)PIPERIDINE"/>
</dbReference>
<dbReference type="DrugBank" id="DB07415">
    <property type="generic name" value="4-[(1S)-1-(3-fluoro-4-methoxyphenyl)-2-(2-methoxy-5-nitrophenyl)ethyl]-1H-imidazol-2-amine"/>
</dbReference>
<dbReference type="DrugBank" id="DB07206">
    <property type="generic name" value="6-[2-(1H-INDOL-6-YL)ETHYL]PYRIDIN-2-AMINE"/>
</dbReference>
<dbReference type="DrugBank" id="DB07245">
    <property type="generic name" value="6-[2-(3'-METHOXYBIPHENYL-3-YL)ETHYL]PYRIDIN-2-AMINE"/>
</dbReference>
<dbReference type="DrugBank" id="DB06073">
    <property type="generic name" value="CTS-21166"/>
</dbReference>
<dbReference type="DrugBank" id="DB15391">
    <property type="generic name" value="Elenbecestat"/>
</dbReference>
<dbReference type="DrugBank" id="DB02378">
    <property type="generic name" value="MMI-175"/>
</dbReference>
<dbReference type="DrugBank" id="DB07734">
    <property type="generic name" value="N-(1-benzylpiperidin-4-yl)-4-sulfanylbutanamide"/>
</dbReference>
<dbReference type="DrugBank" id="DB07019">
    <property type="generic name" value="N-[(5R,14R)-5-AMINO-5,14-DIMETHYL-4-OXO-3-OXA-18-AZATRICYCLO[15.3.1.1~7,11~]DOCOSA-1(21),7(22),8,10,17,19-HEXAEN-19-YL]-N-METHYLMETHANESULFONAMIDE"/>
</dbReference>
<dbReference type="DrugBank" id="DB07735">
    <property type="generic name" value="N-[1-(2,6-dimethoxybenzyl)piperidin-4-yl]-4-sulfanylbutanamide"/>
</dbReference>
<dbReference type="DrugBank" id="DB07738">
    <property type="generic name" value="N-[1-(5-bromo-2,3-dimethoxybenzyl)piperidin-4-yl]-4-sulfanylbutanamide"/>
</dbReference>
<dbReference type="DrugBank" id="DB06930">
    <property type="generic name" value="N-[amino(imino)methyl]-2-(2,5-diphenyl-1H-pyrrol-1-yl)acetamide"/>
</dbReference>
<dbReference type="DrugBank" id="DB07089">
    <property type="generic name" value="N-[amino(imino)methyl]-2-[2-(2-chlorophenyl)-4-(4-propoxyphenyl)-3-thienyl]acetamide"/>
</dbReference>
<dbReference type="DrugBank" id="DB07175">
    <property type="generic name" value="N-{2-methyl-5-[(6-phenylpyrimidin-4-yl)amino]phenyl}methanesulfonamide"/>
</dbReference>
<dbReference type="DrugBank" id="DB07284">
    <property type="generic name" value="N~3~-(3-PYRIDIN-3-YLBENZYL)PYRIDINE-2,3-DIAMINE"/>
</dbReference>
<dbReference type="DrugBank" id="DB07993">
    <property type="generic name" value="N~3~-[3-(1H-INDOL-6-YL)BENZYL]PYRIDINE-2,3-DIAMINE"/>
</dbReference>
<dbReference type="DrugBank" id="DB07303">
    <property type="generic name" value="N~3~-[3-(5-METHOXYPYRIDIN-3-YL)BENZYL]PYRIDINE-2,3-DIAMINE"/>
</dbReference>
<dbReference type="DrugBank" id="DB07994">
    <property type="generic name" value="N~3~-[5-(1H-INDOL-6-YL)-2-(PYRIDIN-2-YLMETHOXY)BENZYL]PYRIDINE-2,3-DIAMINE"/>
</dbReference>
<dbReference type="DrugBank" id="DB07281">
    <property type="generic name" value="N~3~-BENZYLPYRIDINE-2,3-DIAMINE"/>
</dbReference>
<dbReference type="DrugBank" id="DB12285">
    <property type="generic name" value="Verubecestat"/>
</dbReference>
<dbReference type="DrugCentral" id="P56817"/>
<dbReference type="GuidetoPHARMACOLOGY" id="2330"/>
<dbReference type="MEROPS" id="A01.004"/>
<dbReference type="TCDB" id="8.A.32.1.1">
    <property type="family name" value="the Beta-amyloid cleaving enzyme (bace1) family"/>
</dbReference>
<dbReference type="GlyConnect" id="71">
    <property type="glycosylation" value="7 N-Linked glycans"/>
</dbReference>
<dbReference type="GlyConnect" id="72">
    <property type="glycosylation" value="10 N-Linked glycans"/>
</dbReference>
<dbReference type="GlyCosmos" id="P56817">
    <property type="glycosylation" value="4 sites, 34 glycans"/>
</dbReference>
<dbReference type="GlyGen" id="P56817">
    <property type="glycosylation" value="9 sites, 35 N-linked glycans (2 sites), 1 O-linked glycan (1 site)"/>
</dbReference>
<dbReference type="iPTMnet" id="P56817"/>
<dbReference type="PhosphoSitePlus" id="P56817"/>
<dbReference type="SwissPalm" id="P56817"/>
<dbReference type="BioMuta" id="BACE1"/>
<dbReference type="DMDM" id="296434407"/>
<dbReference type="jPOST" id="P56817"/>
<dbReference type="MassIVE" id="P56817"/>
<dbReference type="PaxDb" id="9606-ENSP00000318585"/>
<dbReference type="PeptideAtlas" id="P56817"/>
<dbReference type="ProteomicsDB" id="19820"/>
<dbReference type="ProteomicsDB" id="43307"/>
<dbReference type="ProteomicsDB" id="56947">
    <molecule id="P56817-1"/>
</dbReference>
<dbReference type="ProteomicsDB" id="56948">
    <molecule id="P56817-2"/>
</dbReference>
<dbReference type="ProteomicsDB" id="56949">
    <molecule id="P56817-3"/>
</dbReference>
<dbReference type="ProteomicsDB" id="56950">
    <molecule id="P56817-4"/>
</dbReference>
<dbReference type="ABCD" id="P56817">
    <property type="antibodies" value="38 sequenced antibodies"/>
</dbReference>
<dbReference type="Antibodypedia" id="4285">
    <property type="antibodies" value="918 antibodies from 45 providers"/>
</dbReference>
<dbReference type="DNASU" id="23621"/>
<dbReference type="Ensembl" id="ENST00000313005.11">
    <molecule id="P56817-1"/>
    <property type="protein sequence ID" value="ENSP00000318585.6"/>
    <property type="gene ID" value="ENSG00000186318.18"/>
</dbReference>
<dbReference type="Ensembl" id="ENST00000392937.10">
    <molecule id="P56817-5"/>
    <property type="protein sequence ID" value="ENSP00000475405.1"/>
    <property type="gene ID" value="ENSG00000186318.18"/>
</dbReference>
<dbReference type="Ensembl" id="ENST00000428381.6">
    <molecule id="P56817-4"/>
    <property type="protein sequence ID" value="ENSP00000402228.2"/>
    <property type="gene ID" value="ENSG00000186318.18"/>
</dbReference>
<dbReference type="Ensembl" id="ENST00000445823.6">
    <molecule id="P56817-3"/>
    <property type="protein sequence ID" value="ENSP00000403685.2"/>
    <property type="gene ID" value="ENSG00000186318.18"/>
</dbReference>
<dbReference type="Ensembl" id="ENST00000510630.5">
    <molecule id="P56817-6"/>
    <property type="protein sequence ID" value="ENSP00000422461.1"/>
    <property type="gene ID" value="ENSG00000186318.18"/>
</dbReference>
<dbReference type="Ensembl" id="ENST00000513780.5">
    <molecule id="P56817-2"/>
    <property type="protein sequence ID" value="ENSP00000424536.1"/>
    <property type="gene ID" value="ENSG00000186318.18"/>
</dbReference>
<dbReference type="GeneID" id="23621"/>
<dbReference type="KEGG" id="hsa:23621"/>
<dbReference type="MANE-Select" id="ENST00000313005.11">
    <property type="protein sequence ID" value="ENSP00000318585.6"/>
    <property type="RefSeq nucleotide sequence ID" value="NM_012104.6"/>
    <property type="RefSeq protein sequence ID" value="NP_036236.1"/>
</dbReference>
<dbReference type="UCSC" id="uc001pqw.4">
    <molecule id="P56817-1"/>
    <property type="organism name" value="human"/>
</dbReference>
<dbReference type="AGR" id="HGNC:933"/>
<dbReference type="CTD" id="23621"/>
<dbReference type="DisGeNET" id="23621"/>
<dbReference type="GeneCards" id="BACE1"/>
<dbReference type="HGNC" id="HGNC:933">
    <property type="gene designation" value="BACE1"/>
</dbReference>
<dbReference type="HPA" id="ENSG00000186318">
    <property type="expression patterns" value="Group enriched (brain, pancreas)"/>
</dbReference>
<dbReference type="MIM" id="604252">
    <property type="type" value="gene"/>
</dbReference>
<dbReference type="neXtProt" id="NX_P56817"/>
<dbReference type="OpenTargets" id="ENSG00000186318"/>
<dbReference type="PharmGKB" id="PA25232"/>
<dbReference type="VEuPathDB" id="HostDB:ENSG00000186318"/>
<dbReference type="eggNOG" id="KOG1339">
    <property type="taxonomic scope" value="Eukaryota"/>
</dbReference>
<dbReference type="GeneTree" id="ENSGT00940000157786"/>
<dbReference type="HOGENOM" id="CLU_039009_0_0_1"/>
<dbReference type="InParanoid" id="P56817"/>
<dbReference type="OMA" id="VLMEAFY"/>
<dbReference type="OrthoDB" id="2747330at2759"/>
<dbReference type="PAN-GO" id="P56817">
    <property type="GO annotations" value="6 GO annotations based on evolutionary models"/>
</dbReference>
<dbReference type="PhylomeDB" id="P56817"/>
<dbReference type="TreeFam" id="TF329595"/>
<dbReference type="BioCyc" id="MetaCyc:ENSG00000160610-MONOMER"/>
<dbReference type="BRENDA" id="3.4.23.46">
    <property type="organism ID" value="2681"/>
</dbReference>
<dbReference type="PathwayCommons" id="P56817"/>
<dbReference type="Reactome" id="R-HSA-977225">
    <property type="pathway name" value="Amyloid fiber formation"/>
</dbReference>
<dbReference type="SABIO-RK" id="P56817"/>
<dbReference type="SignaLink" id="P56817"/>
<dbReference type="SIGNOR" id="P56817"/>
<dbReference type="BioGRID-ORCS" id="23621">
    <property type="hits" value="10 hits in 1160 CRISPR screens"/>
</dbReference>
<dbReference type="ChiTaRS" id="BACE1">
    <property type="organism name" value="human"/>
</dbReference>
<dbReference type="EvolutionaryTrace" id="P56817"/>
<dbReference type="GeneWiki" id="Beta-secretase_1"/>
<dbReference type="GenomeRNAi" id="23621"/>
<dbReference type="Pharos" id="P56817">
    <property type="development level" value="Tchem"/>
</dbReference>
<dbReference type="PRO" id="PR:P56817"/>
<dbReference type="Proteomes" id="UP000005640">
    <property type="component" value="Chromosome 11"/>
</dbReference>
<dbReference type="RNAct" id="P56817">
    <property type="molecule type" value="protein"/>
</dbReference>
<dbReference type="Bgee" id="ENSG00000186318">
    <property type="expression patterns" value="Expressed in inferior vagus X ganglion and 205 other cell types or tissues"/>
</dbReference>
<dbReference type="ExpressionAtlas" id="P56817">
    <property type="expression patterns" value="baseline and differential"/>
</dbReference>
<dbReference type="GO" id="GO:0030424">
    <property type="term" value="C:axon"/>
    <property type="evidence" value="ECO:0007669"/>
    <property type="project" value="UniProtKB-SubCell"/>
</dbReference>
<dbReference type="GO" id="GO:0009986">
    <property type="term" value="C:cell surface"/>
    <property type="evidence" value="ECO:0000314"/>
    <property type="project" value="UniProtKB"/>
</dbReference>
<dbReference type="GO" id="GO:0030425">
    <property type="term" value="C:dendrite"/>
    <property type="evidence" value="ECO:0007669"/>
    <property type="project" value="UniProtKB-SubCell"/>
</dbReference>
<dbReference type="GO" id="GO:0005769">
    <property type="term" value="C:early endosome"/>
    <property type="evidence" value="ECO:0000314"/>
    <property type="project" value="UniProtKB"/>
</dbReference>
<dbReference type="GO" id="GO:0005788">
    <property type="term" value="C:endoplasmic reticulum lumen"/>
    <property type="evidence" value="ECO:0000304"/>
    <property type="project" value="Reactome"/>
</dbReference>
<dbReference type="GO" id="GO:0005768">
    <property type="term" value="C:endosome"/>
    <property type="evidence" value="ECO:0000314"/>
    <property type="project" value="UniProtKB"/>
</dbReference>
<dbReference type="GO" id="GO:0010008">
    <property type="term" value="C:endosome membrane"/>
    <property type="evidence" value="ECO:0000304"/>
    <property type="project" value="Reactome"/>
</dbReference>
<dbReference type="GO" id="GO:0005794">
    <property type="term" value="C:Golgi apparatus"/>
    <property type="evidence" value="ECO:0000314"/>
    <property type="project" value="UniProtKB"/>
</dbReference>
<dbReference type="GO" id="GO:0070931">
    <property type="term" value="C:Golgi-associated vesicle lumen"/>
    <property type="evidence" value="ECO:0000304"/>
    <property type="project" value="Reactome"/>
</dbReference>
<dbReference type="GO" id="GO:0098686">
    <property type="term" value="C:hippocampal mossy fiber to CA3 synapse"/>
    <property type="evidence" value="ECO:0007669"/>
    <property type="project" value="Ensembl"/>
</dbReference>
<dbReference type="GO" id="GO:0005770">
    <property type="term" value="C:late endosome"/>
    <property type="evidence" value="ECO:0000314"/>
    <property type="project" value="UniProtKB"/>
</dbReference>
<dbReference type="GO" id="GO:0005764">
    <property type="term" value="C:lysosome"/>
    <property type="evidence" value="ECO:0000314"/>
    <property type="project" value="UniProtKB"/>
</dbReference>
<dbReference type="GO" id="GO:0016020">
    <property type="term" value="C:membrane"/>
    <property type="evidence" value="ECO:0000303"/>
    <property type="project" value="UniProtKB"/>
</dbReference>
<dbReference type="GO" id="GO:0045121">
    <property type="term" value="C:membrane raft"/>
    <property type="evidence" value="ECO:0007669"/>
    <property type="project" value="UniProtKB-SubCell"/>
</dbReference>
<dbReference type="GO" id="GO:0005771">
    <property type="term" value="C:multivesicular body"/>
    <property type="evidence" value="ECO:0000314"/>
    <property type="project" value="UniProtKB"/>
</dbReference>
<dbReference type="GO" id="GO:0043025">
    <property type="term" value="C:neuronal cell body"/>
    <property type="evidence" value="ECO:0007669"/>
    <property type="project" value="Ensembl"/>
</dbReference>
<dbReference type="GO" id="GO:0005886">
    <property type="term" value="C:plasma membrane"/>
    <property type="evidence" value="ECO:0000314"/>
    <property type="project" value="UniProtKB"/>
</dbReference>
<dbReference type="GO" id="GO:0055037">
    <property type="term" value="C:recycling endosome"/>
    <property type="evidence" value="ECO:0000314"/>
    <property type="project" value="UniProtKB"/>
</dbReference>
<dbReference type="GO" id="GO:0008021">
    <property type="term" value="C:synaptic vesicle"/>
    <property type="evidence" value="ECO:0007669"/>
    <property type="project" value="Ensembl"/>
</dbReference>
<dbReference type="GO" id="GO:0005802">
    <property type="term" value="C:trans-Golgi network"/>
    <property type="evidence" value="ECO:0000314"/>
    <property type="project" value="UniProtKB"/>
</dbReference>
<dbReference type="GO" id="GO:0001540">
    <property type="term" value="F:amyloid-beta binding"/>
    <property type="evidence" value="ECO:0000353"/>
    <property type="project" value="Alzheimers_University_of_Toronto"/>
</dbReference>
<dbReference type="GO" id="GO:0004190">
    <property type="term" value="F:aspartic-type endopeptidase activity"/>
    <property type="evidence" value="ECO:0000314"/>
    <property type="project" value="UniProtKB"/>
</dbReference>
<dbReference type="GO" id="GO:0008798">
    <property type="term" value="F:beta-aspartyl-peptidase activity"/>
    <property type="evidence" value="ECO:0000304"/>
    <property type="project" value="Reactome"/>
</dbReference>
<dbReference type="GO" id="GO:0004175">
    <property type="term" value="F:endopeptidase activity"/>
    <property type="evidence" value="ECO:0000314"/>
    <property type="project" value="UniProtKB"/>
</dbReference>
<dbReference type="GO" id="GO:0019899">
    <property type="term" value="F:enzyme binding"/>
    <property type="evidence" value="ECO:0000353"/>
    <property type="project" value="UniProtKB"/>
</dbReference>
<dbReference type="GO" id="GO:0008233">
    <property type="term" value="F:peptidase activity"/>
    <property type="evidence" value="ECO:0000314"/>
    <property type="project" value="CACAO"/>
</dbReference>
<dbReference type="GO" id="GO:0120283">
    <property type="term" value="F:protein serine/threonine kinase binding"/>
    <property type="evidence" value="ECO:0000353"/>
    <property type="project" value="ARUK-UCL"/>
</dbReference>
<dbReference type="GO" id="GO:1990000">
    <property type="term" value="P:amyloid fibril formation"/>
    <property type="evidence" value="ECO:0000304"/>
    <property type="project" value="Reactome"/>
</dbReference>
<dbReference type="GO" id="GO:0042987">
    <property type="term" value="P:amyloid precursor protein catabolic process"/>
    <property type="evidence" value="ECO:0000250"/>
    <property type="project" value="ARUK-UCL"/>
</dbReference>
<dbReference type="GO" id="GO:0034205">
    <property type="term" value="P:amyloid-beta formation"/>
    <property type="evidence" value="ECO:0000314"/>
    <property type="project" value="ARUK-UCL"/>
</dbReference>
<dbReference type="GO" id="GO:0050435">
    <property type="term" value="P:amyloid-beta metabolic process"/>
    <property type="evidence" value="ECO:0000314"/>
    <property type="project" value="UniProtKB"/>
</dbReference>
<dbReference type="GO" id="GO:1904646">
    <property type="term" value="P:cellular response to amyloid-beta"/>
    <property type="evidence" value="ECO:0007669"/>
    <property type="project" value="Ensembl"/>
</dbReference>
<dbReference type="GO" id="GO:0071280">
    <property type="term" value="P:cellular response to copper ion"/>
    <property type="evidence" value="ECO:0007669"/>
    <property type="project" value="Ensembl"/>
</dbReference>
<dbReference type="GO" id="GO:0071287">
    <property type="term" value="P:cellular response to manganese ion"/>
    <property type="evidence" value="ECO:0007669"/>
    <property type="project" value="Ensembl"/>
</dbReference>
<dbReference type="GO" id="GO:0050966">
    <property type="term" value="P:detection of mechanical stimulus involved in sensory perception of pain"/>
    <property type="evidence" value="ECO:0007669"/>
    <property type="project" value="Ensembl"/>
</dbReference>
<dbReference type="GO" id="GO:0006509">
    <property type="term" value="P:membrane protein ectodomain proteolysis"/>
    <property type="evidence" value="ECO:0000314"/>
    <property type="project" value="UniProtKB"/>
</dbReference>
<dbReference type="GO" id="GO:0043525">
    <property type="term" value="P:positive regulation of neuron apoptotic process"/>
    <property type="evidence" value="ECO:0000316"/>
    <property type="project" value="ARUK-UCL"/>
</dbReference>
<dbReference type="GO" id="GO:0060134">
    <property type="term" value="P:prepulse inhibition"/>
    <property type="evidence" value="ECO:0007669"/>
    <property type="project" value="Ensembl"/>
</dbReference>
<dbReference type="GO" id="GO:0099171">
    <property type="term" value="P:presynaptic modulation of chemical synaptic transmission"/>
    <property type="evidence" value="ECO:0007669"/>
    <property type="project" value="Ensembl"/>
</dbReference>
<dbReference type="GO" id="GO:0016485">
    <property type="term" value="P:protein processing"/>
    <property type="evidence" value="ECO:0000314"/>
    <property type="project" value="ARUK-UCL"/>
</dbReference>
<dbReference type="GO" id="GO:0006508">
    <property type="term" value="P:proteolysis"/>
    <property type="evidence" value="ECO:0000314"/>
    <property type="project" value="UniProtKB"/>
</dbReference>
<dbReference type="GO" id="GO:0010288">
    <property type="term" value="P:response to lead ion"/>
    <property type="evidence" value="ECO:0007669"/>
    <property type="project" value="Ensembl"/>
</dbReference>
<dbReference type="GO" id="GO:0140448">
    <property type="term" value="P:signaling receptor ligand precursor processing"/>
    <property type="evidence" value="ECO:0007669"/>
    <property type="project" value="Ensembl"/>
</dbReference>
<dbReference type="CDD" id="cd05473">
    <property type="entry name" value="beta_secretase_like"/>
    <property type="match status" value="1"/>
</dbReference>
<dbReference type="FunFam" id="2.40.70.10:FF:000003">
    <property type="entry name" value="Beta-secretase 1"/>
    <property type="match status" value="1"/>
</dbReference>
<dbReference type="FunFam" id="2.40.70.10:FF:000007">
    <property type="entry name" value="Beta-secretase 1"/>
    <property type="match status" value="1"/>
</dbReference>
<dbReference type="Gene3D" id="2.40.70.10">
    <property type="entry name" value="Acid Proteases"/>
    <property type="match status" value="2"/>
</dbReference>
<dbReference type="InterPro" id="IPR001461">
    <property type="entry name" value="Aspartic_peptidase_A1"/>
</dbReference>
<dbReference type="InterPro" id="IPR001969">
    <property type="entry name" value="Aspartic_peptidase_AS"/>
</dbReference>
<dbReference type="InterPro" id="IPR009119">
    <property type="entry name" value="BACE"/>
</dbReference>
<dbReference type="InterPro" id="IPR009120">
    <property type="entry name" value="BACE1"/>
</dbReference>
<dbReference type="InterPro" id="IPR033874">
    <property type="entry name" value="Memapsin-like"/>
</dbReference>
<dbReference type="InterPro" id="IPR033121">
    <property type="entry name" value="PEPTIDASE_A1"/>
</dbReference>
<dbReference type="InterPro" id="IPR021109">
    <property type="entry name" value="Peptidase_aspartic_dom_sf"/>
</dbReference>
<dbReference type="PANTHER" id="PTHR47965">
    <property type="entry name" value="ASPARTYL PROTEASE-RELATED"/>
    <property type="match status" value="1"/>
</dbReference>
<dbReference type="PANTHER" id="PTHR47965:SF69">
    <property type="entry name" value="BETA-SECRETASE 1"/>
    <property type="match status" value="1"/>
</dbReference>
<dbReference type="Pfam" id="PF00026">
    <property type="entry name" value="Asp"/>
    <property type="match status" value="1"/>
</dbReference>
<dbReference type="PRINTS" id="PR01816">
    <property type="entry name" value="BACE1"/>
</dbReference>
<dbReference type="PRINTS" id="PR01815">
    <property type="entry name" value="BACEFAMILY"/>
</dbReference>
<dbReference type="PRINTS" id="PR00792">
    <property type="entry name" value="PEPSIN"/>
</dbReference>
<dbReference type="SUPFAM" id="SSF50630">
    <property type="entry name" value="Acid proteases"/>
    <property type="match status" value="1"/>
</dbReference>
<dbReference type="PROSITE" id="PS00141">
    <property type="entry name" value="ASP_PROTEASE"/>
    <property type="match status" value="1"/>
</dbReference>
<dbReference type="PROSITE" id="PS51767">
    <property type="entry name" value="PEPTIDASE_A1"/>
    <property type="match status" value="1"/>
</dbReference>
<comment type="function">
    <text evidence="1 7 8 23">Responsible for the proteolytic processing of the amyloid precursor protein (APP). Cleaves at the N-terminus of the A-beta peptide sequence, between residues 671 and 672 of APP, leads to the generation and extracellular release of beta-cleaved soluble APP, and a corresponding cell-associated C-terminal fragment which is later released by gamma-secretase (PubMed:10656250, PubMed:10677483, PubMed:20354142). Cleaves CHL1 (By similarity).</text>
</comment>
<comment type="catalytic activity">
    <reaction evidence="8">
        <text>Broad endopeptidase specificity. Cleaves Glu-Val-Asn-Leu-|-Asp-Ala-Glu-Phe in the Swedish variant of Alzheimer's amyloid precursor protein.</text>
        <dbReference type="EC" id="3.4.23.46"/>
    </reaction>
</comment>
<comment type="activity regulation">
    <text evidence="13 18">Inhibited by RTN3 and RTN4.</text>
</comment>
<comment type="biophysicochemical properties">
    <kinetics>
        <KM evidence="8">15.2 mM for APP cleaved by PSEN1 (at pH4)</KM>
        <KM evidence="8">1 mM for APP Swedish variant (at pH4)</KM>
        <text evidence="8">kcat is 0.67 sec(-1) and 2.45 sec(-1) for APP cleaved by PSEN1 and APP Swedish variant, respectively (PubMed:10677483).</text>
    </kinetics>
</comment>
<comment type="subunit">
    <text evidence="1 12 13 15 17 18 19 21 22 23 29">Monomer. Interacts (via DXXLL motif) with GGA1, GGA2 and GGA3 (via their VHS domain); the interaction highly increases when BACE1 is phosphorylated at Ser-498 (PubMed:14567678, PubMed:15886016). Interacts with RTN1; RTN2; RTN3 and RTN4; the interaction leads to inhibition of amyloid precursor protein processing (PubMed:15286784, PubMed:16965550, PubMed:16979658). Interacts with SNX6 (PubMed:20354142). Interacts with PCSK9 (PubMed:18660751). Interacts with NAT8 and NAT8B (PubMed:19011241). Interacts with BIN1 (PubMed:27179792). Interacts (via extracellular domain) with ADAM10 (via extracellular domain) (By similarity). Interacts with SORL1; this interaction may affect binding with APP and hence reduce APP cleavage (PubMed:16407538). Interacts with NRDC AND NRG1 (By similarity).</text>
</comment>
<comment type="interaction">
    <interactant intactId="EBI-2433139">
        <id>P56817</id>
    </interactant>
    <interactant intactId="EBI-1536151">
        <id>O14672</id>
        <label>ADAM10</label>
    </interactant>
    <organismsDiffer>false</organismsDiffer>
    <experiments>3</experiments>
</comment>
<comment type="interaction">
    <interactant intactId="EBI-2433139">
        <id>P56817</id>
    </interactant>
    <interactant intactId="EBI-77613">
        <id>P05067</id>
        <label>APP</label>
    </interactant>
    <organismsDiffer>false</organismsDiffer>
    <experiments>11</experiments>
</comment>
<comment type="interaction">
    <interactant intactId="EBI-2433139">
        <id>P56817</id>
    </interactant>
    <interactant intactId="EBI-447141">
        <id>Q9UJY5</id>
        <label>GGA1</label>
    </interactant>
    <organismsDiffer>false</organismsDiffer>
    <experiments>4</experiments>
</comment>
<comment type="interaction">
    <interactant intactId="EBI-2433139">
        <id>P56817</id>
    </interactant>
    <interactant intactId="EBI-447646">
        <id>Q9UJY4</id>
        <label>GGA2</label>
    </interactant>
    <organismsDiffer>false</organismsDiffer>
    <experiments>2</experiments>
</comment>
<comment type="interaction">
    <interactant intactId="EBI-2433139">
        <id>P56817</id>
    </interactant>
    <interactant intactId="EBI-447404">
        <id>Q9NZ52</id>
        <label>GGA3</label>
    </interactant>
    <organismsDiffer>false</organismsDiffer>
    <experiments>2</experiments>
</comment>
<comment type="interaction">
    <interactant intactId="EBI-2433139">
        <id>P56817</id>
    </interactant>
    <interactant intactId="EBI-8526679">
        <id>P10997</id>
        <label>IAPP</label>
    </interactant>
    <organismsDiffer>false</organismsDiffer>
    <experiments>2</experiments>
</comment>
<comment type="interaction">
    <interactant intactId="EBI-2433139">
        <id>P56817</id>
    </interactant>
    <interactant intactId="EBI-2866431">
        <id>Q9Y287</id>
        <label>ITM2B</label>
    </interactant>
    <organismsDiffer>false</organismsDiffer>
    <experiments>4</experiments>
</comment>
<comment type="interaction">
    <interactant intactId="EBI-2433139">
        <id>P56817</id>
    </interactant>
    <interactant intactId="EBI-11334865">
        <id>Q03721</id>
        <label>KCNC4</label>
    </interactant>
    <organismsDiffer>false</organismsDiffer>
    <experiments>3</experiments>
</comment>
<comment type="interaction">
    <interactant intactId="EBI-2433139">
        <id>P56817</id>
    </interactant>
    <interactant intactId="EBI-297277">
        <id>P49768</id>
        <label>PSEN1</label>
    </interactant>
    <organismsDiffer>false</organismsDiffer>
    <experiments>6</experiments>
</comment>
<comment type="interaction">
    <interactant intactId="EBI-2433139">
        <id>P56817</id>
    </interactant>
    <interactant intactId="EBI-949294">
        <id>Q9UNH7</id>
        <label>SNX6</label>
    </interactant>
    <organismsDiffer>false</organismsDiffer>
    <experiments>2</experiments>
</comment>
<comment type="interaction">
    <interactant intactId="EBI-2433139">
        <id>P56817</id>
    </interactant>
    <interactant intactId="EBI-11176364">
        <id>Q8BNX1</id>
        <label>Clec4g</label>
    </interactant>
    <organismsDiffer>true</organismsDiffer>
    <experiments>2</experiments>
</comment>
<comment type="interaction">
    <interactant intactId="EBI-2433297">
        <id>P56817-1</id>
    </interactant>
    <interactant intactId="EBI-11525735">
        <id>O95197-3</id>
        <label>RTN3</label>
    </interactant>
    <organismsDiffer>false</organismsDiffer>
    <experiments>2</experiments>
</comment>
<comment type="interaction">
    <interactant intactId="EBI-2433297">
        <id>P56817-1</id>
    </interactant>
    <interactant intactId="EBI-10296096">
        <id>Q9NQC3-2</id>
        <label>RTN4</label>
    </interactant>
    <organismsDiffer>false</organismsDiffer>
    <experiments>3</experiments>
</comment>
<comment type="interaction">
    <interactant intactId="EBI-2433297">
        <id>P56817-1</id>
    </interactant>
    <interactant intactId="EBI-11526335">
        <id>Q9NQC3-3</id>
        <label>RTN4</label>
    </interactant>
    <organismsDiffer>false</organismsDiffer>
    <experiments>2</experiments>
</comment>
<comment type="subcellular location">
    <subcellularLocation>
        <location evidence="10">Cell membrane</location>
        <topology evidence="39">Single-pass type I membrane protein</topology>
    </subcellularLocation>
    <subcellularLocation>
        <location evidence="10 14 15 20 23 26">Golgi apparatus</location>
        <location evidence="10 14 15 20 23 26">trans-Golgi network</location>
    </subcellularLocation>
    <subcellularLocation>
        <location evidence="10 20">Endoplasmic reticulum</location>
    </subcellularLocation>
    <subcellularLocation>
        <location evidence="10 15">Endosome</location>
    </subcellularLocation>
    <subcellularLocation>
        <location evidence="10 15 20 26">Cell surface</location>
    </subcellularLocation>
    <subcellularLocation>
        <location evidence="10 15">Cytoplasmic vesicle membrane</location>
        <topology evidence="39">Single-pass type I membrane protein</topology>
    </subcellularLocation>
    <subcellularLocation>
        <location evidence="1">Membrane raft</location>
    </subcellularLocation>
    <subcellularLocation>
        <location evidence="16 26 28 30">Lysosome</location>
    </subcellularLocation>
    <subcellularLocation>
        <location evidence="16 26 28 30">Late endosome</location>
    </subcellularLocation>
    <subcellularLocation>
        <location evidence="14 15 26 28 30">Early endosome</location>
    </subcellularLocation>
    <subcellularLocation>
        <location evidence="15 28 30">Recycling endosome</location>
    </subcellularLocation>
    <subcellularLocation>
        <location evidence="1">Cell projection</location>
        <location evidence="1">Axon</location>
    </subcellularLocation>
    <subcellularLocation>
        <location evidence="1">Cell projection</location>
        <location evidence="1">Dendrite</location>
    </subcellularLocation>
    <text evidence="1 10 15 20">Predominantly localized to the later Golgi/trans-Golgi network (TGN) and minimally detectable in the early Golgi compartments. A small portion is also found in the endoplasmic reticulum, endosomes and on the cell surface (PubMed:11466313, PubMed:17425515). Colocalization with APP in early endosomes is due to addition of bisecting N-acetylglucosamine which blocks targeting to late endosomes and lysosomes (By similarity). Retrogradly transported from endosomal compartments to the trans-Golgi network in a phosphorylation- and GGA1- dependent manner (PubMed:15886016).</text>
</comment>
<comment type="alternative products">
    <event type="alternative splicing"/>
    <isoform>
        <id>P56817-1</id>
        <name>A</name>
        <name>BACE-1A</name>
        <name>BAC-501</name>
        <sequence type="displayed"/>
    </isoform>
    <isoform>
        <id>P56817-2</id>
        <name>B</name>
        <name>BACE-1B</name>
        <name>BACE-I-476</name>
        <sequence type="described" ref="VSP_005223"/>
    </isoform>
    <isoform>
        <id>P56817-3</id>
        <name>C</name>
        <name>BACE-1C</name>
        <name>BACE-I-457</name>
        <sequence type="described" ref="VSP_005222"/>
    </isoform>
    <isoform>
        <id>P56817-4</id>
        <name>D</name>
        <name>BACE-1D</name>
        <name>BACE-I-432</name>
        <sequence type="described" ref="VSP_005222 VSP_005223"/>
    </isoform>
    <isoform>
        <id>P56817-5</id>
        <name>5</name>
        <sequence type="described" ref="VSP_047092 VSP_047093"/>
    </isoform>
    <isoform>
        <id>P56817-6</id>
        <name>6</name>
        <sequence type="described" ref="VSP_047092 VSP_047093 VSP_005223"/>
    </isoform>
</comment>
<comment type="tissue specificity">
    <text evidence="8 9">Expressed at high levels in the brain and pancreas. In the brain, expression is highest in the substantia nigra, locus coruleus and medulla oblongata.</text>
</comment>
<comment type="induction">
    <text evidence="27">Up-regulated by the Ca(2+)-regulated transcription factor NFATC4.</text>
</comment>
<comment type="domain">
    <text evidence="26">DXXLL motif is required for a proper endocytosis and retrograde transport to the trans-Golgi network, as well as for regulation of lysosomal degradation.</text>
</comment>
<comment type="domain">
    <text evidence="10">The transmembrane domain is necessary for its activity. It determines its late Golgi localization and access to its substrate, APP.</text>
</comment>
<comment type="PTM">
    <text evidence="1 9 20">N-Glycosylated (PubMed:11083922, PubMed:17425515). Addition of a bisecting N-acetylglucosamine by MGAT3 blocks lysosomal targeting, further degradation and is required for maintaining stability under stress conditions (By similarity).</text>
</comment>
<comment type="PTM">
    <text evidence="20 22 25">Acetylated in the endoplasmic reticulum at Lys-126, Lys-275, Lys-279, Lys-285, Lys-299, Lys-300 and Lys-307. Acetylation by NAT8 and NAT8B is transient and deacetylation probably occurs in the Golgi. Acetylation regulates the maturation, the transport to the plasma membrane, the stability and the expression of the protein.</text>
</comment>
<comment type="PTM">
    <text evidence="1">Palmitoylation mediates lipid raft localization.</text>
</comment>
<comment type="PTM">
    <text evidence="16 24 26 30">Ubiquitinated at Lys-501, ubiquitination leads to lysosomal degradation (PubMed:16033761, PubMed:20484053, PubMed:23109336, PubMed:27302062). Monoubiquitinated and 'Lys-63'-linked polyubitinated (PubMed:20484053). Deubiquitnated by USP8; inhibits lysosomal degradation (PubMed:27302062).</text>
</comment>
<comment type="PTM">
    <text evidence="15">Phosphorylation at Ser-498 is required for interaction with GGA1 and retrograded transport from endosomal compartments to the trans-Golgi network. Non-phosphorylated BACE1 enters a direct recycling route to the cell surface.</text>
</comment>
<comment type="similarity">
    <text evidence="38">Belongs to the peptidase A1 family.</text>
</comment>
<comment type="sequence caution" evidence="38">
    <conflict type="frameshift">
        <sequence resource="EMBL-CDS" id="BAA86463"/>
    </conflict>
</comment>